<sequence>MVCLKLPGGSCMTALTVTLMVLSSPLALSGDTRPRFLWQPKRECHFFNGTERVRFLDRYFYNQEESVRFDSDVGEFRAVTELGRPDAEYWNSQKDILEQARAAVDTYCRHNYGVVESFTVQRRVQPKVTVYPSKTQPLQHHNLLVCSVSGFYPGSIEVRWFLNGQEEKAGMVSTGLIQNGDWTFQTLVMLETVPRSGEVYTCQVEHPSVTSPLTVEWRARSESAQSKMLSGVGGFVLGLLFLGAGLFIYFRNQKGHSGLQPTGFLS</sequence>
<proteinExistence type="evidence at protein level"/>
<protein>
    <recommendedName>
        <fullName>HLA class II histocompatibility antigen, DRB1 beta chain</fullName>
    </recommendedName>
    <alternativeName>
        <fullName>Human leukocyte antigen DRB1</fullName>
        <shortName>HLA-DRB1</shortName>
    </alternativeName>
</protein>
<comment type="function">
    <text evidence="13 18 30 34 37 42 45 53 64 66">A beta chain of antigen-presenting major histocompatibility complex class II (MHCII) molecule. In complex with the alpha chain HLA-DRA, displays antigenic peptides on professional antigen presenting cells (APCs) for recognition by alpha-beta T cell receptor (TCR) on HLA-DRB1-restricted CD4-positive T cells. This guides antigen-specific T-helper effector functions, both antibody-mediated immune response and macrophage activation, to ultimately eliminate the infectious agents and transformed cells (PubMed:15265931, PubMed:16148104, PubMed:22327072, PubMed:27591323, PubMed:29884618, PubMed:31495665, PubMed:8642306). Typically presents extracellular peptide antigens of 10 to 30 amino acids that arise from proteolysis of endocytosed antigens in lysosomes (PubMed:8145819). In the tumor microenvironment, presents antigenic peptides that are primarily generated in tumor-resident APCs likely via phagocytosis of apoptotic tumor cells or macropinocytosis of secreted tumor proteins (PubMed:31495665). Presents peptides derived from intracellular proteins that are trapped in autolysosomes after macroautophagy, a mechanism especially relevant for T cell selection in the thymus and central immune tolerance (PubMed:17182262, PubMed:23783831). The selection of the immunodominant epitopes follows two processing modes: 'bind first, cut/trim later' for pathogen-derived antigenic peptides and 'cut first, bind later' for autoantigens/self-peptides (PubMed:25413013). The anchor residue at position 1 of the peptide N-terminus, usually a large hydrophobic residue, is essential for high affinity interaction with MHCII molecules (PubMed:8145819).</text>
</comment>
<comment type="function">
    <text evidence="30 37 42 43 45 54 55 64 67">Allele DRB1*01:01: Displays an immunodominant epitope derived from Bacillus anthracis pagA/protective antigen, PA (KLPLYISNPNYKVNVYAVT), to both naive and PA-specific memory CD4-positive T cells (PubMed:22327072). Presents immunodominant HIV-1 gag peptide (FRDYVDRFYKTLRAEQASQE) on infected dendritic cells for recognition by TRAV24-TRBV2 TCR on CD4-positive T cells and controls viral load (PubMed:29884618). May present to T-helper 1 cells several HRV-16 epitopes derived from capsid proteins VP1 (PRFSLPFLSIASAYYMFYDG) and VP2 (PHQFINLRSNNSATLIVPYV), contributing to viral clearance (PubMed:27591323). Displays commonly recognized peptides derived from IAV external protein HA (PKYVKQNTLKLAT and SNGNFIAPEYAYKIVK) and from internal proteins M, NP and PB1, with M-derived epitope (GLIYNRMGAVTTEV) being the most immunogenic (PubMed:25413013, PubMed:32668259, PubMed:8145819, PubMed:9075930). Presents a self-peptide derived from COL4A3 (GWISLWKGFSF) to TCR (TRAV14 biased) on CD4-positive, FOXP3-positive regulatory T cells and mediates immune tolerance to self (PubMed:28467828). May present peptides derived from oncofetal trophoblast glycoprotein TPBG 5T4, known to be recognized by both T-helper 1 and regulatory T cells (PubMed:31619516). Displays with low affinity a self-peptide derived from MBP (VHFFKNIVTPRTP) (PubMed:9075930).</text>
</comment>
<comment type="function">
    <text evidence="24 37 42 49">Allele DRB1*03:01: May present to T-helper 1 cells an HRV-16 epitope derived from capsid protein VP2 (NEKQPSDDNWLNFDGTLLGN), contributing to viral clearance (PubMed:27591323). Displays self-peptides derived from retinal SAG (NRERRGIALDGKIKHE) and thyroid TG (LSSVVVDPSIRHFDV) (PubMed:25413013). Presents viral epitopes derived from HHV-6B gH/U48 and U85 antigens to polyfunctional CD4-positive T cells with cytotoxic activity implicated in control of HHV-6B infection (PubMed:31020640). Presents several immunogenic epitopes derived from C.tetani neurotoxin tetX, playing a role in immune recognition and long-term protection (PubMed:19830726).</text>
</comment>
<comment type="function">
    <text evidence="13 35 42 66 69">Allele DRB1*04:01: Presents an immunodominant bacterial epitope derived from M.tuberculosis esxB/culture filtrate antigen CFP-10 (EISTNIRQAGVQYSR), eliciting CD4-positive T cell effector functions such as IFNG production and cytotoxic activity (PubMed:15265931). May present to T-helper 1 cells an HRV-16 epitope derived from capsid protein VP2 (NEKQPSDDNWLNFDGTLLGN), contributing to viral clearance (PubMed:27591323). Presents tumor epitopes derived from melanoma-associated TYR antigen (QNILLSNAPLGPQFP and DYSYLQDSDPDSFQD), triggering CD4-positive T cell effector functions such as GMCSF production (PubMed:8642306). Displays preferentially citrullinated self-peptides derived from VIM (GVYATR/citSSAVR and SAVRAR/citSSVPGVR) and ACAN (VVLLVATEGR/ CitVRVNSAYQDK) (PubMed:24190431). Displays self-peptides derived from COL2A1 (PubMed:9354468).</text>
</comment>
<comment type="function">
    <text evidence="35">Allele DRB1*04:02: Displays native or citrullinated self-peptides derived from VIM.</text>
</comment>
<comment type="function">
    <text evidence="35 42">Allele DRB1*04:04: May present to T-helper 1 cells several HRV-16 epitopes derived from capsid proteins VP1 (HIVMQYMYVPPGAPIPTTRN) and VP2 (RGDSTITSQDVANAVVGYGV), contributing to viral clearance (PubMed:27591323). Displays preferentially citrullinated self-peptides derived from VIM (SAVRAR/citSSVPGVR) (PubMed:24190431).</text>
</comment>
<comment type="function">
    <text evidence="21">Allele DRB1*04:05: May present to T-helper 1 cells an immunogenic epitope derived from tumor-associated antigen WT1 (KRYFKLSHLQMHSRKH), likely providing for effective antitumor immunity in a wide range of solid and hematological malignancies.</text>
</comment>
<comment type="function">
    <text evidence="45">Allele DRB1*05:01: Presents an immunodominant HIV-1 gag peptide (FRDYVDRFYKTLRAEQASQE) on infected dendritic cells for recognition by TRAV24-TRBV2 TCR on CD4-positive T cells and controls viral load.</text>
</comment>
<comment type="function">
    <text evidence="31 42 47 52">Allele DRB1*07:01: Upon EBV infection, presents latent antigen EBNA2 peptide (PRSPTVFYNIPPMPLPPSQL) to CD4-positive T cells, driving oligoclonal expansion and selection of a dominant virus-specific memory T cell subset with cytotoxic potential to directly eliminate virus-infected B cells (PubMed:31308093). May present to T-helper 1 cells several HRV-16 epitopes derived from capsid proteins VP1 (PRFSLPFLSIASAYYMFYDG) and VP2 (VPYVNAVPMDSMVRHNNWSL), contributing to viral clearance (PubMed:27591323). In the context of tumor immunesurveillance, may present to T-helper 1 cells an immunogenic epitope derived from tumor-associated antigen WT1 (MTEYKLVVVGAVGVGKSALTIQLI), likely providing for effective antitumor immunity in a wide range of solid and hematological malignancies (PubMed:22929521). In metastatic epithelial tumors, presents to intratumoral CD4-positive T cells a KRAS neoantigen (MTEYKLVVVGAVGVGKSALTIQLI) carrying G12V hotspot driver mutation and may mediate tumor regression (PubMed:30282837).</text>
</comment>
<comment type="function">
    <text evidence="24 42 45 53">Allele DRB1*11:01: Displays an immunodominant HIV-1 gag peptide (FRDYVDRFYKTLRAEQASQE) on infected dendritic cells for recognition by TRAV24-TRBV2 TCR on CD4-positive T cells and controls viral load (PubMed:29884618). May present to T-helper 1 cells an HRV-16 epitope derived from capsid protein VP2 (SDRIIQITRGDSTITSQDVA), contributing to viral clearance (PubMed:27591323). Presents several immunogenic epitopes derived from C.tetani neurotoxin tetX, playing a role in immune recognition and longterm protection (PubMed:19830726). In the context of tumor immunesurveillance, may present tumor-derived neoantigens to CD4-positive T cells and trigger anti-tumor helper functions (PubMed:31495665).</text>
</comment>
<comment type="function">
    <text evidence="49">Allele DRB1*13:01: Presents viral epitopes derived from HHV-6B antigens to polyfunctional CD4-positive T cells implicated in control of HHV-6B infection.</text>
</comment>
<comment type="function">
    <text evidence="21 42 71">Allele DRB1*15:01: May present to T-helper 1 cells an HRV-16 epitope derived from capsid protein VP2 (SNNSATLIVPYVNAVPMDSM), contributing to viral clearance (PubMed:27591323). Displays a self-peptide derived from MBP (ENPVVHFFKNIVTPR) (PubMed:25413013, PubMed:9782128). May present to T-helper 1 cells an immunogenic epitope derived from tumor-associated antigen WT1 (KRYFKLSHLQMHSRKH), likely providing for effective antitumor immunity in a wide range of solid and hematological malignancies.</text>
</comment>
<comment type="function">
    <text evidence="21 45">Allele DRB1*15:02: Displays an immunodominant HIV-1 gag peptide (FRDYVDRFYKTLRAEQASQE) on infected dendritic cells for recognition by TRAV24-TRBV2 TCR on CD4-positive T cells and controls viral load (PubMed:29884618). May present to T-helper 1 cells an immunogenic epitope derived from tumor-associated antigen WT1 (KRYFKLSHLQMHSRKH), likely providing for effective antitumor immunity in a wide range of solid and hematological malignancies (PubMed:19120973).</text>
</comment>
<comment type="function">
    <text evidence="5 68">(Microbial infection) Acts as a receptor for Epstein-Barr virus on lymphocytes.</text>
</comment>
<comment type="subunit">
    <text evidence="3 27 32 37 45 62 63 67 69 71">Heterotrimer that consists of an alpha chain HLA-DRA, a beta chain HLA-DRB1 and a peptide (peptide-MHCII) (PubMed:31619516, PubMed:32668259, PubMed:7477400, PubMed:9354468, PubMed:9782128). Newly synthesized alpha and beta chains forms a heterodimer (MHCII) that associates with the CD74/invariant chain (Ii) in the endoplasmic reticulum (ER). Ii is a trimer composed of three subunits and each subunit interacts with one MHCII dimer, blocking the peptide-binding cleft. As a result, MHCII molecules cannot bind peptides present in the ER (PubMed:7479981). The complex of MHCII and CD74/Ii is transported in vesicles from ER to Golgi to lysosomes, where it encounters antigenic peptides generated via proteolysis of endocytosed antigens. MHCII dimers are dissociated from CD74/Ii by the combined action of proteolysis and HLA-DM (PubMed:25413013). Lysosomal enzymes such as cathepsin, degrade CD74/Ii leaving a 24 amino acid remnant called class II-associated Ii or CLIP. Interacts (via the peptide binding cleft) with CLIP; this interaction inhibits antigen peptide binding before entry in the endosomal compartment (PubMed:7477400, PubMed:9075930). The displacement of CLIP and replacement by a high affinity peptide in lysosomes is performed by HLA-DM heterodimer. HLA-DM catalyzes CLIP dissociation from MHCII, stabilizes empty MHCII and mediates the selection of high affinity peptides (PubMed:11070170, PubMed:23260142, PubMed:9075930). Interacts with HLA-DM heterodimer; this interaction is direct (PubMed:25413013). Interacts with TCR (via CDR3) (PubMed:29884618). Interacts (via beta-2 domain) with CD4 coreceptor (via Ig-like V-type domain); this interaction is of exceptionally low affinity yet necessary for optimal recognition of antigenic peptides (PubMed:21900604, PubMed:27114505).</text>
</comment>
<comment type="subunit">
    <text evidence="4 28 40 65">(Microbial infection) Interacts with Staphylococcus aureus enterotoxin A/entA, enterotoxin B/entB, enterotoxin C1/entC1, enterotoxin D/entD and enterotoxin H/entH. Enterotoxins bind outside the peptide-binding cleft of MHCII: enterotoxin H/entH interacts via the beta-1 domain of MHCII and in a zinc-dependent way, whereas enterotoxin B/entB interacts primarily via the alpha-1 domain.</text>
</comment>
<comment type="subunit">
    <text evidence="5 68">(Microbial infection) Interacts with Epstein-Barr virus gp42 protein.</text>
</comment>
<comment type="subcellular location">
    <subcellularLocation>
        <location evidence="20 24 45">Cell membrane</location>
        <topology evidence="2">Single-pass type I membrane protein</topology>
    </subcellularLocation>
    <subcellularLocation>
        <location evidence="20">Endoplasmic reticulum membrane</location>
        <topology evidence="2">Single-pass type I membrane protein</topology>
    </subcellularLocation>
    <subcellularLocation>
        <location evidence="20 67">Lysosome membrane</location>
        <topology evidence="2">Single-pass type I membrane protein</topology>
    </subcellularLocation>
    <subcellularLocation>
        <location evidence="20 67">Late endosome membrane</location>
        <topology evidence="2">Single-pass type I membrane protein</topology>
    </subcellularLocation>
    <subcellularLocation>
        <location evidence="18">Autolysosome membrane</location>
    </subcellularLocation>
    <text evidence="20 45">The MHC class II complex transits through a number of intracellular compartments in the endocytic pathway until it reaches the cell membrane for antigen presentation (PubMed:18305173). Component of immunological synapses at the interface between T cell and APC (PubMed:29884618).</text>
</comment>
<comment type="tissue specificity">
    <text evidence="34 53">Expressed in professional APCs: monocyte/macrophages, dendritic cells and B cells (at protein level) (PubMed:19830726, PubMed:23783831, PubMed:31495665). Expressed in thymic epithelial cells (at protein level) (PubMed:23783831).</text>
</comment>
<comment type="domain">
    <text evidence="22 43 64 69 71">The beta-1 domain is a structural part of the peptide-binding cleft. It contains one alpha helix and 4 beta sheets, respectively forming part of the wall and the floor of the peptide-binding cleft. The other 4 beta sheets of the floor and the second alpha helix wall is formed by the alpha-1 domain of HLA-DRA. Forms hydrogen bonds with the peptide main chain via conserved amino acid in most HLA-DRB molecules. The polymorphic residues accomodate the side chains of the peptide conferring peptide specificity to distinct HLA-DRB1 alleles (PubMed:28467828, PubMed:8145819, PubMed:9354468, PubMed:9782128). The peptide-bound beta-1 domain forms hydrogen bonds with CDR2 and CDR3 alpha-domains of TCR (PubMed:19303388).</text>
</comment>
<comment type="domain">
    <text evidence="41 77">The beta-2 Ig-like domain mediates the interaction with CD4 coreceptor.</text>
</comment>
<comment type="PTM">
    <text evidence="76">Ubiquitinated by MARCHF1 and MARCHF8 at Lys-254 leading to sorting into the endosome system and down-regulation of MHCII.</text>
</comment>
<comment type="polymorphism">
    <text evidence="23 33 78">Highly polymorphic. Polymorphic residues encode for the beta-1 domain of the peptide-binding cleft, where they contribute to variations in peptide binding and TCR recognition among different alleles. The sequence shown is that of DRB1*15:01. The sequences of common representative alleles of serologically distinct allele groups as defined in the catalog of common and well-documented HLA alleles, are described as variants of DRB1*15:01 (PubMed:23510415). In the context of hematological malignancy and T cell transplantation, alleles DRB1*03:01 and DRB1*13:01 present minor histocompatibility antigens derived respectively from host MTHFD1 and LY75 proteins, contributing to T cell-mediated graft-versus-leukemia effect and complete remission (PubMed:19706888).</text>
</comment>
<comment type="disease">
    <text evidence="38">In populations of European descent, allele DRB1*01:03 is associated with increased susceptibility to Crohn disease and colonic ulcerative colitis. Decreased heterozygosity in individuals with colonic ulcerative colitis suggests that it acts as a recessive risk allele.</text>
</comment>
<comment type="disease">
    <disease id="DI-02731">
        <name>Sarcoidosis 1</name>
        <acronym>SS1</acronym>
        <description>An idiopathic, systemic, inflammatory disease characterized by the formation of immune granulomas in involved organs. Granulomas predominantly invade the lungs and the lymphatic system, but also skin, liver, spleen, eyes and other organs may be involved.</description>
        <dbReference type="MIM" id="181000"/>
    </disease>
    <text evidence="10">Disease susceptibility is associated with variants affecting the gene represented in this entry. Alleles DRB1*04:02, DRB1*11:01 and DRB1*12:01 are associated with sarcoidosis. Allele DRB1*04:02 is significantly associated with specific sarcodosis phenotypes such as eye, parotid and salivary gland involvement.</text>
</comment>
<comment type="disease">
    <disease id="DI-02604">
        <name>Multiple sclerosis</name>
        <acronym>MS</acronym>
        <description>A multifactorial, inflammatory, demyelinating disease of the central nervous system. Sclerotic lesions are characterized by perivascular infiltration of monocytes and lymphocytes and appear as indurated areas in pathologic specimens (sclerosis in plaques). The pathological mechanism is regarded as an autoimmune attack of the myelin sheath, mediated by both cellular and humoral immunity. Clinical manifestations include visual loss, extra-ocular movement disorders, paresthesias, loss of sensation, weakness, dysarthria, spasticity, ataxia and bladder dysfunction. Genetic and environmental factors influence susceptibility to the disease.</description>
        <dbReference type="MIM" id="126200"/>
    </disease>
    <text evidence="22 26">Disease susceptibility is associated with variants affecting the gene represented in this entry. In populations of European descent, allele DRB1*15:01 has the strongest association with multiple sclerosis among all HLA class II alleles. Additional risk is associated with the strongly linked alleles DRB1*03:01 and DQB1*02:01 as well as with allele DRB1*13:03 (PubMed:21833088). It is postulated that bacterial or viral infection triggers the autoimmune MS. Microbial peptides having low affinity crossreactivity to MBP autoantigen, may stimulate autoreactive T cells via molecular mimicry and initiate the autoimmune inflammation (PubMed:19303388).</text>
</comment>
<comment type="disease">
    <text evidence="43">Allele DRB1*15:01 is associated with increased susceptibility to Goodpasture syndrome. Can present a self-peptide derived from COL4A3 (GWISLWKGFSF) on TCR (TRAV19 biased) in pathogenic CD4-positive T-helper 1 and T-helper 17 cells, triggering autoimmune inflammation.</text>
</comment>
<comment type="disease" evidence="29">
    <disease id="DI-02692">
        <name>Rheumatoid arthritis</name>
        <acronym>RA</acronym>
        <description>An inflammatory disease with autoimmune features and a complex genetic component. It primarily affects the joints and is characterized by inflammatory changes in the synovial membranes and articular structures, widespread fibrinoid degeneration of the collagen fibers in mesenchymal tissues, and by atrophy and rarefaction of bony structures.</description>
        <dbReference type="MIM" id="180300"/>
    </disease>
    <text evidence="29">Disease susceptibility is associated with variants affecting the gene represented in this entry. Alleles DRB1*04:01; DRB1*04:04; DRB1*04:05; DRB1*04:08; DRB1*10:01; DRB1*01:01 and DRB1*01:02 are associated with increased susceptibility to rheumatoid arthritis, where affected individuals have antibodies to cyclic citrullinated peptide (anti-CCP-positive rheumatoid arthritis). Variations at position 40 in the peptide-binding cleft of these alleles explain most of the association to rheumatoid arthritis risk.</text>
</comment>
<dbReference type="EMBL" id="X00699">
    <property type="protein sequence ID" value="CAA25295.1"/>
    <property type="molecule type" value="mRNA"/>
</dbReference>
<dbReference type="EMBL" id="X00700">
    <property type="protein sequence ID" value="CAA25296.1"/>
    <property type="molecule type" value="mRNA"/>
</dbReference>
<dbReference type="EMBL" id="X03069">
    <property type="protein sequence ID" value="CAA26873.1"/>
    <property type="molecule type" value="mRNA"/>
</dbReference>
<dbReference type="EMBL" id="X02902">
    <property type="protein sequence ID" value="CAA26660.1"/>
    <property type="molecule type" value="mRNA"/>
</dbReference>
<dbReference type="EMBL" id="M11867">
    <property type="protein sequence ID" value="AAA36274.1"/>
    <property type="molecule type" value="mRNA"/>
</dbReference>
<dbReference type="EMBL" id="M28584">
    <property type="protein sequence ID" value="AAA59681.1"/>
    <property type="molecule type" value="mRNA"/>
</dbReference>
<dbReference type="EMBL" id="M28583">
    <property type="protein sequence ID" value="AAA59680.1"/>
    <property type="molecule type" value="mRNA"/>
</dbReference>
<dbReference type="EMBL" id="M16957">
    <property type="protein sequence ID" value="AAA36279.1"/>
    <property type="molecule type" value="mRNA"/>
</dbReference>
<dbReference type="EMBL" id="M16959">
    <property type="protein sequence ID" value="AAA36281.1"/>
    <property type="molecule type" value="mRNA"/>
</dbReference>
<dbReference type="EMBL" id="M16941">
    <property type="protein sequence ID" value="AAA36282.1"/>
    <property type="molecule type" value="mRNA"/>
</dbReference>
<dbReference type="EMBL" id="M20430">
    <property type="protein sequence ID" value="AAA59831.1"/>
    <property type="molecule type" value="mRNA"/>
</dbReference>
<dbReference type="EMBL" id="M20504">
    <property type="protein sequence ID" value="AAA59827.1"/>
    <property type="molecule type" value="mRNA"/>
</dbReference>
<dbReference type="EMBL" id="M26038">
    <property type="protein sequence ID" value="AAA59794.1"/>
    <property type="molecule type" value="mRNA"/>
</dbReference>
<dbReference type="EMBL" id="U66826">
    <property type="protein sequence ID" value="AAD43829.1"/>
    <property type="molecule type" value="mRNA"/>
</dbReference>
<dbReference type="EMBL" id="AB062112">
    <property type="protein sequence ID" value="BAB84521.2"/>
    <property type="molecule type" value="mRNA"/>
</dbReference>
<dbReference type="EMBL" id="AJ297586">
    <property type="protein sequence ID" value="CAC08826.2"/>
    <property type="molecule type" value="mRNA"/>
</dbReference>
<dbReference type="EMBL" id="AJ297587">
    <property type="protein sequence ID" value="CAC08827.1"/>
    <property type="molecule type" value="mRNA"/>
</dbReference>
<dbReference type="EMBL" id="AJ297582">
    <property type="protein sequence ID" value="CAC08822.1"/>
    <property type="molecule type" value="mRNA"/>
</dbReference>
<dbReference type="EMBL" id="AJ297584">
    <property type="protein sequence ID" value="CAC08824.1"/>
    <property type="molecule type" value="mRNA"/>
</dbReference>
<dbReference type="EMBL" id="AJ302075">
    <property type="protein sequence ID" value="CAC44379.1"/>
    <property type="molecule type" value="mRNA"/>
</dbReference>
<dbReference type="EMBL" id="AJ697893">
    <property type="protein sequence ID" value="CAG27026.1"/>
    <property type="molecule type" value="mRNA"/>
</dbReference>
<dbReference type="EMBL" id="AY961075">
    <property type="protein sequence ID" value="AAX63463.1"/>
    <property type="molecule type" value="mRNA"/>
</dbReference>
<dbReference type="EMBL" id="AY961068">
    <property type="protein sequence ID" value="AAX63456.1"/>
    <property type="molecule type" value="mRNA"/>
</dbReference>
<dbReference type="EMBL" id="AY961062">
    <property type="protein sequence ID" value="AAX63450.1"/>
    <property type="molecule type" value="mRNA"/>
</dbReference>
<dbReference type="EMBL" id="DQ090958">
    <property type="protein sequence ID" value="AAY96423.1"/>
    <property type="molecule type" value="mRNA"/>
</dbReference>
<dbReference type="EMBL" id="AY961072">
    <property type="protein sequence ID" value="AAX63460.1"/>
    <property type="molecule type" value="mRNA"/>
</dbReference>
<dbReference type="EMBL" id="AY961065">
    <property type="protein sequence ID" value="AAX63453.1"/>
    <property type="molecule type" value="mRNA"/>
</dbReference>
<dbReference type="EMBL" id="HM067845">
    <property type="protein sequence ID" value="ADI59557.1"/>
    <property type="molecule type" value="mRNA"/>
</dbReference>
<dbReference type="EMBL" id="HM067846">
    <property type="protein sequence ID" value="ADI59558.1"/>
    <property type="molecule type" value="mRNA"/>
</dbReference>
<dbReference type="EMBL" id="HM067847">
    <property type="protein sequence ID" value="ADI59559.1"/>
    <property type="molecule type" value="mRNA"/>
</dbReference>
<dbReference type="EMBL" id="HM067849">
    <property type="protein sequence ID" value="ADI59561.1"/>
    <property type="molecule type" value="mRNA"/>
</dbReference>
<dbReference type="EMBL" id="HM067854">
    <property type="protein sequence ID" value="ADI59566.1"/>
    <property type="molecule type" value="mRNA"/>
</dbReference>
<dbReference type="EMBL" id="HM067857">
    <property type="protein sequence ID" value="ADI59569.1"/>
    <property type="molecule type" value="mRNA"/>
</dbReference>
<dbReference type="EMBL" id="HM067862">
    <property type="protein sequence ID" value="ADI59574.1"/>
    <property type="molecule type" value="mRNA"/>
</dbReference>
<dbReference type="EMBL" id="HG974579">
    <property type="protein sequence ID" value="CDP32889.1"/>
    <property type="molecule type" value="mRNA"/>
</dbReference>
<dbReference type="EMBL" id="HG974591">
    <property type="protein sequence ID" value="CDP32901.1"/>
    <property type="molecule type" value="mRNA"/>
</dbReference>
<dbReference type="EMBL" id="HG974572">
    <property type="protein sequence ID" value="CDP32882.1"/>
    <property type="molecule type" value="mRNA"/>
</dbReference>
<dbReference type="EMBL" id="LC257777">
    <property type="protein sequence ID" value="BBD34095.1"/>
    <property type="molecule type" value="mRNA"/>
</dbReference>
<dbReference type="EMBL" id="LC257802">
    <property type="protein sequence ID" value="BBD34120.1"/>
    <property type="molecule type" value="mRNA"/>
</dbReference>
<dbReference type="EMBL" id="LC257804">
    <property type="protein sequence ID" value="BBD34122.1"/>
    <property type="molecule type" value="mRNA"/>
</dbReference>
<dbReference type="EMBL" id="LC257806">
    <property type="protein sequence ID" value="BBD34124.1"/>
    <property type="molecule type" value="mRNA"/>
</dbReference>
<dbReference type="EMBL" id="LC257807">
    <property type="protein sequence ID" value="BBD34125.1"/>
    <property type="molecule type" value="mRNA"/>
</dbReference>
<dbReference type="EMBL" id="AY663400">
    <property type="protein sequence ID" value="AAU87993.1"/>
    <property type="molecule type" value="Genomic_DNA"/>
</dbReference>
<dbReference type="EMBL" id="AY663415">
    <property type="protein sequence ID" value="AAU88035.1"/>
    <property type="molecule type" value="Genomic_DNA"/>
</dbReference>
<dbReference type="EMBL" id="AY663413">
    <property type="protein sequence ID" value="AAU88029.1"/>
    <property type="molecule type" value="Genomic_DNA"/>
</dbReference>
<dbReference type="EMBL" id="AY663408">
    <property type="protein sequence ID" value="AAU88014.1"/>
    <property type="molecule type" value="Genomic_DNA"/>
</dbReference>
<dbReference type="EMBL" id="AY663406">
    <property type="protein sequence ID" value="AAU88008.1"/>
    <property type="molecule type" value="Genomic_DNA"/>
</dbReference>
<dbReference type="EMBL" id="AY663414">
    <property type="protein sequence ID" value="AAU88033.1"/>
    <property type="molecule type" value="Genomic_DNA"/>
</dbReference>
<dbReference type="EMBL" id="AY663411">
    <property type="protein sequence ID" value="AAU88023.1"/>
    <property type="molecule type" value="Genomic_DNA"/>
</dbReference>
<dbReference type="EMBL" id="AY663396">
    <property type="protein sequence ID" value="AAU87983.1"/>
    <property type="molecule type" value="Genomic_DNA"/>
</dbReference>
<dbReference type="EMBL" id="AY663395">
    <property type="protein sequence ID" value="AAU87979.1"/>
    <property type="molecule type" value="Genomic_DNA"/>
</dbReference>
<dbReference type="EMBL" id="AM419948">
    <property type="protein sequence ID" value="CAL99240.1"/>
    <property type="molecule type" value="Genomic_DNA"/>
</dbReference>
<dbReference type="EMBL" id="L42143">
    <property type="protein sequence ID" value="AAA67104.1"/>
    <property type="molecule type" value="mRNA"/>
</dbReference>
<dbReference type="EMBL" id="L76133">
    <property type="protein sequence ID" value="AAL40069.1"/>
    <property type="molecule type" value="mRNA"/>
</dbReference>
<dbReference type="EMBL" id="LK391782">
    <property type="protein sequence ID" value="CDR98308.1"/>
    <property type="molecule type" value="mRNA"/>
</dbReference>
<dbReference type="EMBL" id="LT963704">
    <property type="protein sequence ID" value="SOT79998.1"/>
    <property type="molecule type" value="mRNA"/>
</dbReference>
<dbReference type="EMBL" id="AK289463">
    <property type="protein sequence ID" value="BAF82152.1"/>
    <property type="molecule type" value="mRNA"/>
</dbReference>
<dbReference type="EMBL" id="AK293020">
    <property type="protein sequence ID" value="BAF85709.1"/>
    <property type="molecule type" value="mRNA"/>
</dbReference>
<dbReference type="EMBL" id="BC001023">
    <property type="protein sequence ID" value="AAH01023.1"/>
    <property type="molecule type" value="mRNA"/>
</dbReference>
<dbReference type="EMBL" id="BC007920">
    <property type="protein sequence ID" value="AAH07920.1"/>
    <property type="molecule type" value="mRNA"/>
</dbReference>
<dbReference type="EMBL" id="BC033827">
    <property type="protein sequence ID" value="AAH33827.1"/>
    <property type="molecule type" value="mRNA"/>
</dbReference>
<dbReference type="EMBL" id="BC108922">
    <property type="protein sequence ID" value="AAI08923.1"/>
    <property type="molecule type" value="mRNA"/>
</dbReference>
<dbReference type="EMBL" id="AL137064">
    <property type="protein sequence ID" value="CAC19360.1"/>
    <property type="molecule type" value="Genomic_DNA"/>
</dbReference>
<dbReference type="EMBL" id="CR753309">
    <property type="status" value="NOT_ANNOTATED_CDS"/>
    <property type="molecule type" value="Genomic_DNA"/>
</dbReference>
<dbReference type="EMBL" id="CR753835">
    <property type="status" value="NOT_ANNOTATED_CDS"/>
    <property type="molecule type" value="Genomic_DNA"/>
</dbReference>
<dbReference type="CCDS" id="CCDS47409.1"/>
<dbReference type="RefSeq" id="NP_001230894.1">
    <property type="nucleotide sequence ID" value="NM_001243965.1"/>
</dbReference>
<dbReference type="RefSeq" id="NP_002115.2">
    <property type="nucleotide sequence ID" value="NM_002124.4"/>
</dbReference>
<dbReference type="RefSeq" id="XP_011546040.1">
    <property type="nucleotide sequence ID" value="XM_011547738.2"/>
</dbReference>
<dbReference type="PDB" id="1A6A">
    <property type="method" value="X-ray"/>
    <property type="resolution" value="2.75 A"/>
    <property type="chains" value="B=34-220"/>
</dbReference>
<dbReference type="PDB" id="1AQD">
    <property type="method" value="X-ray"/>
    <property type="resolution" value="2.45 A"/>
    <property type="chains" value="B/E/H/K=30-227"/>
</dbReference>
<dbReference type="PDB" id="1BX2">
    <property type="method" value="X-ray"/>
    <property type="resolution" value="2.60 A"/>
    <property type="chains" value="B/E=32-222"/>
</dbReference>
<dbReference type="PDB" id="1D5M">
    <property type="method" value="X-ray"/>
    <property type="resolution" value="2.00 A"/>
    <property type="chains" value="B=30-221"/>
</dbReference>
<dbReference type="PDB" id="1D5X">
    <property type="method" value="X-ray"/>
    <property type="resolution" value="2.45 A"/>
    <property type="chains" value="B=30-221"/>
</dbReference>
<dbReference type="PDB" id="1D5Z">
    <property type="method" value="X-ray"/>
    <property type="resolution" value="2.00 A"/>
    <property type="chains" value="B=30-221"/>
</dbReference>
<dbReference type="PDB" id="1D6E">
    <property type="method" value="X-ray"/>
    <property type="resolution" value="2.45 A"/>
    <property type="chains" value="B=30-221"/>
</dbReference>
<dbReference type="PDB" id="1DLH">
    <property type="method" value="X-ray"/>
    <property type="resolution" value="2.80 A"/>
    <property type="chains" value="B/E=32-219"/>
</dbReference>
<dbReference type="PDB" id="1FYT">
    <property type="method" value="X-ray"/>
    <property type="resolution" value="2.60 A"/>
    <property type="chains" value="B=30-221"/>
</dbReference>
<dbReference type="PDB" id="1HXY">
    <property type="method" value="X-ray"/>
    <property type="resolution" value="2.60 A"/>
    <property type="chains" value="B=30-219"/>
</dbReference>
<dbReference type="PDB" id="1J8H">
    <property type="method" value="X-ray"/>
    <property type="resolution" value="2.40 A"/>
    <property type="chains" value="B=30-221"/>
</dbReference>
<dbReference type="PDB" id="1JWM">
    <property type="method" value="X-ray"/>
    <property type="resolution" value="2.70 A"/>
    <property type="chains" value="B=30-219"/>
</dbReference>
<dbReference type="PDB" id="1JWS">
    <property type="method" value="X-ray"/>
    <property type="resolution" value="2.60 A"/>
    <property type="chains" value="B=30-219"/>
</dbReference>
<dbReference type="PDB" id="1JWU">
    <property type="method" value="X-ray"/>
    <property type="resolution" value="2.30 A"/>
    <property type="chains" value="B=30-219"/>
</dbReference>
<dbReference type="PDB" id="1KG0">
    <property type="method" value="X-ray"/>
    <property type="resolution" value="2.65 A"/>
    <property type="chains" value="B=32-219"/>
</dbReference>
<dbReference type="PDB" id="1KLG">
    <property type="method" value="X-ray"/>
    <property type="resolution" value="2.40 A"/>
    <property type="chains" value="B=30-219"/>
</dbReference>
<dbReference type="PDB" id="1KLU">
    <property type="method" value="X-ray"/>
    <property type="resolution" value="1.93 A"/>
    <property type="chains" value="B=30-219"/>
</dbReference>
<dbReference type="PDB" id="1LO5">
    <property type="method" value="X-ray"/>
    <property type="resolution" value="3.20 A"/>
    <property type="chains" value="B=30-219"/>
</dbReference>
<dbReference type="PDB" id="1PYW">
    <property type="method" value="X-ray"/>
    <property type="resolution" value="2.10 A"/>
    <property type="chains" value="B=30-219"/>
</dbReference>
<dbReference type="PDB" id="1R5I">
    <property type="method" value="X-ray"/>
    <property type="resolution" value="2.60 A"/>
    <property type="chains" value="B/F=30-219"/>
</dbReference>
<dbReference type="PDB" id="1SEB">
    <property type="method" value="X-ray"/>
    <property type="resolution" value="2.70 A"/>
    <property type="chains" value="B/F=30-221"/>
</dbReference>
<dbReference type="PDB" id="1SJE">
    <property type="method" value="X-ray"/>
    <property type="resolution" value="2.45 A"/>
    <property type="chains" value="B=30-219"/>
</dbReference>
<dbReference type="PDB" id="1SJH">
    <property type="method" value="X-ray"/>
    <property type="resolution" value="2.25 A"/>
    <property type="chains" value="B=30-219"/>
</dbReference>
<dbReference type="PDB" id="1T5W">
    <property type="method" value="X-ray"/>
    <property type="resolution" value="2.40 A"/>
    <property type="chains" value="B/E=30-219"/>
</dbReference>
<dbReference type="PDB" id="1T5X">
    <property type="method" value="X-ray"/>
    <property type="resolution" value="2.50 A"/>
    <property type="chains" value="B=30-219"/>
</dbReference>
<dbReference type="PDB" id="1YMM">
    <property type="method" value="X-ray"/>
    <property type="resolution" value="3.50 A"/>
    <property type="chains" value="B=30-227"/>
</dbReference>
<dbReference type="PDB" id="2FSE">
    <property type="method" value="X-ray"/>
    <property type="resolution" value="3.10 A"/>
    <property type="chains" value="B/D=33-219"/>
</dbReference>
<dbReference type="PDB" id="2G9H">
    <property type="method" value="X-ray"/>
    <property type="resolution" value="2.00 A"/>
    <property type="chains" value="B=30-219"/>
</dbReference>
<dbReference type="PDB" id="2IAM">
    <property type="method" value="X-ray"/>
    <property type="resolution" value="2.80 A"/>
    <property type="chains" value="B=30-219"/>
</dbReference>
<dbReference type="PDB" id="2IAN">
    <property type="method" value="X-ray"/>
    <property type="resolution" value="2.80 A"/>
    <property type="chains" value="B/G/L/Q=30-219"/>
</dbReference>
<dbReference type="PDB" id="2ICW">
    <property type="method" value="X-ray"/>
    <property type="resolution" value="2.41 A"/>
    <property type="chains" value="B/E=30-219"/>
</dbReference>
<dbReference type="PDB" id="2IPK">
    <property type="method" value="X-ray"/>
    <property type="resolution" value="2.30 A"/>
    <property type="chains" value="B=30-219"/>
</dbReference>
<dbReference type="PDB" id="2OJE">
    <property type="method" value="X-ray"/>
    <property type="resolution" value="3.00 A"/>
    <property type="chains" value="B/F=30-219"/>
</dbReference>
<dbReference type="PDB" id="2SEB">
    <property type="method" value="X-ray"/>
    <property type="resolution" value="2.50 A"/>
    <property type="chains" value="B=30-221"/>
</dbReference>
<dbReference type="PDB" id="2WBJ">
    <property type="method" value="X-ray"/>
    <property type="resolution" value="3.00 A"/>
    <property type="chains" value="B/F=30-227"/>
</dbReference>
<dbReference type="PDB" id="2XN9">
    <property type="method" value="X-ray"/>
    <property type="resolution" value="2.30 A"/>
    <property type="chains" value="E=30-219"/>
</dbReference>
<dbReference type="PDB" id="3L6F">
    <property type="method" value="X-ray"/>
    <property type="resolution" value="2.10 A"/>
    <property type="chains" value="B=30-221"/>
</dbReference>
<dbReference type="PDB" id="3O6F">
    <property type="method" value="X-ray"/>
    <property type="resolution" value="2.80 A"/>
    <property type="chains" value="B/F=29-221"/>
</dbReference>
<dbReference type="PDB" id="3PDO">
    <property type="method" value="X-ray"/>
    <property type="resolution" value="1.95 A"/>
    <property type="chains" value="B=30-227"/>
</dbReference>
<dbReference type="PDB" id="3PGC">
    <property type="method" value="X-ray"/>
    <property type="resolution" value="2.66 A"/>
    <property type="chains" value="B/E=30-227"/>
</dbReference>
<dbReference type="PDB" id="3PGD">
    <property type="method" value="X-ray"/>
    <property type="resolution" value="2.72 A"/>
    <property type="chains" value="B/E=30-227"/>
</dbReference>
<dbReference type="PDB" id="3QXA">
    <property type="method" value="X-ray"/>
    <property type="resolution" value="2.71 A"/>
    <property type="chains" value="B/E=30-219"/>
</dbReference>
<dbReference type="PDB" id="3QXD">
    <property type="method" value="X-ray"/>
    <property type="resolution" value="2.30 A"/>
    <property type="chains" value="B/E=30-219"/>
</dbReference>
<dbReference type="PDB" id="3S4S">
    <property type="method" value="X-ray"/>
    <property type="resolution" value="2.40 A"/>
    <property type="chains" value="B/E=30-221"/>
</dbReference>
<dbReference type="PDB" id="3S5L">
    <property type="method" value="X-ray"/>
    <property type="resolution" value="2.10 A"/>
    <property type="chains" value="B/E=30-221"/>
</dbReference>
<dbReference type="PDB" id="3T0E">
    <property type="method" value="X-ray"/>
    <property type="resolution" value="4.00 A"/>
    <property type="chains" value="B=30-221"/>
</dbReference>
<dbReference type="PDB" id="4AEN">
    <property type="method" value="X-ray"/>
    <property type="resolution" value="2.20 A"/>
    <property type="chains" value="B=30-227"/>
</dbReference>
<dbReference type="PDB" id="4AH2">
    <property type="method" value="X-ray"/>
    <property type="resolution" value="2.36 A"/>
    <property type="chains" value="B=30-227"/>
</dbReference>
<dbReference type="PDB" id="4C56">
    <property type="method" value="X-ray"/>
    <property type="resolution" value="2.90 A"/>
    <property type="chains" value="E/K=30-219"/>
</dbReference>
<dbReference type="PDB" id="4E41">
    <property type="method" value="X-ray"/>
    <property type="resolution" value="2.60 A"/>
    <property type="chains" value="B/G=30-219"/>
</dbReference>
<dbReference type="PDB" id="4FQX">
    <property type="method" value="X-ray"/>
    <property type="resolution" value="2.60 A"/>
    <property type="chains" value="B=30-221"/>
</dbReference>
<dbReference type="PDB" id="4GBX">
    <property type="method" value="X-ray"/>
    <property type="resolution" value="3.00 A"/>
    <property type="chains" value="B=30-220"/>
</dbReference>
<dbReference type="PDB" id="4I5B">
    <property type="method" value="X-ray"/>
    <property type="resolution" value="2.12 A"/>
    <property type="chains" value="B/E=31-222"/>
</dbReference>
<dbReference type="PDB" id="4IS6">
    <property type="method" value="X-ray"/>
    <property type="resolution" value="2.50 A"/>
    <property type="chains" value="B=30-221"/>
</dbReference>
<dbReference type="PDB" id="4MCY">
    <property type="method" value="X-ray"/>
    <property type="resolution" value="2.30 A"/>
    <property type="chains" value="B=30-219"/>
</dbReference>
<dbReference type="PDB" id="4MCZ">
    <property type="method" value="X-ray"/>
    <property type="resolution" value="2.41 A"/>
    <property type="chains" value="B=30-219"/>
</dbReference>
<dbReference type="PDB" id="4MD0">
    <property type="method" value="X-ray"/>
    <property type="resolution" value="2.19 A"/>
    <property type="chains" value="B=30-219"/>
</dbReference>
<dbReference type="PDB" id="4MD4">
    <property type="method" value="X-ray"/>
    <property type="resolution" value="1.95 A"/>
    <property type="chains" value="B=30-219"/>
</dbReference>
<dbReference type="PDB" id="4MD5">
    <property type="method" value="X-ray"/>
    <property type="resolution" value="1.65 A"/>
    <property type="chains" value="B=30-219"/>
</dbReference>
<dbReference type="PDB" id="4MDI">
    <property type="method" value="X-ray"/>
    <property type="resolution" value="2.00 A"/>
    <property type="chains" value="B=30-219"/>
</dbReference>
<dbReference type="PDB" id="4MDJ">
    <property type="method" value="X-ray"/>
    <property type="resolution" value="1.70 A"/>
    <property type="chains" value="B=30-219"/>
</dbReference>
<dbReference type="PDB" id="4OV5">
    <property type="method" value="X-ray"/>
    <property type="resolution" value="2.20 A"/>
    <property type="chains" value="B/E/H/K/N/Q=30-219"/>
</dbReference>
<dbReference type="PDB" id="4X5W">
    <property type="method" value="X-ray"/>
    <property type="resolution" value="1.34 A"/>
    <property type="chains" value="B=30-227"/>
</dbReference>
<dbReference type="PDB" id="4X5X">
    <property type="method" value="X-ray"/>
    <property type="resolution" value="3.20 A"/>
    <property type="chains" value="B/D=30-227"/>
</dbReference>
<dbReference type="PDB" id="4Y19">
    <property type="method" value="X-ray"/>
    <property type="resolution" value="2.50 A"/>
    <property type="chains" value="B=30-219"/>
</dbReference>
<dbReference type="PDB" id="4Y1A">
    <property type="method" value="X-ray"/>
    <property type="resolution" value="4.00 A"/>
    <property type="chains" value="B=30-219"/>
</dbReference>
<dbReference type="PDB" id="5JLZ">
    <property type="method" value="X-ray"/>
    <property type="resolution" value="1.99 A"/>
    <property type="chains" value="B/D=30-219"/>
</dbReference>
<dbReference type="PDB" id="5LAX">
    <property type="method" value="X-ray"/>
    <property type="resolution" value="2.60 A"/>
    <property type="chains" value="B/D=30-219"/>
</dbReference>
<dbReference type="PDB" id="5NI9">
    <property type="method" value="X-ray"/>
    <property type="resolution" value="1.33 A"/>
    <property type="chains" value="B=30-219"/>
</dbReference>
<dbReference type="PDB" id="5NIG">
    <property type="method" value="X-ray"/>
    <property type="resolution" value="1.35 A"/>
    <property type="chains" value="B=30-219"/>
</dbReference>
<dbReference type="PDB" id="6BIJ">
    <property type="method" value="X-ray"/>
    <property type="resolution" value="2.10 A"/>
    <property type="chains" value="B=31-219"/>
</dbReference>
<dbReference type="PDB" id="6BIL">
    <property type="method" value="X-ray"/>
    <property type="resolution" value="2.40 A"/>
    <property type="chains" value="B=30-219"/>
</dbReference>
<dbReference type="PDB" id="6BIN">
    <property type="method" value="X-ray"/>
    <property type="resolution" value="2.50 A"/>
    <property type="chains" value="B=30-219"/>
</dbReference>
<dbReference type="PDB" id="6BIR">
    <property type="method" value="X-ray"/>
    <property type="resolution" value="2.30 A"/>
    <property type="chains" value="B=30-219"/>
</dbReference>
<dbReference type="PDB" id="6BIV">
    <property type="method" value="X-ray"/>
    <property type="resolution" value="2.90 A"/>
    <property type="chains" value="A=30-219"/>
</dbReference>
<dbReference type="PDB" id="6BIX">
    <property type="method" value="X-ray"/>
    <property type="resolution" value="2.20 A"/>
    <property type="chains" value="B=30-219"/>
</dbReference>
<dbReference type="PDB" id="6BIY">
    <property type="method" value="X-ray"/>
    <property type="resolution" value="2.05 A"/>
    <property type="chains" value="B=30-219"/>
</dbReference>
<dbReference type="PDB" id="6BIZ">
    <property type="method" value="X-ray"/>
    <property type="resolution" value="2.10 A"/>
    <property type="chains" value="B=30-219"/>
</dbReference>
<dbReference type="PDB" id="6CPL">
    <property type="method" value="X-ray"/>
    <property type="resolution" value="2.45 A"/>
    <property type="chains" value="B=30-219"/>
</dbReference>
<dbReference type="PDB" id="6CPN">
    <property type="method" value="X-ray"/>
    <property type="resolution" value="2.00 A"/>
    <property type="chains" value="B=30-219"/>
</dbReference>
<dbReference type="PDB" id="6CPO">
    <property type="method" value="X-ray"/>
    <property type="resolution" value="2.40 A"/>
    <property type="chains" value="B/E=30-219"/>
</dbReference>
<dbReference type="PDB" id="6CQJ">
    <property type="method" value="X-ray"/>
    <property type="resolution" value="2.75 A"/>
    <property type="chains" value="B/E/H=31-219"/>
</dbReference>
<dbReference type="PDB" id="6CQL">
    <property type="method" value="X-ray"/>
    <property type="resolution" value="2.40 A"/>
    <property type="chains" value="B=30-219"/>
</dbReference>
<dbReference type="PDB" id="6CQN">
    <property type="method" value="X-ray"/>
    <property type="resolution" value="2.50 A"/>
    <property type="chains" value="B=30-219"/>
</dbReference>
<dbReference type="PDB" id="6CQQ">
    <property type="method" value="X-ray"/>
    <property type="resolution" value="2.80 A"/>
    <property type="chains" value="B/G=30-219"/>
</dbReference>
<dbReference type="PDB" id="6CQR">
    <property type="method" value="X-ray"/>
    <property type="resolution" value="3.04 A"/>
    <property type="chains" value="B/G=30-219"/>
</dbReference>
<dbReference type="PDB" id="6HBY">
    <property type="method" value="X-ray"/>
    <property type="resolution" value="1.95 A"/>
    <property type="chains" value="B/E=30-219"/>
</dbReference>
<dbReference type="PDB" id="6NIX">
    <property type="method" value="X-ray"/>
    <property type="resolution" value="2.10 A"/>
    <property type="chains" value="B=30-219"/>
</dbReference>
<dbReference type="PDB" id="6QZA">
    <property type="method" value="X-ray"/>
    <property type="resolution" value="3.09 A"/>
    <property type="chains" value="BBB/EEE=30-219"/>
</dbReference>
<dbReference type="PDB" id="6QZC">
    <property type="method" value="X-ray"/>
    <property type="resolution" value="1.64 A"/>
    <property type="chains" value="BBB=30-219"/>
</dbReference>
<dbReference type="PDB" id="6QZD">
    <property type="method" value="X-ray"/>
    <property type="resolution" value="2.66 A"/>
    <property type="chains" value="BBB/EEE=30-219"/>
</dbReference>
<dbReference type="PDB" id="6R0E">
    <property type="method" value="X-ray"/>
    <property type="resolution" value="1.91 A"/>
    <property type="chains" value="BBB=30-219"/>
</dbReference>
<dbReference type="PDB" id="6V0Y">
    <property type="method" value="X-ray"/>
    <property type="resolution" value="2.70 A"/>
    <property type="chains" value="B=30-219"/>
</dbReference>
<dbReference type="PDB" id="6V13">
    <property type="method" value="X-ray"/>
    <property type="resolution" value="2.75 A"/>
    <property type="chains" value="B=30-219"/>
</dbReference>
<dbReference type="PDB" id="6V15">
    <property type="method" value="X-ray"/>
    <property type="resolution" value="2.80 A"/>
    <property type="chains" value="B=30-219"/>
</dbReference>
<dbReference type="PDB" id="6V18">
    <property type="method" value="X-ray"/>
    <property type="resolution" value="2.35 A"/>
    <property type="chains" value="B=30-219"/>
</dbReference>
<dbReference type="PDB" id="6V19">
    <property type="method" value="X-ray"/>
    <property type="resolution" value="2.60 A"/>
    <property type="chains" value="B=30-219"/>
</dbReference>
<dbReference type="PDB" id="6V1A">
    <property type="method" value="X-ray"/>
    <property type="resolution" value="2.29 A"/>
    <property type="chains" value="B=30-219"/>
</dbReference>
<dbReference type="PDB" id="8PJG">
    <property type="method" value="X-ray"/>
    <property type="resolution" value="1.83 A"/>
    <property type="chains" value="B=30-219"/>
</dbReference>
<dbReference type="PDB" id="8TBP">
    <property type="method" value="X-ray"/>
    <property type="resolution" value="3.13 A"/>
    <property type="chains" value="B/D=30-219"/>
</dbReference>
<dbReference type="PDB" id="8TRL">
    <property type="method" value="X-ray"/>
    <property type="resolution" value="2.40 A"/>
    <property type="chains" value="B/E=30-219"/>
</dbReference>
<dbReference type="PDB" id="8TRQ">
    <property type="method" value="X-ray"/>
    <property type="resolution" value="2.75 A"/>
    <property type="chains" value="B=30-219"/>
</dbReference>
<dbReference type="PDB" id="8TRR">
    <property type="method" value="X-ray"/>
    <property type="resolution" value="2.65 A"/>
    <property type="chains" value="B/G=30-219"/>
</dbReference>
<dbReference type="PDB" id="8VRW">
    <property type="method" value="EM"/>
    <property type="resolution" value="3.03 A"/>
    <property type="chains" value="B/E/H=1-266"/>
</dbReference>
<dbReference type="PDBsum" id="1A6A"/>
<dbReference type="PDBsum" id="1AQD"/>
<dbReference type="PDBsum" id="1BX2"/>
<dbReference type="PDBsum" id="1D5M"/>
<dbReference type="PDBsum" id="1D5X"/>
<dbReference type="PDBsum" id="1D5Z"/>
<dbReference type="PDBsum" id="1D6E"/>
<dbReference type="PDBsum" id="1DLH"/>
<dbReference type="PDBsum" id="1FYT"/>
<dbReference type="PDBsum" id="1HXY"/>
<dbReference type="PDBsum" id="1J8H"/>
<dbReference type="PDBsum" id="1JWM"/>
<dbReference type="PDBsum" id="1JWS"/>
<dbReference type="PDBsum" id="1JWU"/>
<dbReference type="PDBsum" id="1KG0"/>
<dbReference type="PDBsum" id="1KLG"/>
<dbReference type="PDBsum" id="1KLU"/>
<dbReference type="PDBsum" id="1LO5"/>
<dbReference type="PDBsum" id="1PYW"/>
<dbReference type="PDBsum" id="1R5I"/>
<dbReference type="PDBsum" id="1SEB"/>
<dbReference type="PDBsum" id="1SJE"/>
<dbReference type="PDBsum" id="1SJH"/>
<dbReference type="PDBsum" id="1T5W"/>
<dbReference type="PDBsum" id="1T5X"/>
<dbReference type="PDBsum" id="1YMM"/>
<dbReference type="PDBsum" id="2FSE"/>
<dbReference type="PDBsum" id="2G9H"/>
<dbReference type="PDBsum" id="2IAM"/>
<dbReference type="PDBsum" id="2IAN"/>
<dbReference type="PDBsum" id="2ICW"/>
<dbReference type="PDBsum" id="2IPK"/>
<dbReference type="PDBsum" id="2OJE"/>
<dbReference type="PDBsum" id="2SEB"/>
<dbReference type="PDBsum" id="2WBJ"/>
<dbReference type="PDBsum" id="2XN9"/>
<dbReference type="PDBsum" id="3L6F"/>
<dbReference type="PDBsum" id="3O6F"/>
<dbReference type="PDBsum" id="3PDO"/>
<dbReference type="PDBsum" id="3PGC"/>
<dbReference type="PDBsum" id="3PGD"/>
<dbReference type="PDBsum" id="3QXA"/>
<dbReference type="PDBsum" id="3QXD"/>
<dbReference type="PDBsum" id="3S4S"/>
<dbReference type="PDBsum" id="3S5L"/>
<dbReference type="PDBsum" id="3T0E"/>
<dbReference type="PDBsum" id="4AEN"/>
<dbReference type="PDBsum" id="4AH2"/>
<dbReference type="PDBsum" id="4C56"/>
<dbReference type="PDBsum" id="4E41"/>
<dbReference type="PDBsum" id="4FQX"/>
<dbReference type="PDBsum" id="4GBX"/>
<dbReference type="PDBsum" id="4I5B"/>
<dbReference type="PDBsum" id="4IS6"/>
<dbReference type="PDBsum" id="4MCY"/>
<dbReference type="PDBsum" id="4MCZ"/>
<dbReference type="PDBsum" id="4MD0"/>
<dbReference type="PDBsum" id="4MD4"/>
<dbReference type="PDBsum" id="4MD5"/>
<dbReference type="PDBsum" id="4MDI"/>
<dbReference type="PDBsum" id="4MDJ"/>
<dbReference type="PDBsum" id="4OV5"/>
<dbReference type="PDBsum" id="4X5W"/>
<dbReference type="PDBsum" id="4X5X"/>
<dbReference type="PDBsum" id="4Y19"/>
<dbReference type="PDBsum" id="4Y1A"/>
<dbReference type="PDBsum" id="5JLZ"/>
<dbReference type="PDBsum" id="5LAX"/>
<dbReference type="PDBsum" id="5NI9"/>
<dbReference type="PDBsum" id="5NIG"/>
<dbReference type="PDBsum" id="6BIJ"/>
<dbReference type="PDBsum" id="6BIL"/>
<dbReference type="PDBsum" id="6BIN"/>
<dbReference type="PDBsum" id="6BIR"/>
<dbReference type="PDBsum" id="6BIV"/>
<dbReference type="PDBsum" id="6BIX"/>
<dbReference type="PDBsum" id="6BIY"/>
<dbReference type="PDBsum" id="6BIZ"/>
<dbReference type="PDBsum" id="6CPL"/>
<dbReference type="PDBsum" id="6CPN"/>
<dbReference type="PDBsum" id="6CPO"/>
<dbReference type="PDBsum" id="6CQJ"/>
<dbReference type="PDBsum" id="6CQL"/>
<dbReference type="PDBsum" id="6CQN"/>
<dbReference type="PDBsum" id="6CQQ"/>
<dbReference type="PDBsum" id="6CQR"/>
<dbReference type="PDBsum" id="6HBY"/>
<dbReference type="PDBsum" id="6NIX"/>
<dbReference type="PDBsum" id="6QZA"/>
<dbReference type="PDBsum" id="6QZC"/>
<dbReference type="PDBsum" id="6QZD"/>
<dbReference type="PDBsum" id="6R0E"/>
<dbReference type="PDBsum" id="6V0Y"/>
<dbReference type="PDBsum" id="6V13"/>
<dbReference type="PDBsum" id="6V15"/>
<dbReference type="PDBsum" id="6V18"/>
<dbReference type="PDBsum" id="6V19"/>
<dbReference type="PDBsum" id="6V1A"/>
<dbReference type="PDBsum" id="8PJG"/>
<dbReference type="PDBsum" id="8TBP"/>
<dbReference type="PDBsum" id="8TRL"/>
<dbReference type="PDBsum" id="8TRQ"/>
<dbReference type="PDBsum" id="8TRR"/>
<dbReference type="PDBsum" id="8VRW"/>
<dbReference type="EMDB" id="EMD-43488"/>
<dbReference type="SMR" id="P01911"/>
<dbReference type="BioGRID" id="109368">
    <property type="interactions" value="163"/>
</dbReference>
<dbReference type="CORUM" id="P01911"/>
<dbReference type="FunCoup" id="P01911">
    <property type="interactions" value="446"/>
</dbReference>
<dbReference type="IntAct" id="P01911">
    <property type="interactions" value="116"/>
</dbReference>
<dbReference type="MINT" id="P01911"/>
<dbReference type="STRING" id="9606.ENSP00000353099"/>
<dbReference type="ChEMBL" id="CHEMBL3831291"/>
<dbReference type="DrugBank" id="DB05121">
    <property type="generic name" value="1D09C3"/>
</dbReference>
<dbReference type="DrugBank" id="DB11294">
    <property type="generic name" value="Coccidioides immitis spherule"/>
</dbReference>
<dbReference type="GlyConnect" id="1369">
    <property type="glycosylation" value="11 N-Linked glycans (1 site)"/>
</dbReference>
<dbReference type="GlyConnect" id="1370">
    <property type="glycosylation" value="3 N-Linked glycans (1 site)"/>
</dbReference>
<dbReference type="GlyConnect" id="1371">
    <property type="glycosylation" value="3 N-Linked glycans (1 site)"/>
</dbReference>
<dbReference type="GlyConnect" id="1372">
    <property type="glycosylation" value="3 N-Linked glycans (1 site)"/>
</dbReference>
<dbReference type="GlyConnect" id="1373">
    <property type="glycosylation" value="11 N-Linked glycans (1 site)"/>
</dbReference>
<dbReference type="GlyConnect" id="1374">
    <property type="glycosylation" value="3 N-Linked glycans (1 site)"/>
</dbReference>
<dbReference type="GlyConnect" id="1375">
    <property type="glycosylation" value="4 N-Linked glycans (1 site)"/>
</dbReference>
<dbReference type="GlyConnect" id="1376">
    <property type="glycosylation" value="11 N-Linked glycans (1 site)"/>
</dbReference>
<dbReference type="GlyCosmos" id="P01911">
    <property type="glycosylation" value="1 site, No reported glycans"/>
</dbReference>
<dbReference type="GlyGen" id="P01911">
    <property type="glycosylation" value="1 site, 56 N-linked glycans (1 site)"/>
</dbReference>
<dbReference type="iPTMnet" id="P01911"/>
<dbReference type="PhosphoSitePlus" id="P01911"/>
<dbReference type="SwissPalm" id="P01911"/>
<dbReference type="BioMuta" id="HLA-DRB1"/>
<dbReference type="DMDM" id="122253"/>
<dbReference type="jPOST" id="P01911"/>
<dbReference type="MassIVE" id="P01911"/>
<dbReference type="PaxDb" id="9606-ENSP00000353099"/>
<dbReference type="PeptideAtlas" id="P01911"/>
<dbReference type="ProteomicsDB" id="51511"/>
<dbReference type="ProteomicsDB" id="51512"/>
<dbReference type="ProteomicsDB" id="51688"/>
<dbReference type="ProteomicsDB" id="52982"/>
<dbReference type="ProteomicsDB" id="52983"/>
<dbReference type="ProteomicsDB" id="53717"/>
<dbReference type="ProteomicsDB" id="61281"/>
<dbReference type="ProteomicsDB" id="61555"/>
<dbReference type="ProteomicsDB" id="61557"/>
<dbReference type="ProteomicsDB" id="65857"/>
<dbReference type="ProteomicsDB" id="75737"/>
<dbReference type="ProteomicsDB" id="80078"/>
<dbReference type="ProteomicsDB" id="83918"/>
<dbReference type="Pumba" id="P01911"/>
<dbReference type="TopDownProteomics" id="P01911"/>
<dbReference type="ABCD" id="P01911">
    <property type="antibodies" value="1 sequenced antibody"/>
</dbReference>
<dbReference type="Antibodypedia" id="4207">
    <property type="antibodies" value="1067 antibodies from 36 providers"/>
</dbReference>
<dbReference type="DNASU" id="3123"/>
<dbReference type="Ensembl" id="ENST00000360004.6">
    <property type="protein sequence ID" value="ENSP00000353099.5"/>
    <property type="gene ID" value="ENSG00000196126.12"/>
</dbReference>
<dbReference type="GeneID" id="3123"/>
<dbReference type="KEGG" id="hsa:3123"/>
<dbReference type="MANE-Select" id="ENST00000360004.6">
    <property type="protein sequence ID" value="ENSP00000353099.5"/>
    <property type="RefSeq nucleotide sequence ID" value="NM_002124.4"/>
    <property type="RefSeq protein sequence ID" value="NP_002115.2"/>
</dbReference>
<dbReference type="UCSC" id="uc011gjy.3">
    <property type="organism name" value="human"/>
</dbReference>
<dbReference type="UCSC" id="uc063uqx.1">
    <property type="organism name" value="human"/>
</dbReference>
<dbReference type="UCSC" id="uc063vvt.1">
    <property type="organism name" value="human"/>
</dbReference>
<dbReference type="AGR" id="HGNC:4948"/>
<dbReference type="CTD" id="3123"/>
<dbReference type="DisGeNET" id="3123"/>
<dbReference type="GeneCards" id="HLA-DRB1"/>
<dbReference type="HGNC" id="HGNC:4948">
    <property type="gene designation" value="HLA-DRB1"/>
</dbReference>
<dbReference type="HPA" id="ENSG00000196126">
    <property type="expression patterns" value="Tissue enhanced (lung, lymphoid tissue)"/>
</dbReference>
<dbReference type="MalaCards" id="HLA-DRB1"/>
<dbReference type="MIM" id="126200">
    <property type="type" value="phenotype"/>
</dbReference>
<dbReference type="MIM" id="180300">
    <property type="type" value="phenotype"/>
</dbReference>
<dbReference type="MIM" id="181000">
    <property type="type" value="phenotype"/>
</dbReference>
<dbReference type="neXtProt" id="NX_P01911"/>
<dbReference type="OpenTargets" id="ENSG00000196126"/>
<dbReference type="Orphanet" id="747">
    <property type="disease" value="Autoimmune pulmonary alveolar proteinosis"/>
</dbReference>
<dbReference type="Orphanet" id="703">
    <property type="disease" value="Bullous pemphigoid"/>
</dbReference>
<dbReference type="Orphanet" id="220393">
    <property type="disease" value="Diffuse cutaneous systemic sclerosis"/>
</dbReference>
<dbReference type="Orphanet" id="545">
    <property type="disease" value="Follicular lymphoma"/>
</dbReference>
<dbReference type="Orphanet" id="397">
    <property type="disease" value="Giant cell arteritis"/>
</dbReference>
<dbReference type="Orphanet" id="220402">
    <property type="disease" value="Limited cutaneous systemic sclerosis"/>
</dbReference>
<dbReference type="Orphanet" id="220407">
    <property type="disease" value="Limited systemic sclerosis"/>
</dbReference>
<dbReference type="Orphanet" id="2073">
    <property type="disease" value="Narcolepsy type 1"/>
</dbReference>
<dbReference type="Orphanet" id="83465">
    <property type="disease" value="Narcolepsy type 2"/>
</dbReference>
<dbReference type="Orphanet" id="477738">
    <property type="disease" value="Pediatric multiple sclerosis"/>
</dbReference>
<dbReference type="Orphanet" id="797">
    <property type="disease" value="Sarcoidosis"/>
</dbReference>
<dbReference type="Orphanet" id="536">
    <property type="disease" value="Systemic lupus erythematosus"/>
</dbReference>
<dbReference type="Orphanet" id="85414">
    <property type="disease" value="Systemic-onset juvenile idiopathic arthritis"/>
</dbReference>
<dbReference type="Orphanet" id="3437">
    <property type="disease" value="Vogt-Koyanagi-Harada disease"/>
</dbReference>
<dbReference type="PharmGKB" id="PA35072"/>
<dbReference type="VEuPathDB" id="HostDB:ENSG00000196126"/>
<dbReference type="eggNOG" id="ENOG502RYBQ">
    <property type="taxonomic scope" value="Eukaryota"/>
</dbReference>
<dbReference type="GeneTree" id="ENSGT00940000154993"/>
<dbReference type="HOGENOM" id="CLU_047501_13_1_1"/>
<dbReference type="InParanoid" id="P01911"/>
<dbReference type="OMA" id="AKSESHF"/>
<dbReference type="PAN-GO" id="P01911">
    <property type="GO annotations" value="8 GO annotations based on evolutionary models"/>
</dbReference>
<dbReference type="PhylomeDB" id="P01911"/>
<dbReference type="TreeFam" id="TF336626"/>
<dbReference type="PathwayCommons" id="P01911"/>
<dbReference type="Reactome" id="R-HSA-202424">
    <property type="pathway name" value="Downstream TCR signaling"/>
</dbReference>
<dbReference type="Reactome" id="R-HSA-202427">
    <property type="pathway name" value="Phosphorylation of CD3 and TCR zeta chains"/>
</dbReference>
<dbReference type="Reactome" id="R-HSA-202430">
    <property type="pathway name" value="Translocation of ZAP-70 to Immunological synapse"/>
</dbReference>
<dbReference type="Reactome" id="R-HSA-202433">
    <property type="pathway name" value="Generation of second messenger molecules"/>
</dbReference>
<dbReference type="Reactome" id="R-HSA-2132295">
    <property type="pathway name" value="MHC class II antigen presentation"/>
</dbReference>
<dbReference type="Reactome" id="R-HSA-389948">
    <property type="pathway name" value="Co-inhibition by PD-1"/>
</dbReference>
<dbReference type="Reactome" id="R-HSA-877300">
    <property type="pathway name" value="Interferon gamma signaling"/>
</dbReference>
<dbReference type="SignaLink" id="P01911"/>
<dbReference type="SIGNOR" id="P01911"/>
<dbReference type="BioGRID-ORCS" id="3123">
    <property type="hits" value="23 hits in 1057 CRISPR screens"/>
</dbReference>
<dbReference type="ChiTaRS" id="HLA-DRB1">
    <property type="organism name" value="human"/>
</dbReference>
<dbReference type="EvolutionaryTrace" id="P01911"/>
<dbReference type="GeneWiki" id="HLA-DRB1"/>
<dbReference type="GenomeRNAi" id="3123"/>
<dbReference type="Pharos" id="P01911">
    <property type="development level" value="Tchem"/>
</dbReference>
<dbReference type="PRO" id="PR:P01911"/>
<dbReference type="Proteomes" id="UP000005640">
    <property type="component" value="Chromosome 6"/>
</dbReference>
<dbReference type="RNAct" id="P01911">
    <property type="molecule type" value="protein"/>
</dbReference>
<dbReference type="Bgee" id="ENSG00000196126">
    <property type="expression patterns" value="Expressed in vermiform appendix and 99 other cell types or tissues"/>
</dbReference>
<dbReference type="ExpressionAtlas" id="P01911">
    <property type="expression patterns" value="baseline and differential"/>
</dbReference>
<dbReference type="GO" id="GO:0120281">
    <property type="term" value="C:autolysosome membrane"/>
    <property type="evidence" value="ECO:0007669"/>
    <property type="project" value="UniProtKB-SubCell"/>
</dbReference>
<dbReference type="GO" id="GO:0009986">
    <property type="term" value="C:cell surface"/>
    <property type="evidence" value="ECO:0000314"/>
    <property type="project" value="UniProtKB"/>
</dbReference>
<dbReference type="GO" id="GO:0030669">
    <property type="term" value="C:clathrin-coated endocytic vesicle membrane"/>
    <property type="evidence" value="ECO:0000304"/>
    <property type="project" value="Reactome"/>
</dbReference>
<dbReference type="GO" id="GO:0030666">
    <property type="term" value="C:endocytic vesicle membrane"/>
    <property type="evidence" value="ECO:0000304"/>
    <property type="project" value="Reactome"/>
</dbReference>
<dbReference type="GO" id="GO:0012507">
    <property type="term" value="C:ER to Golgi transport vesicle membrane"/>
    <property type="evidence" value="ECO:0000304"/>
    <property type="project" value="Reactome"/>
</dbReference>
<dbReference type="GO" id="GO:0009897">
    <property type="term" value="C:external side of plasma membrane"/>
    <property type="evidence" value="ECO:0000314"/>
    <property type="project" value="UniProtKB"/>
</dbReference>
<dbReference type="GO" id="GO:0070062">
    <property type="term" value="C:extracellular exosome"/>
    <property type="evidence" value="ECO:0007005"/>
    <property type="project" value="UniProtKB"/>
</dbReference>
<dbReference type="GO" id="GO:0005615">
    <property type="term" value="C:extracellular space"/>
    <property type="evidence" value="ECO:0007005"/>
    <property type="project" value="UniProtKB"/>
</dbReference>
<dbReference type="GO" id="GO:0000139">
    <property type="term" value="C:Golgi membrane"/>
    <property type="evidence" value="ECO:0000304"/>
    <property type="project" value="Reactome"/>
</dbReference>
<dbReference type="GO" id="GO:0001772">
    <property type="term" value="C:immunological synapse"/>
    <property type="evidence" value="ECO:0000314"/>
    <property type="project" value="UniProtKB"/>
</dbReference>
<dbReference type="GO" id="GO:0005882">
    <property type="term" value="C:intermediate filament"/>
    <property type="evidence" value="ECO:0000304"/>
    <property type="project" value="UniProtKB"/>
</dbReference>
<dbReference type="GO" id="GO:0031902">
    <property type="term" value="C:late endosome membrane"/>
    <property type="evidence" value="ECO:0000314"/>
    <property type="project" value="UniProtKB"/>
</dbReference>
<dbReference type="GO" id="GO:0098553">
    <property type="term" value="C:lumenal side of endoplasmic reticulum membrane"/>
    <property type="evidence" value="ECO:0000304"/>
    <property type="project" value="Reactome"/>
</dbReference>
<dbReference type="GO" id="GO:0005765">
    <property type="term" value="C:lysosomal membrane"/>
    <property type="evidence" value="ECO:0000314"/>
    <property type="project" value="UniProtKB"/>
</dbReference>
<dbReference type="GO" id="GO:0016020">
    <property type="term" value="C:membrane"/>
    <property type="evidence" value="ECO:0007005"/>
    <property type="project" value="UniProtKB"/>
</dbReference>
<dbReference type="GO" id="GO:0042613">
    <property type="term" value="C:MHC class II protein complex"/>
    <property type="evidence" value="ECO:0000314"/>
    <property type="project" value="UniProtKB"/>
</dbReference>
<dbReference type="GO" id="GO:0005886">
    <property type="term" value="C:plasma membrane"/>
    <property type="evidence" value="ECO:0000304"/>
    <property type="project" value="UniProtKB"/>
</dbReference>
<dbReference type="GO" id="GO:0032588">
    <property type="term" value="C:trans-Golgi network membrane"/>
    <property type="evidence" value="ECO:0000304"/>
    <property type="project" value="Reactome"/>
</dbReference>
<dbReference type="GO" id="GO:0030658">
    <property type="term" value="C:transport vesicle membrane"/>
    <property type="evidence" value="ECO:0000304"/>
    <property type="project" value="Reactome"/>
</dbReference>
<dbReference type="GO" id="GO:0042609">
    <property type="term" value="F:CD4 receptor binding"/>
    <property type="evidence" value="ECO:0000353"/>
    <property type="project" value="CAFA"/>
</dbReference>
<dbReference type="GO" id="GO:0023026">
    <property type="term" value="F:MHC class II protein complex binding"/>
    <property type="evidence" value="ECO:0007005"/>
    <property type="project" value="UniProtKB"/>
</dbReference>
<dbReference type="GO" id="GO:0032395">
    <property type="term" value="F:MHC class II receptor activity"/>
    <property type="evidence" value="ECO:0000314"/>
    <property type="project" value="UniProtKB"/>
</dbReference>
<dbReference type="GO" id="GO:0042605">
    <property type="term" value="F:peptide antigen binding"/>
    <property type="evidence" value="ECO:0000314"/>
    <property type="project" value="UniProtKB"/>
</dbReference>
<dbReference type="GO" id="GO:0030247">
    <property type="term" value="F:polysaccharide binding"/>
    <property type="evidence" value="ECO:0000314"/>
    <property type="project" value="UniProtKB"/>
</dbReference>
<dbReference type="GO" id="GO:0005200">
    <property type="term" value="F:structural constituent of cytoskeleton"/>
    <property type="evidence" value="ECO:0000304"/>
    <property type="project" value="UniProtKB"/>
</dbReference>
<dbReference type="GO" id="GO:0042608">
    <property type="term" value="F:T cell receptor binding"/>
    <property type="evidence" value="ECO:0000314"/>
    <property type="project" value="UniProtKB"/>
</dbReference>
<dbReference type="GO" id="GO:0002491">
    <property type="term" value="P:antigen processing and presentation of endogenous peptide antigen via MHC class II"/>
    <property type="evidence" value="ECO:0000314"/>
    <property type="project" value="UniProtKB"/>
</dbReference>
<dbReference type="GO" id="GO:0019886">
    <property type="term" value="P:antigen processing and presentation of exogenous peptide antigen via MHC class II"/>
    <property type="evidence" value="ECO:0000314"/>
    <property type="project" value="UniProtKB"/>
</dbReference>
<dbReference type="GO" id="GO:0016045">
    <property type="term" value="P:detection of bacterium"/>
    <property type="evidence" value="ECO:0000315"/>
    <property type="project" value="UniProtKB"/>
</dbReference>
<dbReference type="GO" id="GO:0008544">
    <property type="term" value="P:epidermis development"/>
    <property type="evidence" value="ECO:0000304"/>
    <property type="project" value="UniProtKB"/>
</dbReference>
<dbReference type="GO" id="GO:0006959">
    <property type="term" value="P:humoral immune response"/>
    <property type="evidence" value="ECO:0000315"/>
    <property type="project" value="UniProtKB"/>
</dbReference>
<dbReference type="GO" id="GO:0006955">
    <property type="term" value="P:immune response"/>
    <property type="evidence" value="ECO:0000314"/>
    <property type="project" value="UniProtKB"/>
</dbReference>
<dbReference type="GO" id="GO:0002437">
    <property type="term" value="P:inflammatory response to antigenic stimulus"/>
    <property type="evidence" value="ECO:0000314"/>
    <property type="project" value="UniProtKB"/>
</dbReference>
<dbReference type="GO" id="GO:0030225">
    <property type="term" value="P:macrophage differentiation"/>
    <property type="evidence" value="ECO:0000314"/>
    <property type="project" value="ARUK-UCL"/>
</dbReference>
<dbReference type="GO" id="GO:0002469">
    <property type="term" value="P:myeloid dendritic cell antigen processing and presentation"/>
    <property type="evidence" value="ECO:0000314"/>
    <property type="project" value="UniProtKB"/>
</dbReference>
<dbReference type="GO" id="GO:0002862">
    <property type="term" value="P:negative regulation of inflammatory response to antigenic stimulus"/>
    <property type="evidence" value="ECO:0000314"/>
    <property type="project" value="UniProtKB"/>
</dbReference>
<dbReference type="GO" id="GO:0042130">
    <property type="term" value="P:negative regulation of T cell proliferation"/>
    <property type="evidence" value="ECO:0000315"/>
    <property type="project" value="UniProtKB"/>
</dbReference>
<dbReference type="GO" id="GO:0032689">
    <property type="term" value="P:negative regulation of type II interferon production"/>
    <property type="evidence" value="ECO:0000315"/>
    <property type="project" value="UniProtKB"/>
</dbReference>
<dbReference type="GO" id="GO:0002503">
    <property type="term" value="P:peptide antigen assembly with MHC class II protein complex"/>
    <property type="evidence" value="ECO:0000314"/>
    <property type="project" value="UniProtKB"/>
</dbReference>
<dbReference type="GO" id="GO:0043123">
    <property type="term" value="P:positive regulation of canonical NF-kappaB signal transduction"/>
    <property type="evidence" value="ECO:0000314"/>
    <property type="project" value="CAFA"/>
</dbReference>
<dbReference type="GO" id="GO:2000516">
    <property type="term" value="P:positive regulation of CD4-positive, alpha-beta T cell activation"/>
    <property type="evidence" value="ECO:0000314"/>
    <property type="project" value="UniProtKB"/>
</dbReference>
<dbReference type="GO" id="GO:0032831">
    <property type="term" value="P:positive regulation of CD4-positive, CD25-positive, alpha-beta regulatory T cell differentiation"/>
    <property type="evidence" value="ECO:0000314"/>
    <property type="project" value="UniProtKB"/>
</dbReference>
<dbReference type="GO" id="GO:0045893">
    <property type="term" value="P:positive regulation of DNA-templated transcription"/>
    <property type="evidence" value="ECO:0000314"/>
    <property type="project" value="CAFA"/>
</dbReference>
<dbReference type="GO" id="GO:0070374">
    <property type="term" value="P:positive regulation of ERK1 and ERK2 cascade"/>
    <property type="evidence" value="ECO:0000314"/>
    <property type="project" value="CAFA"/>
</dbReference>
<dbReference type="GO" id="GO:0050778">
    <property type="term" value="P:positive regulation of immune response"/>
    <property type="evidence" value="ECO:0000318"/>
    <property type="project" value="GO_Central"/>
</dbReference>
<dbReference type="GO" id="GO:0035774">
    <property type="term" value="P:positive regulation of insulin secretion involved in cellular response to glucose stimulus"/>
    <property type="evidence" value="ECO:0000315"/>
    <property type="project" value="UniProtKB"/>
</dbReference>
<dbReference type="GO" id="GO:0033674">
    <property type="term" value="P:positive regulation of kinase activity"/>
    <property type="evidence" value="ECO:0000314"/>
    <property type="project" value="CAFA"/>
</dbReference>
<dbReference type="GO" id="GO:0043410">
    <property type="term" value="P:positive regulation of MAPK cascade"/>
    <property type="evidence" value="ECO:0000314"/>
    <property type="project" value="CAFA"/>
</dbReference>
<dbReference type="GO" id="GO:0043382">
    <property type="term" value="P:positive regulation of memory T cell differentiation"/>
    <property type="evidence" value="ECO:0000314"/>
    <property type="project" value="UniProtKB"/>
</dbReference>
<dbReference type="GO" id="GO:0045657">
    <property type="term" value="P:positive regulation of monocyte differentiation"/>
    <property type="evidence" value="ECO:0000314"/>
    <property type="project" value="CAFA"/>
</dbReference>
<dbReference type="GO" id="GO:0001934">
    <property type="term" value="P:positive regulation of protein phosphorylation"/>
    <property type="evidence" value="ECO:0000314"/>
    <property type="project" value="CAFA"/>
</dbReference>
<dbReference type="GO" id="GO:0050870">
    <property type="term" value="P:positive regulation of T cell activation"/>
    <property type="evidence" value="ECO:0000318"/>
    <property type="project" value="GO_Central"/>
</dbReference>
<dbReference type="GO" id="GO:0001916">
    <property type="term" value="P:positive regulation of T cell mediated cytotoxicity"/>
    <property type="evidence" value="ECO:0000314"/>
    <property type="project" value="UniProtKB"/>
</dbReference>
<dbReference type="GO" id="GO:0002842">
    <property type="term" value="P:positive regulation of T cell mediated immune response to tumor cell"/>
    <property type="evidence" value="ECO:0000314"/>
    <property type="project" value="UniProtKB"/>
</dbReference>
<dbReference type="GO" id="GO:0046598">
    <property type="term" value="P:positive regulation of viral entry into host cell"/>
    <property type="evidence" value="ECO:0000314"/>
    <property type="project" value="CAFA"/>
</dbReference>
<dbReference type="GO" id="GO:0051262">
    <property type="term" value="P:protein tetramerization"/>
    <property type="evidence" value="ECO:0000314"/>
    <property type="project" value="UniProtKB"/>
</dbReference>
<dbReference type="GO" id="GO:0032653">
    <property type="term" value="P:regulation of interleukin-10 production"/>
    <property type="evidence" value="ECO:0000314"/>
    <property type="project" value="UniProtKB"/>
</dbReference>
<dbReference type="GO" id="GO:0032673">
    <property type="term" value="P:regulation of interleukin-4 production"/>
    <property type="evidence" value="ECO:0000314"/>
    <property type="project" value="UniProtKB"/>
</dbReference>
<dbReference type="GO" id="GO:0045622">
    <property type="term" value="P:regulation of T-helper cell differentiation"/>
    <property type="evidence" value="ECO:0000314"/>
    <property type="project" value="UniProtKB"/>
</dbReference>
<dbReference type="GO" id="GO:0007165">
    <property type="term" value="P:signal transduction"/>
    <property type="evidence" value="ECO:0000315"/>
    <property type="project" value="UniProtKB"/>
</dbReference>
<dbReference type="GO" id="GO:0050852">
    <property type="term" value="P:T cell receptor signaling pathway"/>
    <property type="evidence" value="ECO:0000314"/>
    <property type="project" value="UniProtKB"/>
</dbReference>
<dbReference type="GO" id="GO:0042088">
    <property type="term" value="P:T-helper 1 type immune response"/>
    <property type="evidence" value="ECO:0000315"/>
    <property type="project" value="UniProtKB"/>
</dbReference>
<dbReference type="CDD" id="cd21000">
    <property type="entry name" value="IgC1_MHC_II_beta_HLA-DR"/>
    <property type="match status" value="1"/>
</dbReference>
<dbReference type="FunFam" id="2.60.40.10:FF:000116">
    <property type="entry name" value="HLA class II histocompatibility antigen, DRB1-1 beta chain"/>
    <property type="match status" value="1"/>
</dbReference>
<dbReference type="FunFam" id="3.10.320.10:FF:000001">
    <property type="entry name" value="HLA class II histocompatibility antigen, DRB1-1 beta chain"/>
    <property type="match status" value="1"/>
</dbReference>
<dbReference type="Gene3D" id="3.10.320.10">
    <property type="entry name" value="Class II Histocompatibility Antigen, M Beta Chain, Chain B, domain 1"/>
    <property type="match status" value="1"/>
</dbReference>
<dbReference type="Gene3D" id="2.60.40.10">
    <property type="entry name" value="Immunoglobulins"/>
    <property type="match status" value="1"/>
</dbReference>
<dbReference type="InterPro" id="IPR007110">
    <property type="entry name" value="Ig-like_dom"/>
</dbReference>
<dbReference type="InterPro" id="IPR036179">
    <property type="entry name" value="Ig-like_dom_sf"/>
</dbReference>
<dbReference type="InterPro" id="IPR013783">
    <property type="entry name" value="Ig-like_fold"/>
</dbReference>
<dbReference type="InterPro" id="IPR003006">
    <property type="entry name" value="Ig/MHC_CS"/>
</dbReference>
<dbReference type="InterPro" id="IPR003597">
    <property type="entry name" value="Ig_C1-set"/>
</dbReference>
<dbReference type="InterPro" id="IPR050160">
    <property type="entry name" value="MHC/Immunoglobulin"/>
</dbReference>
<dbReference type="InterPro" id="IPR011162">
    <property type="entry name" value="MHC_I/II-like_Ag-recog"/>
</dbReference>
<dbReference type="InterPro" id="IPR014745">
    <property type="entry name" value="MHC_II_a/b_N"/>
</dbReference>
<dbReference type="InterPro" id="IPR000353">
    <property type="entry name" value="MHC_II_b_N"/>
</dbReference>
<dbReference type="PANTHER" id="PTHR19944:SF99">
    <property type="entry name" value="HLA CLASS II HISTOCOMPATIBILITY ANTIGEN, DRB1 BETA CHAIN"/>
    <property type="match status" value="1"/>
</dbReference>
<dbReference type="PANTHER" id="PTHR19944">
    <property type="entry name" value="MHC CLASS II-RELATED"/>
    <property type="match status" value="1"/>
</dbReference>
<dbReference type="Pfam" id="PF07654">
    <property type="entry name" value="C1-set"/>
    <property type="match status" value="1"/>
</dbReference>
<dbReference type="Pfam" id="PF00969">
    <property type="entry name" value="MHC_II_beta"/>
    <property type="match status" value="1"/>
</dbReference>
<dbReference type="SMART" id="SM00407">
    <property type="entry name" value="IGc1"/>
    <property type="match status" value="1"/>
</dbReference>
<dbReference type="SMART" id="SM00921">
    <property type="entry name" value="MHC_II_beta"/>
    <property type="match status" value="1"/>
</dbReference>
<dbReference type="SUPFAM" id="SSF48726">
    <property type="entry name" value="Immunoglobulin"/>
    <property type="match status" value="1"/>
</dbReference>
<dbReference type="SUPFAM" id="SSF54452">
    <property type="entry name" value="MHC antigen-recognition domain"/>
    <property type="match status" value="1"/>
</dbReference>
<dbReference type="PROSITE" id="PS50835">
    <property type="entry name" value="IG_LIKE"/>
    <property type="match status" value="1"/>
</dbReference>
<dbReference type="PROSITE" id="PS00290">
    <property type="entry name" value="IG_MHC"/>
    <property type="match status" value="1"/>
</dbReference>
<feature type="signal peptide" evidence="60 61">
    <location>
        <begin position="1"/>
        <end position="29"/>
    </location>
</feature>
<feature type="chain" id="PRO_0000080744" description="HLA class II histocompatibility antigen, DRB1 beta chain">
    <location>
        <begin position="30"/>
        <end position="266"/>
    </location>
</feature>
<feature type="topological domain" description="Extracellular" evidence="2">
    <location>
        <begin position="30"/>
        <end position="227"/>
    </location>
</feature>
<feature type="transmembrane region" description="Helical" evidence="2">
    <location>
        <begin position="228"/>
        <end position="248"/>
    </location>
</feature>
<feature type="topological domain" description="Cytoplasmic" evidence="2">
    <location>
        <begin position="249"/>
        <end position="266"/>
    </location>
</feature>
<feature type="domain" description="Ig-like C1-type">
    <location>
        <begin position="126"/>
        <end position="214"/>
    </location>
</feature>
<feature type="region of interest" description="Beta-1">
    <location>
        <begin position="30"/>
        <end position="124"/>
    </location>
</feature>
<feature type="region of interest" description="Beta-2">
    <location>
        <begin position="125"/>
        <end position="227"/>
    </location>
</feature>
<feature type="binding site" evidence="54 64">
    <location>
        <position position="86"/>
    </location>
    <ligand>
        <name>a peptide antigen</name>
        <dbReference type="ChEBI" id="CHEBI:166823"/>
        <note>self- and pathogen-derived peptide antigen</note>
    </ligand>
</feature>
<feature type="binding site" evidence="54 64">
    <location>
        <position position="90"/>
    </location>
    <ligand>
        <name>a peptide antigen</name>
        <dbReference type="ChEBI" id="CHEBI:166823"/>
        <note>self- and pathogen-derived peptide antigen</note>
    </ligand>
</feature>
<feature type="binding site" evidence="54 64">
    <location>
        <position position="110"/>
    </location>
    <ligand>
        <name>a peptide antigen</name>
        <dbReference type="ChEBI" id="CHEBI:166823"/>
        <note>self- and pathogen-derived peptide antigen</note>
    </ligand>
</feature>
<feature type="binding site" evidence="54 64">
    <location>
        <position position="111"/>
    </location>
    <ligand>
        <name>a peptide antigen</name>
        <dbReference type="ChEBI" id="CHEBI:166823"/>
        <note>self- and pathogen-derived peptide antigen</note>
    </ligand>
</feature>
<feature type="binding site" evidence="64">
    <location>
        <position position="122"/>
    </location>
    <ligand>
        <name>a peptide antigen</name>
        <dbReference type="ChEBI" id="CHEBI:166823"/>
        <note>self- and pathogen-derived peptide antigen</note>
    </ligand>
</feature>
<feature type="glycosylation site" description="N-linked (GlcNAc...) asparagine" evidence="22 35">
    <location>
        <position position="48"/>
    </location>
</feature>
<feature type="disulfide bond" evidence="35 54 62 71">
    <location>
        <begin position="44"/>
        <end position="108"/>
    </location>
</feature>
<feature type="disulfide bond" evidence="35 54 62 71">
    <location>
        <begin position="146"/>
        <end position="202"/>
    </location>
</feature>
<feature type="cross-link" description="Glycyl lysine isopeptide (Lys-Gly) (interchain with G-Cter in ubiquitin)" evidence="1">
    <location>
        <position position="254"/>
    </location>
</feature>
<feature type="sequence variant" id="VAR_082703" description="In allele DRB1*03:01, allele DRB1*03:02, allele DRB1*08:01, allele DRB1*08:02, allele DRB1*08:03, allele DRB1*08:04, allele DRB1*10:01, allele DRB1*11:01, allele DRB1*11:04, allele DRB1*11:06, allele DRB1*11:11, allele DRB1*11:19, allele DRB1*12:01, allele DRB1*12:02, allele DRB1*13:01, allele DRB1*13:02, allele DRB1*13:03, allele DRB1*13:05, allele DRB1*13:07, allele DRB1*13:12, allele DRB1*14:01, allele DRB1*14:03, allele DRB1*14:05, allele DRB1*14:06 and allele DRB1*14:07; dbSNP:rs707953." evidence="6 7 8 9 12 14 15 16 17 25 36 39 48 56 59 73 74 75">
    <original>K</original>
    <variation>R</variation>
    <location>
        <position position="5"/>
    </location>
</feature>
<feature type="sequence variant" id="VAR_082704" description="In allele DRB1*04:01, allele DRB1*04:02, allele DRB1*04:04, allele DRB1*04:05, allele DRB1*04:06, allele DRB1*04:07, allele DRB1*04:08, allele DRB1*04:10 and allele DRB1*04:11; dbSNP:rs17879020." evidence="8 11 17 25 48 72">
    <original>L</original>
    <variation>F</variation>
    <location>
        <position position="6"/>
    </location>
</feature>
<feature type="sequence variant" id="VAR_082705" description="In allele DRB1*03:01, allele DRB1*03:02, allele DRB1*04:01, allele DRB1*04:02, allele DRB1*04:04, allele DRB1*04:05, allele DRB1*04:06, allele DRB1*04:07, allele DRB1*04:08, allele DRB1*04:10, allele DRB1*04:11, allele DRB1*07:01, allele DRB1*08:01, allele DRB1*08:02, allele DRB1*08:03, allele DRB1*08:04, allele DRB1*09:01, allele DRB1*10:01, allele DRB1*11:01, allele DRB1*11:04, allele DRB1*11:06, allele DRB1*11:11, allele DRB1*11:19, allele DRB1*12:01, allele DRB1*12:02, allele DRB1*13:01, allele DRB1*13:02, allele DRB1*13:03, allele DRB1*13:05, allele DRB1*13:07, allele DRB1*13:12, allele DRB1*14:01, allele DRB1*14:03, allele DRB1*14:05, allele DRB1*14:06 and allele DRB1*14:07; dbSNP:rs9270303." evidence="6 7 8 9 11 12 14 15 16 17 25 36 39 48 50 56 58 59 70 72 73 74 75">
    <original>T</original>
    <variation>A</variation>
    <location>
        <position position="13"/>
    </location>
</feature>
<feature type="sequence variant" id="VAR_082706" description="In allele DRB1*03:01, allele DRB1*03:02, allele DRB1*08:01, allele DRB1*08:02, allele DRB1*08:03, allele DRB1*08:04, allele DRB1*10:01, allele DRB1*11:01, allele DRB1*11:04, allele DRB1*11:06, allele DRB1*11:11, allele DRB1*11:19, allele DRB1*12:01, allele DRB1*12:02, allele DRB1*13:01, allele DRB1*13:02, allele DRB1*13:03, allele DRB1*13:05, allele DRB1*13:07, allele DRB1*13:12, allele DRB1*14:01, allele DRB1*14:03, allele DRB1*14:05, allele DRB1*14:06 and allele DRB1*14:07; dbSNP:rs9270302." evidence="6 7 8 9 12 14 15 16 17 25 36 39 48 56 59 73 74 75">
    <original>A</original>
    <variation>V</variation>
    <location>
        <position position="14"/>
    </location>
</feature>
<feature type="sequence variant" id="VAR_082707" description="In allele DRB1*01:01, allele DRB1*01:02, allele DRB1*03:01, allele DRB1*03:02, allele DRB1*04:01, allele DRB1*04:02, allele DRB1*04:04, allele DRB1*04:05, allele DRB1*04:06, allele DRB1*04:07, allele DRB1*04:08, allele DRB1*04:10, allele DRB1*04:11, allele DRB1*07:01, allele DRB1*08:01, allele DRB1*08:02, allele DRB1*08:03, allele DRB1*08:04, allele DRB1*09:01, allele DRB1*10:01, allele DRB1*11:01, allele DRB1*11:04, allele DRB1*11:06, allele DRB1*11:11, allele DRB1*11:19, allele DRB1*12:01, allele DRB1*12:02, allele DRB1*13:01, allele DRB1*13:02, allele DRB1*13:03, allele DRB1*13:05, allele DRB1*13:07, allele DRB1*13:12, allele DRB1*14:01, allele DRB1*14:03, allele DRB1*14:05, allele DRB1*14:06, allele DRB1*14:07, allele DRB1*16:01 and allele DRB1*16:02; dbSNP:rs9270299." evidence="6 7 8 9 11 12 14 15 16 17 19 25 36 39 44 46 48 50 51 56 57 58 59 70 72 73 74 75">
    <original>S</original>
    <variation>A</variation>
    <location>
        <position position="29"/>
    </location>
</feature>
<feature type="sequence variant" id="VAR_082708" description="In allele DRB1*07:01 and allele DRB1*09:01; dbSNP:rs17879746." evidence="14 50 70">
    <original>R</original>
    <variation>Q</variation>
    <location>
        <position position="33"/>
    </location>
</feature>
<feature type="sequence variant" id="VAR_082709" description="In allele DRB1*03:01, allele DRB1*03:02, allele DRB1*04:01, allele DRB1*04:02, allele DRB1*04:04, allele DRB1*04:05, allele DRB1*04:06, allele DRB1*04:07, allele DRB1*04:08, allele DRB1*04:10, allele DRB1*04:11, allele DRB1*08:01, allele DRB1*08:02, allele DRB1*08:03, allele DRB1*08:04, allele DRB1*10:01, allele DRB1*11:01, allele DRB1*11:04, allele DRB1*11:06, allele DRB1*11:11, allele DRB1*11:19, allele DRB1*12:01, allele DRB1*12:02, allele DRB1*13:01, allele DRB1*13:02, allele DRB1*13:03, allele DRB1*13:05, allele DRB1*13:07, allele DRB1*13:12, allele DRB1*14:01, allele DRB1*14:03, allele DRB1*14:05, allele DRB1*14:06 and allele DRB1*14:07; requires 2 nucleotide substitutions." evidence="6 7 8 9 11 12 14 15 16 17 25 36 39 48 50 56 58 59 72 73 74 75">
    <original>W</original>
    <variation>E</variation>
    <location>
        <position position="38"/>
    </location>
</feature>
<feature type="sequence variant" id="VAR_082710" description="In allele DRB1*09:01; requires 2 nucleotide substitutions." evidence="70">
    <original>W</original>
    <variation>K</variation>
    <location>
        <position position="38"/>
    </location>
</feature>
<feature type="sequence variant" id="VAR_082711" description="In allele DRB1*10:01; dbSNP:rs9269957." evidence="59">
    <original>Q</original>
    <variation>E</variation>
    <location>
        <position position="39"/>
    </location>
</feature>
<feature type="sequence variant" id="VAR_082712" description="In allele DRB1*03:01, allele DRB1*03:02, allele DRB1*08:01, allele DRB1*08:02, allele DRB1*08:03, allele DRB1*08:04, allele DRB1*11:01, allele DRB1*11:04, allele DRB1*11:06, allele DRB1*11:11, allele DRB1*11:19, allele DRB1*12:01, allele DRB1*12:02, allele DRB1*13:01, allele DRB1*13:02, allele DRB1*13:03, allele DRB1*13:05, allele DRB1*13:07, allele DRB1*13:12, allele DRB1*14:01, allele DRB1*14:03, allele DRB1*14:05, allele DRB1*14:06 and allele DRB1*14:07; requires 2 nucleotide substitutions." evidence="6 7 8 9 12 14 15 16 17 25 36 39 48 56 59 73 74 75">
    <original>Q</original>
    <variation>Y</variation>
    <location>
        <position position="39"/>
    </location>
</feature>
<feature type="sequence variant" id="VAR_082713" description="In allele DRB1*09:01; requires 2 nucleotide substitutions." evidence="70">
    <original>P</original>
    <variation>D</variation>
    <location>
        <position position="40"/>
    </location>
</feature>
<feature type="sequence variant" id="VAR_082714" description="In allele DRB1*07:01; requires 2 nucleotide substitutions." evidence="14 50 72">
    <original>P</original>
    <variation>G</variation>
    <location>
        <position position="40"/>
    </location>
</feature>
<feature type="sequence variant" id="VAR_082715" description="In allele DRB1*01:01 and allele DRB1*01:02; associated with increased risk for rheumatoid arthritis; dbSNP:rs17878703." evidence="12 16 19 29 46">
    <original>P</original>
    <variation>L</variation>
    <location>
        <position position="40"/>
    </location>
</feature>
<feature type="sequence variant" id="VAR_082716" description="In allele DRB1*03:01, allele DRB1*03:02, allele DRB1*08:01, allele DRB1*08:02, allele DRB1*08:03, allele DRB1*08:04, allele DRB1*11:01, allele DRB1*11:04, allele DRB1*11:06, allele DRB1*11:11, allele DRB1*11:19, allele DRB1*12:01, allele DRB1*12:02, allele DRB1*13:01, allele DRB1*13:02, allele DRB1*13:03, allele DRB1*13:05, allele DRB1*13:07, allele DRB1*13:12, allele DRB1*14:01, allele DRB1*14:03, allele DRB1*14:05, allele DRB1*14:06 and allele DRB1*14:07; dbSNP:rs9269955." evidence="6 7 8 9 12 14 15 16 17 25 36 39 48 56 59 73 74 75">
    <original>P</original>
    <variation>S</variation>
    <location>
        <position position="40"/>
    </location>
</feature>
<feature type="sequence variant" id="VAR_082717" description="In allele DRB1*04:01, allele DRB1*04:02, allele DRB1*04:04, allele DRB1*04:05, allele DRB1*04:06, allele DRB1*04:07, allele DRB1*04:08, allele DRB1*04:10, allele DRB1*04:11 and allele DRB1*10:01; associated with increased risk for rheumatoid arthritis; requires 2 nucleotide substitutions." evidence="8 11 17 25 29 48 58 59 72">
    <original>P</original>
    <variation>V</variation>
    <location>
        <position position="40"/>
    </location>
</feature>
<feature type="sequence variant" id="VAR_082718" description="In allele DRB1*03:01, allele DRB1*03:02, allele DRB1*08:01, allele DRB1*08:02, allele DRB1*08:03, allele DRB1*08:04, allele DRB1*11:01, allele DRB1*11:04, allele DRB1*11:06, allele DRB1*11:11, allele DRB1*11:19, allele DRB1*12:01, allele DRB1*12:02, allele DRB1*13:01, allele DRB1*13:02, allele DRB1*13:03, allele DRB1*13:05, allele DRB1*13:07, allele DRB1*13:12, allele DRB1*14:01, allele DRB1*14:03, allele DRB1*14:05, allele DRB1*14:06 and allele DRB1*14:07; dbSNP:rs1136756." evidence="6 7 8 9 12 14 15 16 17 25 36 39 48 56 59 73 74 75">
    <original>K</original>
    <variation>T</variation>
    <location>
        <position position="41"/>
    </location>
</feature>
<feature type="sequence variant" id="VAR_082719" description="In allele DRB1*01:01, allele DRB1*01:02, allele DRB1*09:01 and allele DRB1*10:01; associated with increased risk for rheumatoid arthritis; requires 2 nucleotide substitutions." evidence="12 16 19 29 46 59">
    <original>R</original>
    <variation>F</variation>
    <location>
        <position position="42"/>
    </location>
</feature>
<feature type="sequence variant" id="VAR_082720" description="In allele DRB1*08:01, allele DRB1*08:02, allele DRB1*08:03, allele DRB1*08:04, allele DRB1*12:01 and allele DRB1*12:02; dbSNP:rs1136758." evidence="7 16 17 25 36 70 74">
    <original>R</original>
    <variation>G</variation>
    <location>
        <position position="42"/>
    </location>
</feature>
<feature type="sequence variant" id="VAR_082721" description="In allele DRB1*04:01, allele DRB1*04:02, allele DRB1*04:04, allele DRB1*04:05, allele DRB1*04:06, allele DRB1*04:07, allele DRB1*04:08, allele DRB1*04:10 and allele DRB1*04:11; associated with increased risk for rheumatoid arthritis." evidence="8 11 17 25 29 48 58 72">
    <original>R</original>
    <variation>H</variation>
    <location>
        <position position="42"/>
    </location>
</feature>
<feature type="sequence variant" id="VAR_082722" description="In allele DRB1*03:01, allele DRB1*03:02, allele DRB1*11:01, allele DRB1*11:04, allele DRB1*11:06, allele DRB1*11:11, allele DRB1*11:19, allele DRB1*13:01, allele DRB1*13:02, allele DRB1*13:03, allele DRB1*13:05, allele DRB1*13:07, allele DRB1*13:12, allele DRB1*14:01, allele DRB1*14:03, allele DRB1*14:05, allele DRB1*14:06 and allele DRB1*14:07; dbSNP:rs9269951." evidence="6 8 9 12 14 15 16 17 25 39 48 56 59 73 74 75">
    <original>R</original>
    <variation>S</variation>
    <location>
        <position position="42"/>
    </location>
</feature>
<feature type="sequence variant" id="VAR_082723" description="In allele DRB1*07:01; requires 2 nucleotide substitutions." evidence="14 50 72">
    <original>R</original>
    <variation>Y</variation>
    <location>
        <position position="42"/>
    </location>
</feature>
<feature type="sequence variant" id="VAR_082724" description="In allele DRB1*07:01; dbSNP:rs17882014." evidence="14 50 72">
    <original>E</original>
    <variation>K</variation>
    <location>
        <position position="43"/>
    </location>
</feature>
<feature type="sequence variant" id="VAR_082725" description="In allele DRB1*14:05; dbSNP:rs17879981." evidence="9 16">
    <original>H</original>
    <variation>Q</variation>
    <location>
        <position position="45"/>
    </location>
</feature>
<feature type="sequence variant" id="VAR_082726" description="In allele DRB1*08:01, allele DRB1*08:02, allele DRB1*08:03, allele DRB1*08:04, allele DRB1*12:01 and allele DRB1*12:02; dbSNP:rs17879702." evidence="7 16 17 25 36 74">
    <original>H</original>
    <variation>Y</variation>
    <location>
        <position position="45"/>
    </location>
</feature>
<feature type="sequence variant" id="VAR_082727" description="In allele DRB1*07:01; dbSNP:rs17885382." evidence="14 50">
    <original>R</original>
    <variation>Q</variation>
    <location>
        <position position="54"/>
    </location>
</feature>
<feature type="sequence variant" id="VAR_082728" description="In allele DRB1*01:01, allele DRB1*01:02, allele DRB1*10:01, allele DRB1*12:01 and allele DRB1*12:02; dbSNP:rs1059572." evidence="7 12 16 19 25 46 59">
    <original>F</original>
    <variation>L</variation>
    <location>
        <position position="55"/>
    </location>
</feature>
<feature type="sequence variant" id="VAR_082729" description="In allele DRB1*03:01, allele DRB1*09:01; dbSNP:rs1059569." evidence="59 70">
    <original>F</original>
    <variation>Y</variation>
    <location>
        <position position="55"/>
    </location>
</feature>
<feature type="sequence variant" id="VAR_082730" description="In allele DRB1*01:01, allele DRB1*01:02, allele DRB1*03:02, allele DRB1*07:01, allele DRB1*10:01, allele DRB1*12:01, allele DRB1*12:02, allele DRB1*14:03 and allele DRB1*14:06; dbSNP:rs1059575." evidence="6 7 12 14 16 19 25 46 48 50 59 72 75">
    <original>D</original>
    <variation>E</variation>
    <location>
        <position position="57"/>
    </location>
</feature>
<feature type="sequence variant" id="VAR_082731" description="In allele DRB1*09:01; dbSNP:rs17878947." evidence="70">
    <original>D</original>
    <variation>H</variation>
    <location>
        <position position="57"/>
    </location>
</feature>
<feature type="sequence variant" id="VAR_082732" description="In allele DRB1*01:01 and allele DRB1*01:02; dbSNP:rs3175105." evidence="12 16 19 46">
    <original>Y</original>
    <variation>C</variation>
    <location>
        <position position="59"/>
    </location>
</feature>
<feature type="sequence variant" id="VAR_082733" description="In allele DRB1*09:01; requires 2 nucleotide substitutions." evidence="70">
    <original>Y</original>
    <variation>G</variation>
    <location>
        <position position="59"/>
    </location>
</feature>
<feature type="sequence variant" id="VAR_082734" description="In allele DRB1*12:01, allele DRB1*12:02 and allele DRB1*15:03; dbSNP:rs11554462." evidence="7 16 17 25">
    <original>Y</original>
    <variation>H</variation>
    <location>
        <position position="59"/>
    </location>
</feature>
<feature type="sequence variant" id="VAR_082735" description="In allele DRB1*07:01; requires 2 nucleotide substitutions." evidence="14 50">
    <original>Y</original>
    <variation>L</variation>
    <location>
        <position position="59"/>
    </location>
</feature>
<feature type="sequence variant" id="VAR_082736" description="In allele DRB1*10:01; requires 2 nucleotide substitutions." evidence="59">
    <original>Y</original>
    <variation>R</variation>
    <location>
        <position position="59"/>
    </location>
</feature>
<feature type="sequence variant" id="VAR_082737" description="In allele DRB1*01:01, allele DRB1*01:02 and allele DRB1*09:01; dbSNP:rs17882300." evidence="12 16 19 46 70">
    <original>F</original>
    <variation>I</variation>
    <location>
        <position position="60"/>
    </location>
</feature>
<feature type="sequence variant" id="VAR_082738" description="In allele DRB1*10:01; dbSNP:rs17882300." evidence="59">
    <original>F</original>
    <variation>V</variation>
    <location>
        <position position="60"/>
    </location>
</feature>
<feature type="sequence variant" id="VAR_082739" description="In allele DRB1*03:01, allele DRB1*03:02, allele DRB1*10:01, allele DRB1*12:01, allele DRB1*12:02, allele DRB1*13:01, allele DRB1*13:02, allele DRB1*13:05, allele DRB1*14:01, allele DRB1*14:03, allele DRB1*14:05, allele DRB1*14:06 and allele DRB1*14:07; dbSNP:rs1064664." evidence="6 7 9 12 14 15 16 25 48 59 73 75">
    <original>Y</original>
    <variation>H</variation>
    <location>
        <position position="61"/>
    </location>
</feature>
<feature type="sequence variant" id="VAR_082740" description="In allele DRB1*04:01, allele DRB1*04:02, allele DRB1*04:04, allele DRB1*04:05, allele DRB1*04:06, allele DRB1*04:07, allele DRB1*04:08, allele DRB1*04:10 and allele DRB1*04:11; dbSNP:rs17879995." evidence="8 11 17 25 48 58 72">
    <original>N</original>
    <variation>H</variation>
    <location>
        <position position="62"/>
    </location>
</feature>
<feature type="sequence variant" id="VAR_082741" description="In allele DRB1*07:01, allele DRB1*14:01, allele DRB1*14:05 and allele DRB1*14:07; dbSNP:rs707957." evidence="6 9 14 16 50">
    <original>S</original>
    <variation>F</variation>
    <location>
        <position position="66"/>
    </location>
</feature>
<feature type="sequence variant" id="VAR_082742" description="In allele DRB1*12:01 and allele DRB1*12:02." evidence="7 16 25">
    <original>S</original>
    <variation>L</variation>
    <location>
        <position position="66"/>
    </location>
</feature>
<feature type="sequence variant" id="VAR_082743" description="In allele DRB1*03:01, allele DRB1*03:02, allele DRB1*09:01, allele DRB1*13:01, allele DRB1*13:02, allele DRB1*13:05, allele DRB1*14:03 and allele DRB1*14:06; dbSNP:rs796324593." evidence="6 12 14 15 16 48 59 70 73 75">
    <original>S</original>
    <variation>N</variation>
    <location>
        <position position="66"/>
    </location>
</feature>
<feature type="sequence variant" id="VAR_082744" description="In allele DRB1*04:01, allele DRB1*04:02, allele DRB1*04:04, allele DRB1*04:05, allele DRB1*04:07, allele DRB1*04:08, allele DRB1*04:10, allele DRB1*04:11, allele DRB1*08:01, allele DRB1*08:02, allele DRB1*08:03, allele DRB1*08:04, allele DRB1*10:01, allele DRB1*11:01, allele DRB1*11:04, allele DRB1*11:06, allele DRB1*11:11, allele DRB1*11:19, allele DRB1*13:03, allele DRB1*13:07 and allele DRB1*13:12; dbSNP:rs707957." evidence="8 11 17 25 36 39 48 56 58 59 72 74">
    <original>S</original>
    <variation>Y</variation>
    <location>
        <position position="66"/>
    </location>
</feature>
<feature type="sequence variant" id="VAR_082745" description="In allele DRB1*10:01; dbSNP:rs17878951." evidence="59">
    <original>V</original>
    <variation>A</variation>
    <location>
        <position position="67"/>
    </location>
</feature>
<feature type="sequence variant" id="VAR_082746" description="In allele DRB1*12:01 and allele DRB1*12:02; dbSNP:rs17878614." evidence="7 16 25">
    <original>V</original>
    <variation>L</variation>
    <location>
        <position position="67"/>
    </location>
</feature>
<feature type="sequence variant" id="VAR_082747" description="In allele DRB1*10:01; dbSNP:rs17882455." evidence="59">
    <original>F</original>
    <variation>Y</variation>
    <location>
        <position position="69"/>
    </location>
</feature>
<feature type="sequence variant" id="VAR_082748" description="In allele DRB1*01:01, allele DRB1*01:02, allele DRB1*03:02, allele DRB1*04:01, allele DRB1*04:02, allele DRB1*04:04, allele DRB1*04:05, allele DRB1*04:06, allele DRB1*04:07, allele DRB1*04:08, allele DRB1*04:10, allele DRB1*04:11, allele DRB1*07:01, allele DRB1*08:01, allele DRB1*08:02, allele DRB1*08:03, allele DRB1*08:04, allele DRB1*09:01, allele DRB1*10:01, allele DRB1*13:03, allele DRB1*13:07, allele DRB1*13:12, allele DRB1*14:01, allele DRB1*14:03, allele DRB1*14:05, allele DRB1*14:06, allele DRB1*14:07, allele DRB1*16:01 and allele DRB1*16:02; dbSNP:rs17884945." evidence="6 8 9 11 12 14 16 17 19 25 36 39 44 46 48 50 51 57 58 59 70 72 74 75">
    <original>F</original>
    <variation>Y</variation>
    <location>
        <position position="76"/>
    </location>
</feature>
<feature type="sequence variant" id="VAR_082749" description="In allele DRB1*14:01, allele DRB1*14:07; dbSNP:rs17885129." evidence="6">
    <original>D</original>
    <variation>A</variation>
    <location>
        <position position="86"/>
    </location>
</feature>
<feature type="sequence variant" id="VAR_082750" description="In allele DRB1*04:05, allele DRB1*04:10; allele DRB1*04:11, allele DRB1*08:01, allele DRB1*08:03, allele DRB1*13:03 and allele DRB1*13:12; requires 2 nucleotide substitutions." evidence="17 25 39 72 74">
    <original>D</original>
    <variation>S</variation>
    <location>
        <position position="86"/>
    </location>
</feature>
<feature type="sequence variant" id="VAR_082751" description="In allele DRB1*07:01, allele DRB1*09:01, allele DRB1*12:01 and allele DRB1*12:02; dbSNP:rs17885129." evidence="7 14 16 25 50 70">
    <original>D</original>
    <variation>V</variation>
    <location>
        <position position="86"/>
    </location>
</feature>
<feature type="sequence variant" id="VAR_082752" description="In allele DRB1*11:01, allele DRB1*11:04, allele DRB1*11:06, allele DRB1*11:11 and allele DRB1*11:19." evidence="8 17 39 56">
    <original>A</original>
    <variation>E</variation>
    <location>
        <position position="87"/>
    </location>
</feature>
<feature type="sequence variant" id="VAR_082753" description="In allele DRB1*14:01, allele DRB1*14:07; dbSNP:rs17882583." evidence="6">
    <original>Y</original>
    <variation>H</variation>
    <location>
        <position position="89"/>
    </location>
</feature>
<feature type="sequence variant" id="VAR_082754" description="In allele DRB1*07:01, allele DRB1*09:01, allele DRB1*12:01 and allele DRB1*12:02; dbSNP:rs1059586." evidence="7 14 16 25 50 70">
    <original>Y</original>
    <variation>S</variation>
    <location>
        <position position="89"/>
    </location>
</feature>
<feature type="sequence variant" id="VAR_082755" description="In allele DRB1*08:01, allele DRB1*08:02, allele DRB1*08:04, allele DRB1*09:01, allele DRB1*11:01, allele DRB1*11:04, allele DRB1*11:06, allele DRB1*11:11, allele DRB1*12:02, allele DRB1*13:05, allele DRB1*13:07 and allele DRB1*16:01; dbSNP:rs17886918." evidence="8 15 17 25 36 39 44 48 56 57 70 74">
    <original>I</original>
    <variation>F</variation>
    <location>
        <position position="96"/>
    </location>
</feature>
<feature type="sequence variant" id="VAR_082756" description="In allele DRB1*01:01, allele DRB1*01:02, allele DRB1*03:01, allele DRB1*03:02, allele DRB1*04:01, allele DRB1*04:04, allele DRB1*04:05, allele DRB1*04:06, allele DRB1*04:07, allele DRB1*04:08, allele DRB1*04:10, allele DRB1*04:11, allele DRB1*10:01, allele DRB1*14:01, allele DRB1*14:03, allele DRB1*14:05, allele DRB1*14:06, allele DRB1*14:07 and allele DRB1*16:02; dbSNP:rs17886918." evidence="6 9 11 12 16 17 19 25 46 48 51 58 59 72 75">
    <original>I</original>
    <variation>L</variation>
    <location>
        <position position="96"/>
    </location>
</feature>
<feature type="sequence variant" id="VAR_082757" description="In allele DRB1*04:02, allele DRB1*07:01, allele DRB1*08:01, allele DRB1*08:02, allele DRB1*08:03, allele DRB1*08:04, allele DRB1*11:01, allele DRB1*11:04, allele DRB1*11:06, allele DRB1*11:11, allele DRB1*11:19, allele DRB1*12:01, allele DRB1*12:02, allele DRB1*13:01, allele DRB1*13:02, allele DRB1*13:03, allele DRB1*13:05, allele DRB1*13:07, allele DRB1*13:12, allele DRB1*14:03, allele DRB1*16:01 and allele DRB1*16:02; requires 2 nucleotide substitutions." evidence="6 7 8 12 14 15 16 17 25 36 39 44 48 50 51 56 57 58 73 74">
    <original>Q</original>
    <variation>D</variation>
    <location>
        <position position="99"/>
    </location>
</feature>
<feature type="sequence variant" id="VAR_082758" description="In allele DRB1*09:01, allele DRB1*10:01, allele DRB1*14:01, allele DRB1*14:05 and allele DRB1*14:07; dbSNP:rs17884070." evidence="6 9 16 59 70">
    <original>Q</original>
    <variation>R</variation>
    <location>
        <position position="99"/>
    </location>
</feature>
<feature type="sequence variant" id="VAR_082759" description="In allele DRB1*04:02, allele DRB1*11:11, allele DRB1*13:01 and allele DRB1*13:02; dbSNP:rs9269942." evidence="8 12 14 16 17 73">
    <original>A</original>
    <variation>E</variation>
    <location>
        <position position="100"/>
    </location>
</feature>
<feature type="sequence variant" id="VAR_082760" description="In allele DRB1*03:01, allele DRB1*03:02, allele DRB1*04:01 and allele DRB1*13:03; requires 2 nucleotide substitutions; dbSNP:rs796196270." evidence="11 25 39 59 75">
    <original>A</original>
    <variation>K</variation>
    <location>
        <position position="100"/>
    </location>
</feature>
<feature type="sequence variant" id="VAR_082761" description="In allele DRB1*01:01, allele DRB1*01:02, allele DRB1*04:04, allele DRB1*04:05, allele DRB1*04:06, allele DRB1*04:07, allele DRB1*04:08, allele DRB1*04:10, allele DRB1*04:11, allele DRB1*07:01, allele DRB1*08:01, allele DRB1*08:02, allele DRB1*08:03, allele DRB1*08:04, allele DRB1*09:01, allele DRB1*10:01, allele DRB1*11:01, allele DRB1*11:04, allele DRB1*11:06, allele DRB1*11:19, allele DRB1*12:01, allele DRB1*12:02, allele DRB1*13:05, allele DRB1*13:07, allele DRB1*13:12, allele DRB1*14:01, allele DRB1*14:03, allele DRB1*14:05, allele DRB1*14:06, allele DRB1*14:07, allele DRB1*16:01 and allele DRB1*16:02; requires 2 nucleotide substitutions." evidence="6 7 8 9 12 14 15 16 17 19 25 36 39 44 46 48 50 51 56 57 58 59 70 72 74">
    <original>A</original>
    <variation>R</variation>
    <location>
        <position position="100"/>
    </location>
</feature>
<feature type="sequence variant" id="VAR_082762" description="In allele DRB1*03:01, allele DRB1*03:02 and allele DRB1*07:01; dbSNP:rs17878857." evidence="14 50 59 75">
    <original>A</original>
    <variation>G</variation>
    <location>
        <position position="102"/>
    </location>
</feature>
<feature type="sequence variant" id="VAR_082763" description="In allele DRB1*04:06, allele DRB1*04:07, allele DRB1*04:11, allele DRB1*09:01, allele DRB1*14:01, allele DRB1*14:05 and allele DRB1*14:07; dbSNP:rs17886882." evidence="6 17 25 70 72">
    <original>A</original>
    <variation>E</variation>
    <location>
        <position position="103"/>
    </location>
</feature>
<feature type="sequence variant" id="VAR_082764" description="In allele DRB1*08:01, allele DRB1*08:02, allele DRB1*08:03, allele DRB1*08:04 and allele DRB1*14:03; requires 2 nucleotide substitutions." evidence="6 9 16 17 25 36 48 74">
    <original>A</original>
    <variation>L</variation>
    <location>
        <position position="103"/>
    </location>
</feature>
<feature type="sequence variant" id="VAR_082765" description="In allele DRB1*07:01; requires 2 nucleotide substitutions." evidence="14 50">
    <original>A</original>
    <variation>Q</variation>
    <location>
        <position position="103"/>
    </location>
</feature>
<feature type="sequence variant" id="VAR_082766" description="In allele DRB1*03:01 and allele DRB1*03:02; requires 2 nucleotide substitutions." evidence="59 75">
    <original>A</original>
    <variation>R</variation>
    <location>
        <position position="103"/>
    </location>
</feature>
<feature type="sequence variant" id="VAR_082767" description="In allele DRB1*03:01, allele DRB1*03:02; dbSNP:rs9269941." evidence="59 75">
    <original>T</original>
    <variation>N</variation>
    <location>
        <position position="106"/>
    </location>
</feature>
<feature type="sequence variant" id="VAR_082768" description="In allele DRB1*07:01 and allele DRB1*09:01; requires 2 nucleotide substitutions." evidence="14 50 70">
    <original>Y</original>
    <variation>V</variation>
    <location>
        <position position="107"/>
    </location>
</feature>
<feature type="sequence variant" id="VAR_082769" description="In allele DRB1*01:02, allele DRB1*11:06, allele DRB1*12:01, allele DRB1*12:02; dbSNP:rs17424145." evidence="7 16 25 39">
    <original>V</original>
    <variation>A</variation>
    <location>
        <position position="114"/>
    </location>
</feature>
<feature type="sequence variant" id="VAR_082770" description="In allele DRB1*01:01, allele DRB1*03:02, allele DRB1*04:01, allele DRB1*04:05, allele DRB1*04:07, allele DRB1*04:08, allele DRB1*07:01, allele DRB1*08:01, allele DRB1*08:02, allele DRB1*08:03, allele DRB1*09:01, allele DRB1*10:01, allele DRB1*11:01, allele DRB1*11:11, allele DRB1*11:19, allele DRB1*13:02, allele DRB1*13:03, allele DRB1*13:05, allele DRB1*13:07, allele DRB1*13:12, allele DRB1*14:03, allele DRB1*14:07, allele DRB1*15:02, allele DRB1*16:01 and allele DRB1*16:02; dbSNP:rs17885482." evidence="6 11 12 14 15 16 17 19 25 36 39 44 46 48 50 51 56 57 59 70 73 74 75">
    <original>V</original>
    <variation>G</variation>
    <location>
        <position position="115"/>
    </location>
</feature>
<feature type="sequence variant" id="VAR_082771" description="In allele DRB1*01:01 and allele DRB1*01:02; dbSNP:rs17882084." evidence="12 16 19 46">
    <original>Q</original>
    <variation>E</variation>
    <location>
        <position position="125"/>
    </location>
</feature>
<feature type="sequence variant" id="VAR_082772" description="In allele DRB1*03:01, allele DRB1*03:02, allele DRB1*07:01, allele DRB1*08:01, allele DRB1*08:02, allele DRB1*08:03, allele DRB1*08:04, allele DRB1*09:01, allele DRB1*11:01, allele DRB1*11:04, allele DRB1*11:06, allele DRB1*11:11, allele DRB1*11:19, allele DRB1*12:01, allele DRB1*12:02, allele DRB1*13:01, allele DRB1*13:02, allele DRB1*13:03, allele DRB1*13:05, allele DRB1*13:07, allele DRB1*13:12, allele DRB1*14:01, allele DRB1*14:03, allele DRB1*14:05, allele DRB1*14:06 and allele DRB1*14:07; dbSNP:rs1071752." evidence="6 7 8 9 12 14 15 16 17 25 36 39 48 50 56 59 70 73 74 75">
    <original>Q</original>
    <variation>H</variation>
    <location>
        <position position="125"/>
    </location>
</feature>
<feature type="sequence variant" id="VAR_082773" description="In allele DRB1*04:01, allele DRB1*04:02, allele DRB1*04:04, allele DRB1*04:05, allele DRB1*04:06, allele DRB1*04:07, allele DRB1*04:08, allele DRB1*04:10 and allele DRB1*04:11; requires 2 nucleotide substitutions." evidence="8 11 17 25 48 58 72">
    <original>Q</original>
    <variation>Y</variation>
    <location>
        <position position="125"/>
    </location>
</feature>
<feature type="sequence variant" id="VAR_082774" description="In allele DRB1*04:01, allele DRB1*04:02, allele DRB1*04:04, allele DRB1*04:05, allele DRB1*04:06, allele DRB1*04:07, allele DRB1*04:08, allele DRB1*04:10, allele DRB1*04:11, allele DRB1*07:01 and allele DRB1*09:01; dbSNP:rs17405219." evidence="8 11 14 17 25 48 50 58 70 72">
    <original>K</original>
    <variation>E</variation>
    <location>
        <position position="127"/>
    </location>
</feature>
<feature type="sequence variant" id="VAR_082775" description="In allele DRB1*04:01, allele DRB1*04:02, allele DRB1*04:04, allele DRB1*04:05, allele DRB1*04:06, allele DRB1*04:07, allele DRB1*04:08, allele DRB1*04:10, allele DRB1*04:11, allele DRB1*07:01 and allele DRB1*09:01; dbSNP:rs2308760." evidence="8 11 14 17 25 48 50 58 70 72">
    <original>S</original>
    <variation>A</variation>
    <location>
        <position position="133"/>
    </location>
</feature>
<feature type="sequence variant" id="VAR_082776" description="In allele DRB1*14:01; dbSNP:rs751099504." evidence="6">
    <original>H</original>
    <variation>Y</variation>
    <location>
        <position position="141"/>
    </location>
</feature>
<feature type="sequence variant" id="VAR_082777" description="In allele DRB1*04:01, allele DRB1*04:02, allele DRB1*04:04, allele DRB1*04:05, allele DRB1*04:06, allele DRB1*04:07, allele DRB1*04:08, allele DRB1*04:10, allele DRB1*04:11 and allele DRB1*10:01; dbSNP:rs1059351." evidence="8 11 17 25 48 58 59 72">
    <original>S</original>
    <variation>N</variation>
    <location>
        <position position="149"/>
    </location>
</feature>
<feature type="sequence variant" id="VAR_082778" description="In allele DRB1*01:01, allele DRB1*01:02, allele DRB1*03:01, allele DRB1*03:02,allele DRB1*04:01, allele DRB1*04:02, allele DRB1*04:04, allele DRB1*04:05, allele DRB1*04:06, allele DRB1*04:07, allele DRB1*04:08, allele DRB1*04:10, allele DRB1*04:11, allele DRB1*07:01, allele DRB1*08:01, allele DRB1*08:02, allele DRB1*08:03, allele DRB1*08:04, allele DRB1*09:01, allele DRB1*10:01, allele DRB1*11:01, allele DRB1*11:04, allele DRB1*11:06, allele DRB1*11:11, allele DRB1*11:19, allele DRB1*12:01, allele DRB1*12:02, allele DRB1*13:01, allele DRB1*13:02, allele DRB1*13:03, allele DRB1*13:05, allele DRB1*13:07, allele DRB1*13:12, allele DRB1*14:01, allele DRB1*14:03, allele DRB1*14:05, allele DRB1*14:06 and allele DRB1*14:07; dbSNP:rs707954." evidence="6 7 8 9 11 12 14 15 16 17 19 25 36 39 46 48 50 56 58 59 70 72 73 74 75">
    <original>L</original>
    <variation>R</variation>
    <location>
        <position position="162"/>
    </location>
</feature>
<feature type="sequence variant" id="VAR_082779" description="In allele DRB1*03:01, allele DRB1*03:02, allele DRB1*04:01, allele DRB1*04:02, allele DRB1*04:04, allele DRB1*04:05, allele DRB1*04:06, allele DRB1*04:07, allele DRB1*04:08, allele DRB1*04:10, allele DRB1*04:11, allele DRB1*08:01, allele DRB1*08:02, allele DRB1*08:03, allele DRB1*08:04, allele DRB1*10:01, allele DRB1*11:01, allele DRB1*11:04, allele DRB1*11:06, allele DRB1*11:11, allele DRB1*11:19, allele DRB1*12:01, allele DRB1*12:02, allele DRB1*13:01, allele DRB1*13:02, allele DRB1*13:03, allele DRB1*13:05, allele DRB1*13:07, allele DRB1*13:12, allele DRB1*14:01, allele DRB1*14:03, allele DRB1*14:05, allele DRB1*14:06 and allele DRB1*14:07; dbSNP:rs78916069." evidence="6 7 8 9 11 12 14 15 16 17 25 36 39 48 56 58 59 72 73 74 75">
    <original>A</original>
    <variation>T</variation>
    <location>
        <position position="169"/>
    </location>
</feature>
<feature type="sequence variant" id="VAR_082780" description="In allele DRB1*01:01, allele DRB1*01:02, allele DRB1*03:01, allele DRB1*03:02, allele DRB1*04:01, allele DRB1*04:02, allele DRB1*04:04, allele DRB1*04:05, allele DRB1*04:06, allele DRB1*04:07, allele DRB1*04:08, allele DRB1*04:10, allele DRB1*04:11, allele DRB1*07:01, allele DRB1*08:01, allele DRB1*08:02, allele DRB1*08:03, allele DRB1*08:04, allele DRB1*09:01, allele DRB1*10:01, allele DRB1*11:01, allele DRB1*11:04, allele DRB1*11:06, allele DRB1*11:11, allele DRB1*11:19, allele DRB1*12:01, allele DRB1*12:02, allele DRB1*13:01, allele DRB1*13:02, allele DRB1*13:03, allele DRB1*13:05, allele DRB1*13:07, allele DRB1*13:12, allele DRB1*14:01, allele DRB1*14:03, allele DRB1*14:05, allele DRB1*14:06 and allele DRB1*14:07; dbSNP:rs701829." evidence="6 7 8 9 11 12 14 15 16 17 19 25 36 39 46 48 50 56 58 59 70 72 73 74 75">
    <original>M</original>
    <variation>V</variation>
    <location>
        <position position="171"/>
    </location>
</feature>
<feature type="sequence variant" id="VAR_082781" description="In allele DRB1*03:01, allele DRB1*03:02, allele DRB1*08:01, allele DRB1*08:02, allele DRB1*08:03, allele DRB1*08:04, allele DRB1*11:01, allele DRB1*11:04, allele DRB1*11:06, allele DRB1*11:11, allele DRB1*11:19, allele DRB1*12:01, allele DRB1*12:02, allele DRB1*13:01, allele DRB1*13:02, allele DRB1*13:03, allele DRB1*13:05, allele DRB1*13:07, allele DRB1*13:12, allele DRB1*14:01, allele DRB1*14:03, allele DRB1*14:05, allele DRB1*14:06 and allele DRB1*14:07; dbSNP:rs77637983." evidence="6 7 8 9 12 14 15 16 17 25 36 39 48 56 59 73 74 75">
    <original>Q</original>
    <variation>H</variation>
    <location>
        <position position="178"/>
    </location>
</feature>
<feature type="sequence variant" id="VAR_082782" description="In allele DRB1*10:01; dbSNP:rs3205588." evidence="59">
    <original>R</original>
    <variation>Q</variation>
    <location>
        <position position="195"/>
    </location>
</feature>
<feature type="sequence variant" id="VAR_082783" description="In allele DRB1*04:01, allele DRB1*04:02, allele DRB1*04:04, allele DRB1*04:05, allele DRB1*04:06, allele DRB1*04:07, allele DRB1*04:08, allele DRB1*04:10 and allele DRB1*04:11; dbSNP:rs111739605." evidence="8 11 17 25 48 58 72">
    <original>V</original>
    <variation>L</variation>
    <location>
        <position position="209"/>
    </location>
</feature>
<feature type="sequence variant" id="VAR_082784" description="In allele DRB1*07:01, allele DRB1*09:01 and allele DRB1*10:01." evidence="14 50 59 70">
    <original>T</original>
    <variation>M</variation>
    <location>
        <position position="210"/>
    </location>
</feature>
<feature type="sequence variant" id="VAR_082785" description="In allele DRB1*08:01, allele DRB1*08:02, allele DRB1*08:03 and allele DRB1*08:04; dbSNP:rs1136881." evidence="17 25 36 74">
    <original>R</original>
    <variation>S</variation>
    <location>
        <position position="218"/>
    </location>
</feature>
<feature type="sequence variant" id="VAR_082786" description="In allele DRB1*10:01; dbSNP:rs17887154." evidence="59">
    <original>Q</original>
    <variation>P</variation>
    <location>
        <position position="260"/>
    </location>
</feature>
<feature type="sequence variant" id="VAR_082787" description="In allele DRB1*03:01, allele DRB1*03:02, allele DRB1*11:01, allele DRB1*11:04, allele DRB1*11:06, allele DRB1*11:11, allele DRB1*11:19, allele DRB1*12:01, allele DRB1*12:02, allele DRB1*13:01, allele DRB1*13:02, allele DRB1*13:03, allele DRB1*13:05, allele DRB1*13:07, allele DRB1*13:12, allele DRB1*14:01, allele DRB1*14:03, allele DRB1*14:05, allele DRB1*14:06 and allele DRB1*14:07; dbSNP:rs9269744." evidence="6 7 8 9 12 14 15 16 17 25 39 48 56 59 73 74 75">
    <original>T</original>
    <variation>R</variation>
    <location>
        <position position="262"/>
    </location>
</feature>
<feature type="mutagenesis site" description="Decreases the interaction with CD4; when assocated with A-172." evidence="41">
    <original>E</original>
    <variation>A</variation>
    <location>
        <position position="166"/>
    </location>
</feature>
<feature type="mutagenesis site" description="Decreases the interaction with CD4; when assocated with A-166." evidence="41">
    <original>V</original>
    <variation>A</variation>
    <location>
        <position position="172"/>
    </location>
</feature>
<feature type="mutagenesis site" description="Decreases the interaction with CD4." evidence="41">
    <original>I</original>
    <variation>R</variation>
    <location>
        <position position="177"/>
    </location>
</feature>
<feature type="mutagenesis site" description="Reduces the interaction with HLA-DM complex that results in impaired dissociation of CLIP from MHCII." evidence="3 32">
    <original>D</original>
    <variation>N</variation>
    <location>
        <position position="181"/>
    </location>
</feature>
<feature type="mutagenesis site" description="Decreases the interaction with CD4." evidence="41">
    <original>L</original>
    <variation>R</variation>
    <location>
        <position position="187"/>
    </location>
</feature>
<feature type="mutagenesis site" description="Reduces the interaction with HLA-DM complex that results in impaired dissociation of CLIP from MHCII." evidence="3 32">
    <original>L</original>
    <variation>H</variation>
    <location>
        <position position="213"/>
    </location>
</feature>
<feature type="mutagenesis site" description="Reduces the interaction with HLA-DM complex that results in impaired dissociation of CLIP from MHCII." evidence="3 32">
    <original>E</original>
    <variation>K</variation>
    <location>
        <position position="216"/>
    </location>
</feature>
<feature type="mutagenesis site" description="Impairs MARCHF1-dependent down-regulation through ubiquitination." evidence="20">
    <original>K</original>
    <variation>A</variation>
    <location>
        <position position="254"/>
    </location>
</feature>
<feature type="strand" evidence="83">
    <location>
        <begin position="36"/>
        <end position="47"/>
    </location>
</feature>
<feature type="turn" evidence="83">
    <location>
        <begin position="48"/>
        <end position="51"/>
    </location>
</feature>
<feature type="strand" evidence="83">
    <location>
        <begin position="52"/>
        <end position="61"/>
    </location>
</feature>
<feature type="strand" evidence="83">
    <location>
        <begin position="64"/>
        <end position="70"/>
    </location>
</feature>
<feature type="turn" evidence="83">
    <location>
        <begin position="71"/>
        <end position="73"/>
    </location>
</feature>
<feature type="strand" evidence="83">
    <location>
        <begin position="75"/>
        <end position="80"/>
    </location>
</feature>
<feature type="helix" evidence="83">
    <location>
        <begin position="81"/>
        <end position="83"/>
    </location>
</feature>
<feature type="helix" evidence="83">
    <location>
        <begin position="84"/>
        <end position="91"/>
    </location>
</feature>
<feature type="helix" evidence="83">
    <location>
        <begin position="94"/>
        <end position="106"/>
    </location>
</feature>
<feature type="helix" evidence="83">
    <location>
        <begin position="108"/>
        <end position="115"/>
    </location>
</feature>
<feature type="helix" evidence="83">
    <location>
        <begin position="116"/>
        <end position="118"/>
    </location>
</feature>
<feature type="turn" evidence="83">
    <location>
        <begin position="119"/>
        <end position="121"/>
    </location>
</feature>
<feature type="strand" evidence="83">
    <location>
        <begin position="127"/>
        <end position="134"/>
    </location>
</feature>
<feature type="strand" evidence="82">
    <location>
        <begin position="135"/>
        <end position="139"/>
    </location>
</feature>
<feature type="strand" evidence="83">
    <location>
        <begin position="142"/>
        <end position="154"/>
    </location>
</feature>
<feature type="strand" evidence="83">
    <location>
        <begin position="157"/>
        <end position="162"/>
    </location>
</feature>
<feature type="strand" evidence="83">
    <location>
        <begin position="165"/>
        <end position="167"/>
    </location>
</feature>
<feature type="strand" evidence="83">
    <location>
        <begin position="171"/>
        <end position="173"/>
    </location>
</feature>
<feature type="strand" evidence="83">
    <location>
        <begin position="180"/>
        <end position="182"/>
    </location>
</feature>
<feature type="strand" evidence="83">
    <location>
        <begin position="184"/>
        <end position="192"/>
    </location>
</feature>
<feature type="strand" evidence="85">
    <location>
        <begin position="196"/>
        <end position="198"/>
    </location>
</feature>
<feature type="strand" evidence="83">
    <location>
        <begin position="199"/>
        <end position="205"/>
    </location>
</feature>
<feature type="strand" evidence="84">
    <location>
        <begin position="209"/>
        <end position="211"/>
    </location>
</feature>
<feature type="strand" evidence="83">
    <location>
        <begin position="213"/>
        <end position="218"/>
    </location>
</feature>
<organism>
    <name type="scientific">Homo sapiens</name>
    <name type="common">Human</name>
    <dbReference type="NCBI Taxonomy" id="9606"/>
    <lineage>
        <taxon>Eukaryota</taxon>
        <taxon>Metazoa</taxon>
        <taxon>Chordata</taxon>
        <taxon>Craniata</taxon>
        <taxon>Vertebrata</taxon>
        <taxon>Euteleostomi</taxon>
        <taxon>Mammalia</taxon>
        <taxon>Eutheria</taxon>
        <taxon>Euarchontoglires</taxon>
        <taxon>Primates</taxon>
        <taxon>Haplorrhini</taxon>
        <taxon>Catarrhini</taxon>
        <taxon>Hominidae</taxon>
        <taxon>Homo</taxon>
    </lineage>
</organism>
<keyword id="KW-0002">3D-structure</keyword>
<keyword id="KW-1064">Adaptive immunity</keyword>
<keyword id="KW-1003">Cell membrane</keyword>
<keyword id="KW-0968">Cytoplasmic vesicle</keyword>
<keyword id="KW-0903">Direct protein sequencing</keyword>
<keyword id="KW-1015">Disulfide bond</keyword>
<keyword id="KW-0256">Endoplasmic reticulum</keyword>
<keyword id="KW-0967">Endosome</keyword>
<keyword id="KW-0325">Glycoprotein</keyword>
<keyword id="KW-0391">Immunity</keyword>
<keyword id="KW-1017">Isopeptide bond</keyword>
<keyword id="KW-0458">Lysosome</keyword>
<keyword id="KW-0472">Membrane</keyword>
<keyword id="KW-0491">MHC II</keyword>
<keyword id="KW-1267">Proteomics identification</keyword>
<keyword id="KW-1185">Reference proteome</keyword>
<keyword id="KW-0732">Signal</keyword>
<keyword id="KW-0812">Transmembrane</keyword>
<keyword id="KW-1133">Transmembrane helix</keyword>
<keyword id="KW-0832">Ubl conjugation</keyword>
<evidence type="ECO:0000250" key="1">
    <source>
        <dbReference type="UniProtKB" id="P20039"/>
    </source>
</evidence>
<evidence type="ECO:0000255" key="2"/>
<evidence type="ECO:0000269" key="3">
    <source>
    </source>
</evidence>
<evidence type="ECO:0000269" key="4">
    <source>
    </source>
</evidence>
<evidence type="ECO:0000269" key="5">
    <source>
    </source>
</evidence>
<evidence type="ECO:0000269" key="6">
    <source>
    </source>
</evidence>
<evidence type="ECO:0000269" key="7">
    <source>
    </source>
</evidence>
<evidence type="ECO:0000269" key="8">
    <source>
    </source>
</evidence>
<evidence type="ECO:0000269" key="9">
    <source>
    </source>
</evidence>
<evidence type="ECO:0000269" key="10">
    <source>
    </source>
</evidence>
<evidence type="ECO:0000269" key="11">
    <source>
    </source>
</evidence>
<evidence type="ECO:0000269" key="12">
    <source>
    </source>
</evidence>
<evidence type="ECO:0000269" key="13">
    <source>
    </source>
</evidence>
<evidence type="ECO:0000269" key="14">
    <source>
    </source>
</evidence>
<evidence type="ECO:0000269" key="15">
    <source>
    </source>
</evidence>
<evidence type="ECO:0000269" key="16">
    <source>
    </source>
</evidence>
<evidence type="ECO:0000269" key="17">
    <source>
    </source>
</evidence>
<evidence type="ECO:0000269" key="18">
    <source>
    </source>
</evidence>
<evidence type="ECO:0000269" key="19">
    <source>
    </source>
</evidence>
<evidence type="ECO:0000269" key="20">
    <source>
    </source>
</evidence>
<evidence type="ECO:0000269" key="21">
    <source>
    </source>
</evidence>
<evidence type="ECO:0000269" key="22">
    <source>
    </source>
</evidence>
<evidence type="ECO:0000269" key="23">
    <source>
    </source>
</evidence>
<evidence type="ECO:0000269" key="24">
    <source>
    </source>
</evidence>
<evidence type="ECO:0000269" key="25">
    <source>
    </source>
</evidence>
<evidence type="ECO:0000269" key="26">
    <source>
    </source>
</evidence>
<evidence type="ECO:0000269" key="27">
    <source>
    </source>
</evidence>
<evidence type="ECO:0000269" key="28">
    <source>
    </source>
</evidence>
<evidence type="ECO:0000269" key="29">
    <source>
    </source>
</evidence>
<evidence type="ECO:0000269" key="30">
    <source>
    </source>
</evidence>
<evidence type="ECO:0000269" key="31">
    <source>
    </source>
</evidence>
<evidence type="ECO:0000269" key="32">
    <source>
    </source>
</evidence>
<evidence type="ECO:0000269" key="33">
    <source>
    </source>
</evidence>
<evidence type="ECO:0000269" key="34">
    <source>
    </source>
</evidence>
<evidence type="ECO:0000269" key="35">
    <source>
    </source>
</evidence>
<evidence type="ECO:0000269" key="36">
    <source>
    </source>
</evidence>
<evidence type="ECO:0000269" key="37">
    <source>
    </source>
</evidence>
<evidence type="ECO:0000269" key="38">
    <source>
    </source>
</evidence>
<evidence type="ECO:0000269" key="39">
    <source>
    </source>
</evidence>
<evidence type="ECO:0000269" key="40">
    <source>
    </source>
</evidence>
<evidence type="ECO:0000269" key="41">
    <source>
    </source>
</evidence>
<evidence type="ECO:0000269" key="42">
    <source>
    </source>
</evidence>
<evidence type="ECO:0000269" key="43">
    <source>
    </source>
</evidence>
<evidence type="ECO:0000269" key="44">
    <source>
    </source>
</evidence>
<evidence type="ECO:0000269" key="45">
    <source>
    </source>
</evidence>
<evidence type="ECO:0000269" key="46">
    <source>
    </source>
</evidence>
<evidence type="ECO:0000269" key="47">
    <source>
    </source>
</evidence>
<evidence type="ECO:0000269" key="48">
    <source>
    </source>
</evidence>
<evidence type="ECO:0000269" key="49">
    <source>
    </source>
</evidence>
<evidence type="ECO:0000269" key="50">
    <source>
    </source>
</evidence>
<evidence type="ECO:0000269" key="51">
    <source>
    </source>
</evidence>
<evidence type="ECO:0000269" key="52">
    <source>
    </source>
</evidence>
<evidence type="ECO:0000269" key="53">
    <source>
    </source>
</evidence>
<evidence type="ECO:0000269" key="54">
    <source>
    </source>
</evidence>
<evidence type="ECO:0000269" key="55">
    <source>
    </source>
</evidence>
<evidence type="ECO:0000269" key="56">
    <source>
    </source>
</evidence>
<evidence type="ECO:0000269" key="57">
    <source>
    </source>
</evidence>
<evidence type="ECO:0000269" key="58">
    <source>
    </source>
</evidence>
<evidence type="ECO:0000269" key="59">
    <source>
    </source>
</evidence>
<evidence type="ECO:0000269" key="60">
    <source>
    </source>
</evidence>
<evidence type="ECO:0000269" key="61">
    <source>
    </source>
</evidence>
<evidence type="ECO:0000269" key="62">
    <source>
    </source>
</evidence>
<evidence type="ECO:0000269" key="63">
    <source>
    </source>
</evidence>
<evidence type="ECO:0000269" key="64">
    <source>
    </source>
</evidence>
<evidence type="ECO:0000269" key="65">
    <source>
    </source>
</evidence>
<evidence type="ECO:0000269" key="66">
    <source>
    </source>
</evidence>
<evidence type="ECO:0000269" key="67">
    <source>
    </source>
</evidence>
<evidence type="ECO:0000269" key="68">
    <source>
    </source>
</evidence>
<evidence type="ECO:0000269" key="69">
    <source>
    </source>
</evidence>
<evidence type="ECO:0000269" key="70">
    <source>
    </source>
</evidence>
<evidence type="ECO:0000269" key="71">
    <source>
    </source>
</evidence>
<evidence type="ECO:0000269" key="72">
    <source ref="23"/>
</evidence>
<evidence type="ECO:0000269" key="73">
    <source ref="24"/>
</evidence>
<evidence type="ECO:0000269" key="74">
    <source ref="25"/>
</evidence>
<evidence type="ECO:0000269" key="75">
    <source ref="26"/>
</evidence>
<evidence type="ECO:0000305" key="76">
    <source>
    </source>
</evidence>
<evidence type="ECO:0000305" key="77">
    <source>
    </source>
</evidence>
<evidence type="ECO:0000305" key="78">
    <source>
    </source>
</evidence>
<evidence type="ECO:0000312" key="79">
    <source>
        <dbReference type="HGNC" id="HGNC:4948"/>
    </source>
</evidence>
<evidence type="ECO:0007744" key="80">
    <source>
        <dbReference type="PDB" id="6BIV"/>
    </source>
</evidence>
<evidence type="ECO:0007744" key="81">
    <source>
        <dbReference type="PDB" id="6BIX"/>
    </source>
</evidence>
<evidence type="ECO:0007829" key="82">
    <source>
        <dbReference type="PDB" id="3PDO"/>
    </source>
</evidence>
<evidence type="ECO:0007829" key="83">
    <source>
        <dbReference type="PDB" id="5NI9"/>
    </source>
</evidence>
<evidence type="ECO:0007829" key="84">
    <source>
        <dbReference type="PDB" id="6CPO"/>
    </source>
</evidence>
<evidence type="ECO:0007829" key="85">
    <source>
        <dbReference type="PDB" id="6V13"/>
    </source>
</evidence>
<name>DRB1_HUMAN</name>
<gene>
    <name evidence="79" type="primary">HLA-DRB1</name>
</gene>
<accession>P01911</accession>
<accession>A0MWF2</accession>
<accession>A0N0W1</accession>
<accession>A2ICT1</accession>
<accession>A2TGX3</accession>
<accession>A4F5N0</accession>
<accession>A4ZXA5</accession>
<accession>A4ZXA6</accession>
<accession>A4ZY86</accession>
<accession>A5H000</accession>
<accession>A5HKN8</accession>
<accession>A7DZP9</accession>
<accession>A7LA26</accession>
<accession>A7UHG2</accession>
<accession>A7X5B1</accession>
<accession>A7X5B7</accession>
<accession>A7X5E0</accession>
<accession>A7X5E6</accession>
<accession>A7X5H8</accession>
<accession>A7X5J4</accession>
<accession>A7X5K7</accession>
<accession>A8K098</accession>
<accession>A8YQE9</accession>
<accession>A9JPG0</accession>
<accession>B0BK85</accession>
<accession>B0LUZ6</accession>
<accession>B0UYW1</accession>
<accession>B1GWE7</accession>
<accession>B2CR03</accession>
<accession>B2LVF9</accession>
<accession>B2NJ29</accession>
<accession>B2ZCY1</accession>
<accession>B3VTP8</accession>
<accession>B3VTQ3</accession>
<accession>B5A8Y2</accession>
<accession>B5A8Y3</accession>
<accession>B5B8U0</accession>
<accession>B5B9V5</accession>
<accession>B5B9V6</accession>
<accession>B5LZ25</accession>
<accession>B5QSK8</accession>
<accession>B6VCX2</accession>
<accession>B6VEL9</accession>
<accession>B7UDB2</accession>
<accession>B9VRA4</accession>
<accession>B9X248</accession>
<accession>C0LAB5</accession>
<accession>O02876</accession>
<accession>O02930</accession>
<accession>O19585</accession>
<accession>O19717</accession>
<accession>O19718</accession>
<accession>O19739</accession>
<accession>O19788</accession>
<accession>O46699</accession>
<accession>O46793</accession>
<accession>O46872</accession>
<accession>O62869</accession>
<accession>O62889</accession>
<accession>O77969</accession>
<accession>O78047</accession>
<accession>O78210</accession>
<accession>O98212</accession>
<accession>P01912</accession>
<accession>P01914</accession>
<accession>P04229</accession>
<accession>P13758</accession>
<accession>P13759</accession>
<accession>P13760</accession>
<accession>P13761</accession>
<accession>P20039</accession>
<accession>P79545</accession>
<accession>Q06662</accession>
<accession>Q0PGR5</accession>
<accession>Q0PQ39</accession>
<accession>Q14280</accession>
<accession>Q14QT2</accession>
<accession>Q155F7</accession>
<accession>Q19AF2</accession>
<accession>Q19K86</accession>
<accession>Q1AP33</accession>
<accession>Q1G0Z9</accession>
<accession>Q1JRP3</accession>
<accession>Q1KLJ6</accession>
<accession>Q27PR6</accession>
<accession>Q27PR7</accession>
<accession>Q29673</accession>
<accession>Q29720</accession>
<accession>Q29722</accession>
<accession>Q29734</accession>
<accession>Q29770</accession>
<accession>Q29771</accession>
<accession>Q29772</accession>
<accession>Q29790</accession>
<accession>Q29792</accession>
<accession>Q29800</accession>
<accession>Q29806</accession>
<accession>Q29833</accession>
<accession>Q29874</accession>
<accession>Q29875</accession>
<accession>Q29886</accession>
<accession>Q29968</accession>
<accession>Q29974</accession>
<accession>Q29975</accession>
<accession>Q2A120</accession>
<accession>Q2HZE5</accession>
<accession>Q2L9H4</accession>
<accession>Q2LE76</accession>
<accession>Q2MF40</accession>
<accession>Q2MJA6</accession>
<accession>Q2MZ92</accession>
<accession>Q2VQU1</accession>
<accession>Q2YHQ2</accession>
<accession>Q30006</accession>
<accession>Q30108</accession>
<accession>Q30112</accession>
<accession>Q30115</accession>
<accession>Q30116</accession>
<accession>Q30117</accession>
<accession>Q30120</accession>
<accession>Q30134</accession>
<accession>Q30142</accession>
<accession>Q30145</accession>
<accession>Q30149</accession>
<accession>Q30159</accession>
<accession>Q30166</accession>
<accession>Q30167</accession>
<accession>Q30200</accession>
<accession>Q307W5</accession>
<accession>Q31636</accession>
<accession>Q32MY7</accession>
<accession>Q3HUP9</accession>
<accession>Q3KTM1</accession>
<accession>Q3LA84</accession>
<accession>Q3LA87</accession>
<accession>Q3LA88</accession>
<accession>Q3LA89</accession>
<accession>Q3LA90</accession>
<accession>Q3LA91</accession>
<accession>Q3LA92</accession>
<accession>Q3LA93</accession>
<accession>Q3LA94</accession>
<accession>Q3LA95</accession>
<accession>Q3LA96</accession>
<accession>Q3LA97</accession>
<accession>Q3LA98</accession>
<accession>Q3LA99</accession>
<accession>Q3LAA0</accession>
<accession>Q3LAA1</accession>
<accession>Q3LAA2</accession>
<accession>Q3MQ60</accession>
<accession>Q3T919</accession>
<accession>Q4PRC3</accession>
<accession>Q4PRC5</accession>
<accession>Q4VZY7</accession>
<accession>Q53IG1</accession>
<accession>Q56FN9</accession>
<accession>Q56FP1</accession>
<accession>Q56FP2</accession>
<accession>Q56FP3</accession>
<accession>Q58F52</accession>
<accession>Q5BM92</accession>
<accession>Q5EER6</accession>
<accession>Q5K3W2</accession>
<accession>Q5NDB9</accession>
<accession>Q5U9W6</accession>
<accession>Q5UBA2</accession>
<accession>Q5UT58</accession>
<accession>Q5W3L4</accession>
<accession>Q5Y7A7</accession>
<accession>Q5Y7B0</accession>
<accession>Q5Y7B9</accession>
<accession>Q5Y7E9</accession>
<accession>Q5Y7G0</accession>
<accession>Q683P7</accession>
<accession>Q6REE2</accession>
<accession>Q6T865</accession>
<accession>Q6U387</accession>
<accession>Q701T1</accession>
<accession>Q70GL2</accession>
<accession>Q70Q85</accession>
<accession>Q768U2</accession>
<accession>Q768U4</accession>
<accession>Q7M2H4</accession>
<accession>Q7YNY9</accession>
<accession>Q7YP03</accession>
<accession>Q7YP04</accession>
<accession>Q7YQ26</accession>
<accession>Q7YQA3</accession>
<accession>Q7YQA5</accession>
<accession>Q860D8</accession>
<accession>Q860D9</accession>
<accession>Q860E5</accession>
<accession>Q860H8</accession>
<accession>Q860S0</accession>
<accession>Q860Z3</accession>
<accession>Q861G6</accession>
<accession>Q861H0</accession>
<accession>Q861H4</accession>
<accession>Q861H5</accession>
<accession>Q861H7</accession>
<accession>Q861H8</accession>
<accession>Q8HWQ6</accession>
<accession>Q8MH59</accession>
<accession>Q8MH60</accession>
<accession>Q8WLU3</accession>
<accession>Q8WMA0</accession>
<accession>Q95348</accession>
<accession>Q95383</accession>
<accession>Q95389</accession>
<accession>Q95461</accession>
<accession>Q95HK1</accession>
<accession>Q95HL0</accession>
<accession>Q95HL1</accession>
<accession>Q95IE3</accession>
<accession>Q95IG2</accession>
<accession>Q95IT6</accession>
<accession>Q96HZ9</accession>
<accession>Q9BCL7</accession>
<accession>Q9BCP0</accession>
<accession>Q9BCP1</accession>
<accession>Q9BCP2</accession>
<accession>Q9BCP5</accession>
<accession>Q9BD21</accession>
<accession>Q9BD33</accession>
<accession>Q9BD40</accession>
<accession>Q9GIK5</accession>
<accession>Q9GIL5</accession>
<accession>Q9GIL6</accession>
<accession>Q9GIP3</accession>
<accession>Q9GIX8</accession>
<accession>Q9GIX9</accession>
<accession>Q9GIY0</accession>
<accession>Q9GIY1</accession>
<accession>Q9GIY2</accession>
<accession>Q9GIY3</accession>
<accession>Q9GIY4</accession>
<accession>Q9GJ25</accession>
<accession>Q9GJ56</accession>
<accession>Q9GJ57</accession>
<accession>Q9GJ58</accession>
<accession>Q9GJ60</accession>
<accession>Q9GJF8</accession>
<accession>Q9GJF9</accession>
<accession>Q9GJG0</accession>
<accession>Q9MXZ0</accession>
<accession>Q9MXZ5</accession>
<accession>Q9MY13</accession>
<accession>Q9MY45</accession>
<accession>Q9MY56</accession>
<accession>Q9MYF5</accession>
<accession>Q9TPB6</accession>
<accession>Q9TPW1</accession>
<accession>Q9TPW3</accession>
<accession>Q9TPW9</accession>
<accession>Q9TPX4</accession>
<accession>Q9TQ37</accession>
<accession>Q9TQ91</accession>
<accession>Q9TQE0</accession>
<accession>Q9UBY1</accession>
<accession>Q9UIM9</accession>
<accession>Q9UIN0</accession>
<accession>Q9XRX1</accession>
<accession>Q9XRY4</accession>
<accession>Q9XRY5</accession>
<accession>Q9Y453</accession>
<accession>Q9Y4H7</accession>
<reference key="1">
    <citation type="journal article" date="1984" name="EMBO J.">
        <title>Mutations and selection in the generation of class II histocompatibility antigen polymorphism.</title>
        <authorList>
            <person name="Peterson P.A."/>
            <person name="Gustafsson K."/>
            <person name="Wiman K.G."/>
            <person name="Emmoth E."/>
            <person name="Larhammar D."/>
            <person name="Boehme J."/>
            <person name="Hyldig-Nielsen J.J."/>
            <person name="Ronne H."/>
            <person name="Rask L."/>
        </authorList>
    </citation>
    <scope>NUCLEOTIDE SEQUENCE [MRNA] (ALLELES DRB1*03:01 AND DRB1*10:01)</scope>
</reference>
<reference key="2">
    <citation type="journal article" date="1985" name="EMBO J.">
        <title>DO beta: a new beta chain gene in HLA-D with a distinct regulation of expression.</title>
        <authorList>
            <person name="Tonnelle C."/>
            <person name="Demars R."/>
            <person name="Long E.O."/>
        </authorList>
    </citation>
    <scope>NUCLEOTIDE SEQUENCE [MRNA] (ALLELE DRB1*01:01)</scope>
</reference>
<reference key="3">
    <citation type="journal article" date="1985" name="Nature">
        <title>Sequence polymorphism of HLA DR beta 1 alleles relating to T-cell-recognized determinants.</title>
        <authorList>
            <person name="Cairns J.S."/>
            <person name="Curtsinger J.M."/>
            <person name="Dahl C.A."/>
            <person name="Freeman S."/>
            <person name="Alter B.J."/>
            <person name="Bach F.H."/>
        </authorList>
    </citation>
    <scope>NUCLEOTIDE SEQUENCE [MRNA] (ALLELE DRB1*04:04)</scope>
</reference>
<reference key="4">
    <citation type="journal article" date="1986" name="J. Biol. Chem.">
        <title>Complete characterization and sequence of an HLA class II DR beta chain cDNA from the DR5 haplotype.</title>
        <authorList>
            <person name="Tieber V.L."/>
            <person name="Abruzzini L.F."/>
            <person name="Didier D.K."/>
            <person name="Schwartz B.D."/>
            <person name="Rotwein P."/>
        </authorList>
    </citation>
    <scope>NUCLEOTIDE SEQUENCE [MRNA] (ALLELE DRB1*11:01)</scope>
</reference>
<reference key="5">
    <citation type="journal article" date="1987" name="J. Immunol.">
        <title>cDNA cloning and sequencing reveals that the electrophoretically constant DR beta 2 molecules, as well as the variable DR beta 1 molecules, from HLA-DR2 subtypes have different amino acid sequences including a hypervariable region for a functionally important epitope.</title>
        <authorList>
            <person name="Wu S.K."/>
            <person name="Yabe T."/>
            <person name="Madden M."/>
            <person name="Saunders T.L."/>
            <person name="Bach F.H."/>
        </authorList>
    </citation>
    <scope>NUCLEOTIDE SEQUENCE [MRNA] OF 11-266 (ALLELE DRB1*15:02)</scope>
    <scope>NUCLEOTIDE SEQUENCE [MRNA] (ALLELE DRB1*16:01)</scope>
</reference>
<reference key="6">
    <citation type="journal article" date="1987" name="Proc. Natl. Acad. Sci. U.S.A.">
        <title>HLA-DR2 subtypes form an additional supertypic family of DR beta alleles.</title>
        <authorList>
            <person name="Lee B.S.M."/>
            <person name="Rust N.A."/>
            <person name="McMichael A.J."/>
            <person name="McDevitt H.O."/>
        </authorList>
    </citation>
    <scope>NUCLEOTIDE SEQUENCE [MRNA] OF 30-266 (ALLELE DRB1*15:01)</scope>
    <scope>NUCLEOTIDE SEQUENCE [MRNA] OF 30-266 (ALLELE DRB1*16:01)</scope>
    <source>
        <tissue>Lymphoblast</tissue>
    </source>
</reference>
<reference key="7">
    <citation type="journal article" date="1987" name="Proc. Natl. Acad. Sci. U.S.A.">
        <title>Sequence and evolution of HLA-DR7- and -DRw53-associated beta-chain genes.</title>
        <authorList>
            <person name="Young J.A.T."/>
            <person name="Wilkinson D."/>
            <person name="Bodmer W.F."/>
            <person name="Trowsdale J."/>
        </authorList>
    </citation>
    <scope>NUCLEOTIDE SEQUENCE [MRNA] (ALLELE DRB1*07:01)</scope>
</reference>
<reference key="8">
    <citation type="journal article" date="1988" name="Immunogenetics">
        <title>MHC class II sequences of an HLA-DR2 narcoleptic.</title>
        <authorList>
            <person name="Lock C.B."/>
            <person name="So A.K."/>
            <person name="Welsh K.I."/>
            <person name="Parkes J.D."/>
            <person name="Trowsdale J."/>
        </authorList>
    </citation>
    <scope>NUCLEOTIDE SEQUENCE [MRNA] (ALLELE DRB1*15:01)</scope>
    <source>
        <tissue>B-cell</tissue>
    </source>
</reference>
<reference key="9">
    <citation type="journal article" date="1988" name="J. Immunol.">
        <title>Molecular studies of a rare DR2/LD-5a/DQw3 HLA class II haplotype. Multiple genetic mechanisms in the generation of polymorphic HLA class II genes.</title>
        <authorList>
            <person name="Liu C.P."/>
            <person name="Bach F.H."/>
            <person name="Wu S.K."/>
        </authorList>
    </citation>
    <scope>NUCLEOTIDE SEQUENCE [MRNA] (ALLELE DRB1*16:02)</scope>
</reference>
<reference key="10">
    <citation type="journal article" date="1989" name="Immunogenetics">
        <title>A cellular and functional split in the DRw8 haplotype is due to a single amino acid replacement (DR beta ser 57- asp 57).</title>
        <authorList>
            <person name="Jonsson A.K."/>
            <person name="Andersson L."/>
            <person name="Rask L."/>
        </authorList>
    </citation>
    <scope>NUCLEOTIDE SEQUENCE [MRNA] (ALLELE DRB1*08:02)</scope>
</reference>
<reference key="11">
    <citation type="journal article" date="1998" name="Eur. J. Immunogenet.">
        <title>Complete cDNA sequence of the HLA-DRB1*09012 allele.</title>
        <authorList>
            <person name="Martinez-Quiles N."/>
            <person name="Martin-Villa J.M."/>
            <person name="Ferre-Lopez S."/>
            <person name="Moreno-Pelayo M.A."/>
            <person name="Martinez-Laso J."/>
            <person name="Perez-Blas M."/>
            <person name="Alegre R."/>
            <person name="Arnaiz-Villena A."/>
        </authorList>
    </citation>
    <scope>NUCLEOTIDE SEQUENCE [MRNA] (ALLELE DRB1*09:01)</scope>
    <source>
        <tissue>Blood</tissue>
    </source>
</reference>
<reference key="12">
    <citation type="journal article" date="2002" name="DNA Seq.">
        <title>Complete cDNA coding sequence of the HLA-DRB1*1405 allele.</title>
        <authorList>
            <person name="Kohsaka H."/>
            <person name="Nasu K."/>
            <person name="Matsushita S."/>
            <person name="Miyasaka N."/>
        </authorList>
    </citation>
    <scope>NUCLEOTIDE SEQUENCE [MRNA] (ALLELE DRB1*14:05)</scope>
</reference>
<reference key="13">
    <citation type="journal article" date="2002" name="Eur. J. Immunogenet.">
        <title>Complete cDNA sequences of the HLA-DRB1*0402 and DRB1*11041 alleles.</title>
        <authorList>
            <person name="Ramon D."/>
            <person name="Corell A."/>
            <person name="Cox S.T."/>
            <person name="Soteriou B."/>
            <person name="Madrigal J.A."/>
            <person name="Marsh S.G.E."/>
        </authorList>
    </citation>
    <scope>NUCLEOTIDE SEQUENCE [MRNA] (ALLELES DRB1*04:02 AND DRB1*11:04)</scope>
</reference>
<reference key="14">
    <citation type="journal article" date="2002" name="Tissue Antigens">
        <title>Complete cDNA sequences of the HLA-DRB1*14011, *1402, *1403 and *1404 alleles.</title>
        <authorList>
            <person name="Corell A."/>
            <person name="Cox S.T."/>
            <person name="Soteriou B."/>
            <person name="Ramon D."/>
            <person name="Madrigal J.A."/>
            <person name="Marsh S.G.E."/>
        </authorList>
    </citation>
    <scope>NUCLEOTIDE SEQUENCE [MRNA] (ALLELE DRB1*14:01)</scope>
    <scope>NUCLEOTIDE SEQUENCE [MRNA] OF 1-264 (ALLELE DRB1*14:03)</scope>
</reference>
<reference key="15">
    <citation type="journal article" date="2002" name="Tissue Antigens">
        <title>Sequence of a new DR12 allele with two silent mutations that affect PCR-SSP typing.</title>
        <authorList>
            <person name="Zanone R."/>
            <person name="Bettens F."/>
            <person name="Tiercy J.M."/>
        </authorList>
    </citation>
    <scope>NUCLEOTIDE SEQUENCE [MRNA] (ALLELE DRB1*12:01)</scope>
</reference>
<reference key="16">
    <citation type="journal article" date="2005" name="Tissue Antigens">
        <title>Complete coding sequences and haplotypic associations of HLA-B*0707, -B*1524, -B*4405, -B*4802, -DRB1*0409, -DRB1*0411, -DRB1*1115, - DRB1*1305, and the novel allele -DRB1*0709. Group-specific amplification of cDNA from DRB1 alleles associated to DRB3 and DRB4.</title>
        <authorList>
            <person name="Vilches C."/>
            <person name="Sepulveda S."/>
            <person name="Balas A."/>
            <person name="Solis R."/>
            <person name="Aviles M.J."/>
            <person name="Estefania E."/>
            <person name="Gomez-Lozano N."/>
            <person name="Vicario J.L."/>
            <person name="DePablo R."/>
        </authorList>
    </citation>
    <scope>NUCLEOTIDE SEQUENCE [MRNA] (ALLELE DRB1*13:05)</scope>
</reference>
<reference key="17">
    <citation type="journal article" date="2006" name="Hum. Immunol.">
        <title>Group-specific amplification of cDNA from DRB1 genes. Complete coding sequences of partially defined alleles and identification of the new alleles DRB1*040602, DRB1*111102, DRB1*080103, and DRB1*0113.</title>
        <authorList>
            <person name="Balas A."/>
            <person name="Vilches C."/>
            <person name="Rodriguez M.A."/>
            <person name="Fernandez B."/>
            <person name="Martinez M.P."/>
            <person name="de Pablo R."/>
            <person name="Garcia-Sanchez F."/>
            <person name="Vicario J.L."/>
        </authorList>
    </citation>
    <scope>NUCLEOTIDE SEQUENCE [MRNA] (ALLELES DRB1*04:07; DRB1*04:08; DRB1*04:10; DRB1*08:01; DRB1*11:11 AND DRB1*15:03)</scope>
</reference>
<reference key="18">
    <citation type="journal article" date="2011" name="Tissue Antigens">
        <title>Analysis of the complete cDNA sequences of HLA-DRB1 alleles with group-specific amplification primers in the Chinese Han population.</title>
        <authorList>
            <person name="Zhu F."/>
            <person name="He Y."/>
            <person name="Tao S."/>
            <person name="Zhang W."/>
            <person name="He J."/>
            <person name="He J."/>
            <person name="Xu X."/>
            <person name="Lv H."/>
            <person name="Yan L."/>
        </authorList>
    </citation>
    <scope>NUCLEOTIDE SEQUENCE [MRNA] (ALLELES DRB1*04:01; DRB1*04:05; DRB1*04:06; DRB1*08:03; DRB1*12:02; DRB1*13:12 AND DRB1*15:02)</scope>
</reference>
<reference key="19">
    <citation type="journal article" date="2015" name="Tissue Antigens">
        <title>Full-length HLA-DRB1 coding sequences generated by a hemizygous RNA-SBT approach.</title>
        <authorList>
            <person name="Gerritsen K.E."/>
            <person name="Groeneweg M."/>
            <person name="Meertens C.M."/>
            <person name="Voorter C.E."/>
            <person name="Tilanus M.G."/>
        </authorList>
    </citation>
    <scope>NUCLEOTIDE SEQUENCE [MRNA] (ALLELES DRB1*11:06; DRB1*11:19 AND DRB1*13:03)</scope>
</reference>
<reference key="20">
    <citation type="journal article" date="2018" name="Front. Immunol.">
        <title>Reference Grade Characterization of Polymorphisms in Full-Length HLA Class I and II Genes With Short-Read Sequencing on the ION PGM System and Long-Reads Generated by Single Molecule, Real-Time Sequencing on the PacBio Platform.</title>
        <authorList>
            <person name="Suzuki S."/>
            <person name="Ranade S."/>
            <person name="Osaki K."/>
            <person name="Ito S."/>
            <person name="Shigenari A."/>
            <person name="Ohnuki Y."/>
            <person name="Oka A."/>
            <person name="Masuya A."/>
            <person name="Harting J."/>
            <person name="Baybayan P."/>
            <person name="Kitazume M."/>
            <person name="Sunaga J."/>
            <person name="Morishima S."/>
            <person name="Morishima Y."/>
            <person name="Inoko H."/>
            <person name="Kulski J.K."/>
            <person name="Shiina T."/>
        </authorList>
    </citation>
    <scope>NUCLEOTIDE SEQUENCE [MRNA] (ALLELES DRB1*04:04; DRB1*13:07; DRB1*14:03; DRB1*14:06 AND DRB1*14:07)</scope>
</reference>
<reference key="21">
    <citation type="journal article" date="2005" name="Genome Res.">
        <title>Ancient haplotypes of the HLA Class II region.</title>
        <authorList>
            <person name="Raymond C.K."/>
            <person name="Kas A."/>
            <person name="Paddock M."/>
            <person name="Qiu R."/>
            <person name="Zhou Y."/>
            <person name="Subramanian S."/>
            <person name="Chang J."/>
            <person name="Palmieri A."/>
            <person name="Haugen E."/>
            <person name="Kaul R."/>
            <person name="Olson M.V."/>
        </authorList>
    </citation>
    <scope>NUCLEOTIDE SEQUENCE [GENOMIC DNA] (ALLELES DRB1*01:02; DRB1*13:01; DRB1*13:02; DRB1*14:05; DRB1*15:01 AND DRB1*15:03)</scope>
    <scope>NUCLEOTIDE SEQUENCE [GENOMIC DNA] OF 1-262 (ALLELE DRB1*12:01)</scope>
    <scope>NUCLEOTIDE SEQUENCE [GENOMIC DNA] OF 1-254 (ALLELE DRB1*15:02)</scope>
</reference>
<reference key="22">
    <citation type="journal article" date="2007" name="Immunogenetics">
        <title>Full-length sequence analysis of the HLA-DRB1 locus suggests a recent origin of alleles.</title>
        <authorList>
            <person name="von Salome J."/>
            <person name="Gyllensten U."/>
            <person name="Bergstroem T.F."/>
        </authorList>
    </citation>
    <scope>NUCLEOTIDE SEQUENCE [GENOMIC DNA] (ALLELE DRB1*01:01)</scope>
    <scope>VARIANT ARG-262</scope>
</reference>
<reference key="23">
    <citation type="submission" date="1995-05" db="EMBL/GenBank/DDBJ databases">
        <title>Full cDNA sequence of HLA-DRB1*0411.</title>
        <authorList>
            <person name="Zhao W."/>
            <person name="Fernandez-Vina M.A."/>
            <person name="Stastny P."/>
        </authorList>
    </citation>
    <scope>NUCLEOTIDE SEQUENCE [MRNA] (ALLELE DRB1*04:11)</scope>
</reference>
<reference key="24">
    <citation type="submission" date="2001-12" db="EMBL/GenBank/DDBJ databases">
        <title>New complete sequences of MHC-DR in Spanish family with systemic lupus erythematosus.</title>
        <authorList>
            <person name="Arnaiz-Villena A."/>
            <person name="Martinez-Quiles N."/>
            <person name="De Juan-Echavarri D."/>
            <person name="Martin-Villa M."/>
            <person name="Martinez-Laso J."/>
        </authorList>
    </citation>
    <scope>NUCLEOTIDE SEQUENCE [MRNA] (ALLELE DRB1*13:02)</scope>
    <source>
        <tissue>Blood</tissue>
    </source>
</reference>
<reference key="25">
    <citation type="submission" date="2014-05" db="EMBL/GenBank/DDBJ databases">
        <title>Tissue Typing, Transplantation Immunology, University Hospital Maastricht, P Debeylaan 25, 6202 AZ Maastricht, NETHERLANDS.</title>
        <authorList>
            <person name="Voorter C."/>
        </authorList>
    </citation>
    <scope>NUCLEOTIDE SEQUENCE [MRNA] (ALLELE DRB1*08:04)</scope>
</reference>
<reference key="26">
    <citation type="submission" date="2017-11" db="EMBL/GenBank/DDBJ databases">
        <title>ANTHONY NOLAN RESEARCH INSTITUTE, The Royal Free Hospital, Pond Street, London, NW3 2QU, United Kingdom.</title>
        <authorList>
            <person name="Turner R T."/>
        </authorList>
    </citation>
    <scope>NUCLEOTIDE SEQUENCE [GENOMIC DNA] (ALLELE DRB1*03:02)</scope>
</reference>
<reference key="27">
    <citation type="journal article" date="2004" name="Nat. Genet.">
        <title>Complete sequencing and characterization of 21,243 full-length human cDNAs.</title>
        <authorList>
            <person name="Ota T."/>
            <person name="Suzuki Y."/>
            <person name="Nishikawa T."/>
            <person name="Otsuki T."/>
            <person name="Sugiyama T."/>
            <person name="Irie R."/>
            <person name="Wakamatsu A."/>
            <person name="Hayashi K."/>
            <person name="Sato H."/>
            <person name="Nagai K."/>
            <person name="Kimura K."/>
            <person name="Makita H."/>
            <person name="Sekine M."/>
            <person name="Obayashi M."/>
            <person name="Nishi T."/>
            <person name="Shibahara T."/>
            <person name="Tanaka T."/>
            <person name="Ishii S."/>
            <person name="Yamamoto J."/>
            <person name="Saito K."/>
            <person name="Kawai Y."/>
            <person name="Isono Y."/>
            <person name="Nakamura Y."/>
            <person name="Nagahari K."/>
            <person name="Murakami K."/>
            <person name="Yasuda T."/>
            <person name="Iwayanagi T."/>
            <person name="Wagatsuma M."/>
            <person name="Shiratori A."/>
            <person name="Sudo H."/>
            <person name="Hosoiri T."/>
            <person name="Kaku Y."/>
            <person name="Kodaira H."/>
            <person name="Kondo H."/>
            <person name="Sugawara M."/>
            <person name="Takahashi M."/>
            <person name="Kanda K."/>
            <person name="Yokoi T."/>
            <person name="Furuya T."/>
            <person name="Kikkawa E."/>
            <person name="Omura Y."/>
            <person name="Abe K."/>
            <person name="Kamihara K."/>
            <person name="Katsuta N."/>
            <person name="Sato K."/>
            <person name="Tanikawa M."/>
            <person name="Yamazaki M."/>
            <person name="Ninomiya K."/>
            <person name="Ishibashi T."/>
            <person name="Yamashita H."/>
            <person name="Murakawa K."/>
            <person name="Fujimori K."/>
            <person name="Tanai H."/>
            <person name="Kimata M."/>
            <person name="Watanabe M."/>
            <person name="Hiraoka S."/>
            <person name="Chiba Y."/>
            <person name="Ishida S."/>
            <person name="Ono Y."/>
            <person name="Takiguchi S."/>
            <person name="Watanabe S."/>
            <person name="Yosida M."/>
            <person name="Hotuta T."/>
            <person name="Kusano J."/>
            <person name="Kanehori K."/>
            <person name="Takahashi-Fujii A."/>
            <person name="Hara H."/>
            <person name="Tanase T.-O."/>
            <person name="Nomura Y."/>
            <person name="Togiya S."/>
            <person name="Komai F."/>
            <person name="Hara R."/>
            <person name="Takeuchi K."/>
            <person name="Arita M."/>
            <person name="Imose N."/>
            <person name="Musashino K."/>
            <person name="Yuuki H."/>
            <person name="Oshima A."/>
            <person name="Sasaki N."/>
            <person name="Aotsuka S."/>
            <person name="Yoshikawa Y."/>
            <person name="Matsunawa H."/>
            <person name="Ichihara T."/>
            <person name="Shiohata N."/>
            <person name="Sano S."/>
            <person name="Moriya S."/>
            <person name="Momiyama H."/>
            <person name="Satoh N."/>
            <person name="Takami S."/>
            <person name="Terashima Y."/>
            <person name="Suzuki O."/>
            <person name="Nakagawa S."/>
            <person name="Senoh A."/>
            <person name="Mizoguchi H."/>
            <person name="Goto Y."/>
            <person name="Shimizu F."/>
            <person name="Wakebe H."/>
            <person name="Hishigaki H."/>
            <person name="Watanabe T."/>
            <person name="Sugiyama A."/>
            <person name="Takemoto M."/>
            <person name="Kawakami B."/>
            <person name="Yamazaki M."/>
            <person name="Watanabe K."/>
            <person name="Kumagai A."/>
            <person name="Itakura S."/>
            <person name="Fukuzumi Y."/>
            <person name="Fujimori Y."/>
            <person name="Komiyama M."/>
            <person name="Tashiro H."/>
            <person name="Tanigami A."/>
            <person name="Fujiwara T."/>
            <person name="Ono T."/>
            <person name="Yamada K."/>
            <person name="Fujii Y."/>
            <person name="Ozaki K."/>
            <person name="Hirao M."/>
            <person name="Ohmori Y."/>
            <person name="Kawabata A."/>
            <person name="Hikiji T."/>
            <person name="Kobatake N."/>
            <person name="Inagaki H."/>
            <person name="Ikema Y."/>
            <person name="Okamoto S."/>
            <person name="Okitani R."/>
            <person name="Kawakami T."/>
            <person name="Noguchi S."/>
            <person name="Itoh T."/>
            <person name="Shigeta K."/>
            <person name="Senba T."/>
            <person name="Matsumura K."/>
            <person name="Nakajima Y."/>
            <person name="Mizuno T."/>
            <person name="Morinaga M."/>
            <person name="Sasaki M."/>
            <person name="Togashi T."/>
            <person name="Oyama M."/>
            <person name="Hata H."/>
            <person name="Watanabe M."/>
            <person name="Komatsu T."/>
            <person name="Mizushima-Sugano J."/>
            <person name="Satoh T."/>
            <person name="Shirai Y."/>
            <person name="Takahashi Y."/>
            <person name="Nakagawa K."/>
            <person name="Okumura K."/>
            <person name="Nagase T."/>
            <person name="Nomura N."/>
            <person name="Kikuchi H."/>
            <person name="Masuho Y."/>
            <person name="Yamashita R."/>
            <person name="Nakai K."/>
            <person name="Yada T."/>
            <person name="Nakamura Y."/>
            <person name="Ohara O."/>
            <person name="Isogai T."/>
            <person name="Sugano S."/>
        </authorList>
    </citation>
    <scope>NUCLEOTIDE SEQUENCE [LARGE SCALE MRNA] (ALLELES DRB1*01:01 AND DRB1*13:01)</scope>
    <source>
        <tissue>Cerebellum</tissue>
        <tissue>Uterus</tissue>
    </source>
</reference>
<reference key="28">
    <citation type="journal article" date="2004" name="Genome Res.">
        <title>The status, quality, and expansion of the NIH full-length cDNA project: the Mammalian Gene Collection (MGC).</title>
        <authorList>
            <consortium name="The MGC Project Team"/>
        </authorList>
    </citation>
    <scope>NUCLEOTIDE SEQUENCE [LARGE SCALE MRNA] (ALLELES DRB1*07:01; DRB1*13:02; DRB1*15:01 AND DRB1*15:02)</scope>
    <source>
        <tissue>Lymph</tissue>
    </source>
</reference>
<reference key="29">
    <citation type="journal article" date="2003" name="Nature">
        <title>The DNA sequence and analysis of human chromosome 6.</title>
        <authorList>
            <person name="Mungall A.J."/>
            <person name="Palmer S.A."/>
            <person name="Sims S.K."/>
            <person name="Edwards C.A."/>
            <person name="Ashurst J.L."/>
            <person name="Wilming L."/>
            <person name="Jones M.C."/>
            <person name="Horton R."/>
            <person name="Hunt S.E."/>
            <person name="Scott C.E."/>
            <person name="Gilbert J.G.R."/>
            <person name="Clamp M.E."/>
            <person name="Bethel G."/>
            <person name="Milne S."/>
            <person name="Ainscough R."/>
            <person name="Almeida J.P."/>
            <person name="Ambrose K.D."/>
            <person name="Andrews T.D."/>
            <person name="Ashwell R.I.S."/>
            <person name="Babbage A.K."/>
            <person name="Bagguley C.L."/>
            <person name="Bailey J."/>
            <person name="Banerjee R."/>
            <person name="Barker D.J."/>
            <person name="Barlow K.F."/>
            <person name="Bates K."/>
            <person name="Beare D.M."/>
            <person name="Beasley H."/>
            <person name="Beasley O."/>
            <person name="Bird C.P."/>
            <person name="Blakey S.E."/>
            <person name="Bray-Allen S."/>
            <person name="Brook J."/>
            <person name="Brown A.J."/>
            <person name="Brown J.Y."/>
            <person name="Burford D.C."/>
            <person name="Burrill W."/>
            <person name="Burton J."/>
            <person name="Carder C."/>
            <person name="Carter N.P."/>
            <person name="Chapman J.C."/>
            <person name="Clark S.Y."/>
            <person name="Clark G."/>
            <person name="Clee C.M."/>
            <person name="Clegg S."/>
            <person name="Cobley V."/>
            <person name="Collier R.E."/>
            <person name="Collins J.E."/>
            <person name="Colman L.K."/>
            <person name="Corby N.R."/>
            <person name="Coville G.J."/>
            <person name="Culley K.M."/>
            <person name="Dhami P."/>
            <person name="Davies J."/>
            <person name="Dunn M."/>
            <person name="Earthrowl M.E."/>
            <person name="Ellington A.E."/>
            <person name="Evans K.A."/>
            <person name="Faulkner L."/>
            <person name="Francis M.D."/>
            <person name="Frankish A."/>
            <person name="Frankland J."/>
            <person name="French L."/>
            <person name="Garner P."/>
            <person name="Garnett J."/>
            <person name="Ghori M.J."/>
            <person name="Gilby L.M."/>
            <person name="Gillson C.J."/>
            <person name="Glithero R.J."/>
            <person name="Grafham D.V."/>
            <person name="Grant M."/>
            <person name="Gribble S."/>
            <person name="Griffiths C."/>
            <person name="Griffiths M.N.D."/>
            <person name="Hall R."/>
            <person name="Halls K.S."/>
            <person name="Hammond S."/>
            <person name="Harley J.L."/>
            <person name="Hart E.A."/>
            <person name="Heath P.D."/>
            <person name="Heathcott R."/>
            <person name="Holmes S.J."/>
            <person name="Howden P.J."/>
            <person name="Howe K.L."/>
            <person name="Howell G.R."/>
            <person name="Huckle E."/>
            <person name="Humphray S.J."/>
            <person name="Humphries M.D."/>
            <person name="Hunt A.R."/>
            <person name="Johnson C.M."/>
            <person name="Joy A.A."/>
            <person name="Kay M."/>
            <person name="Keenan S.J."/>
            <person name="Kimberley A.M."/>
            <person name="King A."/>
            <person name="Laird G.K."/>
            <person name="Langford C."/>
            <person name="Lawlor S."/>
            <person name="Leongamornlert D.A."/>
            <person name="Leversha M."/>
            <person name="Lloyd C.R."/>
            <person name="Lloyd D.M."/>
            <person name="Loveland J.E."/>
            <person name="Lovell J."/>
            <person name="Martin S."/>
            <person name="Mashreghi-Mohammadi M."/>
            <person name="Maslen G.L."/>
            <person name="Matthews L."/>
            <person name="McCann O.T."/>
            <person name="McLaren S.J."/>
            <person name="McLay K."/>
            <person name="McMurray A."/>
            <person name="Moore M.J.F."/>
            <person name="Mullikin J.C."/>
            <person name="Niblett D."/>
            <person name="Nickerson T."/>
            <person name="Novik K.L."/>
            <person name="Oliver K."/>
            <person name="Overton-Larty E.K."/>
            <person name="Parker A."/>
            <person name="Patel R."/>
            <person name="Pearce A.V."/>
            <person name="Peck A.I."/>
            <person name="Phillimore B.J.C.T."/>
            <person name="Phillips S."/>
            <person name="Plumb R.W."/>
            <person name="Porter K.M."/>
            <person name="Ramsey Y."/>
            <person name="Ranby S.A."/>
            <person name="Rice C.M."/>
            <person name="Ross M.T."/>
            <person name="Searle S.M."/>
            <person name="Sehra H.K."/>
            <person name="Sheridan E."/>
            <person name="Skuce C.D."/>
            <person name="Smith S."/>
            <person name="Smith M."/>
            <person name="Spraggon L."/>
            <person name="Squares S.L."/>
            <person name="Steward C.A."/>
            <person name="Sycamore N."/>
            <person name="Tamlyn-Hall G."/>
            <person name="Tester J."/>
            <person name="Theaker A.J."/>
            <person name="Thomas D.W."/>
            <person name="Thorpe A."/>
            <person name="Tracey A."/>
            <person name="Tromans A."/>
            <person name="Tubby B."/>
            <person name="Wall M."/>
            <person name="Wallis J.M."/>
            <person name="West A.P."/>
            <person name="White S.S."/>
            <person name="Whitehead S.L."/>
            <person name="Whittaker H."/>
            <person name="Wild A."/>
            <person name="Willey D.J."/>
            <person name="Wilmer T.E."/>
            <person name="Wood J.M."/>
            <person name="Wray P.W."/>
            <person name="Wyatt J.C."/>
            <person name="Young L."/>
            <person name="Younger R.M."/>
            <person name="Bentley D.R."/>
            <person name="Coulson A."/>
            <person name="Durbin R.M."/>
            <person name="Hubbard T."/>
            <person name="Sulston J.E."/>
            <person name="Dunham I."/>
            <person name="Rogers J."/>
            <person name="Beck S."/>
        </authorList>
    </citation>
    <scope>NUCLEOTIDE SEQUENCE [LARGE SCALE GENOMIC DNA] (ALLELE DRB1*04:01)</scope>
</reference>
<reference key="30">
    <citation type="journal article" date="1981" name="Hoppe-Seyler's Z. Physiol. Chem.">
        <title>Primary structure of class II human histocompatibility antigens. 1st communication. Amino acid sequence of the N-terminal 198 residues of the beta chain of a HLA-Dw2,2;DR2,2-alloantigen.</title>
        <authorList>
            <person name="Kratzin H."/>
            <person name="Yang C.-Y."/>
            <person name="Gotz H."/>
            <person name="Pauly E."/>
            <person name="Kolbel S."/>
            <person name="Egert G."/>
            <person name="Thinnes F.P."/>
            <person name="Wernet P."/>
            <person name="Altevogt P."/>
            <person name="Hilschmann N."/>
        </authorList>
    </citation>
    <scope>PROTEIN SEQUENCE OF 30-228</scope>
    <source>
        <tissue>Lymphoblast</tissue>
    </source>
</reference>
<reference key="31">
    <citation type="journal article" date="1983" name="Biochemistry">
        <title>N-terminal amino acid sequences of the alpha and beta chains of HLA-DR1 and HLA-DR2 antigens.</title>
        <authorList>
            <person name="Walker L.E."/>
            <person name="Hewick R."/>
            <person name="Hunkapiller M.W."/>
            <person name="Hood L.E."/>
            <person name="Dreyer W.J."/>
            <person name="Reisfeld R.A."/>
        </authorList>
    </citation>
    <scope>PROTEIN SEQUENCE OF 30-64</scope>
    <source>
        <tissue>B-cell</tissue>
    </source>
</reference>
<reference key="32">
    <citation type="journal article" date="1989" name="Science">
        <title>Class II MHC molecules are specific receptors for staphylococcus enterotoxin A.</title>
        <authorList>
            <person name="Mollick J.A."/>
            <person name="Cook R.G."/>
            <person name="Rich R.R."/>
        </authorList>
    </citation>
    <scope>INTERACTION WITH STAPHYLOCOCCUS AUREUS ENTEROTOXIN A/ENTA (MICROBIAL INFECTION)</scope>
</reference>
<reference key="33">
    <citation type="journal article" date="1990" name="Immunology">
        <title>Targeting of human cytotoxic T lymphocytes to MHC class II-expressing cells by staphylococcal enterotoxins.</title>
        <authorList>
            <person name="Dohlsten M."/>
            <person name="Lando P.A."/>
            <person name="Hedlund G."/>
            <person name="Trowsdale J."/>
            <person name="Kalland T."/>
        </authorList>
    </citation>
    <scope>INTERACTION WITH STAPHYLOCOCCUS AUREUS ENTEROTOXIN A/ENTA; B/ENTB; C1/ENTC1 AND D/ENTD (MICROBIAL INFECTION)</scope>
</reference>
<reference key="34">
    <citation type="journal article" date="1995" name="Proc. Natl. Acad. Sci. U.S.A.">
        <title>Invariant chain made in Escherichia coli has an exposed N-terminal segment that blocks antigen binding to HLA-DR1 and a trimeric C-terminal segment that binds empty HLA-DR1.</title>
        <authorList>
            <person name="Park S.J."/>
            <person name="Sadegh-Nasseri S."/>
            <person name="Wiley D.C."/>
        </authorList>
    </citation>
    <scope>INTERACTION WITH CD74 HOMOTRIMER</scope>
</reference>
<reference key="35">
    <citation type="journal article" date="1996" name="J. Exp. Med.">
        <title>Melanoma-specific CD4+ T cells recognize nonmutated HLA-DR-restricted tyrosinase epitopes.</title>
        <authorList>
            <person name="Topalian S.L."/>
            <person name="Gonzales M.I."/>
            <person name="Parkhurst M."/>
            <person name="Li Y.F."/>
            <person name="Southwood S."/>
            <person name="Sette A."/>
            <person name="Rosenberg S.A."/>
            <person name="Robbins P.F."/>
        </authorList>
    </citation>
    <scope>FUNCTION (ALLELE DRB1*04:01)</scope>
</reference>
<reference key="36">
    <citation type="journal article" date="1997" name="Immunity">
        <title>HLA-DM acts as a molecular chaperone and rescues empty HLA-DR molecules at lysosomal pH.</title>
        <authorList>
            <person name="Kropshofer H."/>
            <person name="Arndt S.O."/>
            <person name="Moldenhauer G."/>
            <person name="Haemmerling G.J."/>
            <person name="Vogt A.B."/>
        </authorList>
    </citation>
    <scope>FUNCTION (ALLELE DRB1*01:01)</scope>
    <scope>SUBCELLULAR LOCATION</scope>
    <scope>INTERACTION WITH CLIP AND HLA-DM COMPLEX</scope>
</reference>
<reference key="37">
    <citation type="journal article" date="1997" name="J. Virol.">
        <title>Epstein-Barr virus uses HLA class II as a cofactor for infection of B lymphocytes.</title>
        <authorList>
            <person name="Li Q."/>
            <person name="Spriggs M.K."/>
            <person name="Kovats S."/>
            <person name="Turk S.M."/>
            <person name="Comeau M.R."/>
            <person name="Nepom B."/>
            <person name="Hutt-Fletcher L.M."/>
        </authorList>
    </citation>
    <scope>FUNCTION (MICROBIAL INFECTION)</scope>
    <scope>INTERACTION WITH EPSTEIN-BARR VIRUS GP42 PROTEIN (MICROBIAL INFECTION)</scope>
</reference>
<reference key="38">
    <citation type="journal article" date="2000" name="Immunity">
        <title>Determination of the HLA-DM interaction site on HLA-DR molecules.</title>
        <authorList>
            <person name="Doebele R.C."/>
            <person name="Busch R."/>
            <person name="Scott H.M."/>
            <person name="Pashine A."/>
            <person name="Mellins E.D."/>
        </authorList>
    </citation>
    <scope>INTERACTION WITH HLA-DM COMPLEX AND CLIP</scope>
    <scope>MUTAGENESIS OF ASP-181; LEU-213 AND GLU-216</scope>
</reference>
<reference key="39">
    <citation type="journal article" date="2004" name="J. Immunol.">
        <title>Characterization of a Mycobacterium tuberculosis peptide that is recognized by human CD4+ and CD8+ T cells in the context of multiple HLA alleles.</title>
        <authorList>
            <person name="Shams H."/>
            <person name="Klucar P."/>
            <person name="Weis S.E."/>
            <person name="Lalvani A."/>
            <person name="Moonan P.K."/>
            <person name="Safi H."/>
            <person name="Wizel B."/>
            <person name="Ewer K."/>
            <person name="Nepom G.T."/>
            <person name="Lewinsohn D.M."/>
            <person name="Andersen P."/>
            <person name="Barnes P.F."/>
        </authorList>
    </citation>
    <scope>FUNCTION (ALLELE DRB1*04:01)</scope>
</reference>
<reference key="40">
    <citation type="journal article" date="2005" name="J. Immunol.">
        <title>Broad repertoire of the CD4+ Th cell response in spontaneously controlled hepatitis C virus infection includes dominant and highly promiscuous epitopes.</title>
        <authorList>
            <person name="Schulze zur Wiesch J."/>
            <person name="Lauer G.M."/>
            <person name="Day C.L."/>
            <person name="Kim A.Y."/>
            <person name="Ouchi K."/>
            <person name="Duncan J.E."/>
            <person name="Wurcel A.G."/>
            <person name="Timm J."/>
            <person name="Jones A.M."/>
            <person name="Mothe B."/>
            <person name="Allen T.M."/>
            <person name="McGovern B."/>
            <person name="Lewis-Ximenez L."/>
            <person name="Sidney J."/>
            <person name="Sette A."/>
            <person name="Chung R.T."/>
            <person name="Walker B.D."/>
        </authorList>
    </citation>
    <scope>FUNCTION</scope>
</reference>
<reference key="41">
    <citation type="journal article" date="2007" name="Immunity">
        <title>Antigen-loading compartments for major histocompatibility complex class II molecules continuously receive input from autophagosomes.</title>
        <authorList>
            <person name="Schmid D."/>
            <person name="Pypaert M."/>
            <person name="Muenz C."/>
        </authorList>
    </citation>
    <scope>FUNCTION</scope>
    <scope>SUBCELLULAR LOCATION</scope>
</reference>
<reference key="42">
    <citation type="journal article" date="2008" name="Proc. Natl. Acad. Sci. U.S.A.">
        <title>MHC class II stabilization at the surface of human dendritic cells is the result of maturation-dependent MARCH I down-regulation.</title>
        <authorList>
            <person name="De Gassart A."/>
            <person name="Camosseto V."/>
            <person name="Thibodeau J."/>
            <person name="Ceppi M."/>
            <person name="Catalan N."/>
            <person name="Pierre P."/>
            <person name="Gatti E."/>
        </authorList>
    </citation>
    <scope>UBIQUITINATION BY MARCHF1</scope>
    <scope>SUBCELLULAR LOCATION</scope>
    <scope>MUTAGENESIS OF LYS-254</scope>
</reference>
<reference key="43">
    <citation type="journal article" date="2008" name="Proc. Natl. Acad. Sci. U.S.A.">
        <title>A quantitative atlas of mitotic phosphorylation.</title>
        <authorList>
            <person name="Dephoure N."/>
            <person name="Zhou C."/>
            <person name="Villen J."/>
            <person name="Beausoleil S.A."/>
            <person name="Bakalarski C.E."/>
            <person name="Elledge S.J."/>
            <person name="Gygi S.P."/>
        </authorList>
    </citation>
    <scope>IDENTIFICATION BY MASS SPECTROMETRY [LARGE SCALE ANALYSIS]</scope>
    <source>
        <tissue>Cervix carcinoma</tissue>
    </source>
</reference>
<reference key="44">
    <citation type="journal article" date="2008" name="Microbiol. Immunol.">
        <title>A WT1 protein-derived, naturally processed 16-mer peptide, WT1(332), is a promiscuous helper peptide for induction of WT1-specific Th1-type CD4(+) T cells.</title>
        <authorList>
            <person name="Fujiki F."/>
            <person name="Oka Y."/>
            <person name="Kawakatsu M."/>
            <person name="Tsuboi A."/>
            <person name="Nakajima H."/>
            <person name="Elisseeva O.A."/>
            <person name="Harada Y."/>
            <person name="Li Z."/>
            <person name="Tatsumi N."/>
            <person name="Kamino E."/>
            <person name="Shirakata T."/>
            <person name="Nishida S."/>
            <person name="Taniguchi Y."/>
            <person name="Kawase I."/>
            <person name="Oji Y."/>
            <person name="Sugiyama H."/>
        </authorList>
    </citation>
    <scope>FUNCTION (ALLELES DRB1*04:05; DRB1*15:01 AND DRB1*15:02)</scope>
</reference>
<reference key="45">
    <citation type="journal article" date="2009" name="Blood">
        <title>Identification of 4 new HLA-DR-restricted minor histocompatibility antigens as hematopoietic targets in antitumor immunity.</title>
        <authorList>
            <person name="Stumpf A.N."/>
            <person name="van der Meijden E.D."/>
            <person name="van Bergen C.A."/>
            <person name="Willemze R."/>
            <person name="Falkenburg J.H."/>
            <person name="Griffioen M."/>
        </authorList>
    </citation>
    <scope>ASSOCIATION OF ALLELES DRB1*03:01 AND DRB1*13:01 WITH GRAFT-VERSUS-LEUKEMIA EFFECT</scope>
    <scope>POLYMORPHISM</scope>
</reference>
<reference key="46">
    <citation type="journal article" date="2010" name="Eur. J. Immunol.">
        <title>Reassessing the role of HLA-DRB3 T-cell responses: evidence for significant expression and complementary antigen presentation.</title>
        <authorList>
            <person name="Faner R."/>
            <person name="James E."/>
            <person name="Huston L."/>
            <person name="Pujol-Borrel R."/>
            <person name="Kwok W.W."/>
            <person name="Juan M."/>
        </authorList>
    </citation>
    <scope>FUNCTION (ALLELES DRB1*03:01 AND DRB1*11:01)</scope>
    <scope>TISSUE SPECIFICITY</scope>
    <scope>SUBCELLULAR LOCATION</scope>
</reference>
<reference key="47">
    <citation type="journal article" date="2010" name="Tissue Antigens">
        <title>Nomenclature for factors of the HLA system, 2010.</title>
        <authorList>
            <person name="Marsh S.G."/>
            <person name="Albert E.D."/>
            <person name="Bodmer W.F."/>
            <person name="Bontrop R.E."/>
            <person name="Dupont B."/>
            <person name="Erlich H.A."/>
            <person name="Fernandez-Vina M."/>
            <person name="Geraghty D.E."/>
            <person name="Holdsworth R."/>
            <person name="Hurley C.K."/>
            <person name="Lau M."/>
            <person name="Lee K.W."/>
            <person name="Mach B."/>
            <person name="Maiers M."/>
            <person name="Mayr W.R."/>
            <person name="Mueller C.R."/>
            <person name="Parham P."/>
            <person name="Petersdorf E.W."/>
            <person name="Sasazuki T."/>
            <person name="Strominger J.L."/>
            <person name="Svejgaard A."/>
            <person name="Terasaki P.I."/>
            <person name="Tiercy J.M."/>
            <person name="Trowsdale J."/>
        </authorList>
    </citation>
    <scope>NOMENCLATURE</scope>
</reference>
<reference key="48">
    <citation type="journal article" date="2012" name="J. Immunol.">
        <title>Frequency of epitope-specific naive CD4(+) T cells correlates with immunodominance in the human memory repertoire.</title>
        <authorList>
            <person name="Kwok W.W."/>
            <person name="Tan V."/>
            <person name="Gillette L."/>
            <person name="Littell C.T."/>
            <person name="Soltis M.A."/>
            <person name="LaFond R.B."/>
            <person name="Yang J."/>
            <person name="James E.A."/>
            <person name="DeLong J.H."/>
        </authorList>
    </citation>
    <scope>FUNCTION (ALLELE DRB1*01:01)</scope>
</reference>
<reference key="49">
    <citation type="journal article" date="2013" name="Leukemia">
        <title>Identification of a Wilms' tumor 1-derived immunogenic CD4(+) T-cell epitope that is recognized in the context of common Caucasian HLA-DR haplotypes.</title>
        <authorList>
            <person name="Anguille S."/>
            <person name="Fujiki F."/>
            <person name="Smits E.L."/>
            <person name="Oji Y."/>
            <person name="Lion E."/>
            <person name="Oka Y."/>
            <person name="Berneman Z.N."/>
            <person name="Sugiyama H."/>
        </authorList>
    </citation>
    <scope>FUNCTION (ALLELE DRB1*07:01)</scope>
</reference>
<reference key="50">
    <citation type="journal article" date="2013" name="Nat. Commun.">
        <title>Exploring the MHC-peptide matrix of central tolerance in the human thymus.</title>
        <authorList>
            <person name="Adamopoulou E."/>
            <person name="Tenzer S."/>
            <person name="Hillen N."/>
            <person name="Klug P."/>
            <person name="Rota I.A."/>
            <person name="Tietz S."/>
            <person name="Gebhardt M."/>
            <person name="Stevanovic S."/>
            <person name="Schild H."/>
            <person name="Tolosa E."/>
            <person name="Melms A."/>
            <person name="Stoeckle C."/>
        </authorList>
    </citation>
    <scope>FUNCTION</scope>
    <scope>TISSUE SPECIFICITY</scope>
</reference>
<reference key="51">
    <citation type="journal article" date="2014" name="Nat. Commun.">
        <title>Divergent paths for the selection of immunodominant epitopes from distinct antigenic sources.</title>
        <authorList>
            <person name="Kim A."/>
            <person name="Hartman I.Z."/>
            <person name="Poore B."/>
            <person name="Boronina T."/>
            <person name="Cole R.N."/>
            <person name="Song N."/>
            <person name="Ciudad M.T."/>
            <person name="Caspi R.R."/>
            <person name="Jaraquemada D."/>
            <person name="Sadegh-Nasseri S."/>
        </authorList>
    </citation>
    <scope>FUNCTION (ALLELES DRB1*01:01; DRB1*03:01 AND DRB1*15:01)</scope>
    <scope>INTERACTION WITH HLA-DM AND PEPTIDE</scope>
</reference>
<reference key="52">
    <citation type="journal article" date="2016" name="Proc. Natl. Acad. Sci. U.S.A.">
        <title>Remarkably low affinity of CD4/peptide-major histocompatibility complex class II protein interactions.</title>
        <authorList>
            <person name="Joensson P."/>
            <person name="Southcombe J.H."/>
            <person name="Santos A.M."/>
            <person name="Huo J."/>
            <person name="Fernandes R.A."/>
            <person name="McColl J."/>
            <person name="Lever M."/>
            <person name="Evans E.J."/>
            <person name="Hudson A."/>
            <person name="Chang V.T."/>
            <person name="Hanke T."/>
            <person name="Godkin A."/>
            <person name="Dunne P.D."/>
            <person name="Horrocks M.H."/>
            <person name="Palayret M."/>
            <person name="Screaton G.R."/>
            <person name="Petersen J."/>
            <person name="Rossjohn J."/>
            <person name="Fugger L."/>
            <person name="Dushek O."/>
            <person name="Xu X.N."/>
            <person name="Davis S.J."/>
            <person name="Klenerman D."/>
        </authorList>
    </citation>
    <scope>INTERACTION WITH CD4</scope>
    <scope>DOMAIN</scope>
    <scope>MUTAGENESIS OF GLU-166; VAL-172; ILE-177 AND LEU-187</scope>
</reference>
<reference key="53">
    <citation type="journal article" date="2016" name="J. Immunol.">
        <title>Circulating Memory CD4+ T Cells Target Conserved Epitopes of Rhinovirus Capsid Proteins and Respond Rapidly to Experimental Infection in Humans.</title>
        <authorList>
            <person name="Muehling L.M."/>
            <person name="Mai D.T."/>
            <person name="Kwok W.W."/>
            <person name="Heymann P.W."/>
            <person name="Pomes A."/>
            <person name="Woodfolk J.A."/>
        </authorList>
    </citation>
    <scope>FUNCTION (ALLELES DRB1*01:01; DRB1*03:01; DRB1*04:01; DRB1*04:04; DRB1*07:01; DRB1*11:01 AND DRB1*15:01)</scope>
</reference>
<reference key="54">
    <citation type="journal article" date="2018" name="JCI Insight">
        <title>Enhanced detection of neoantigen-reactive T cells targeting unique and shared oncogenes for personalized cancer immunotherapy.</title>
        <authorList>
            <person name="Yossef R."/>
            <person name="Tran E."/>
            <person name="Deniger D.C."/>
            <person name="Gros A."/>
            <person name="Pasetto A."/>
            <person name="Parkhurst M.R."/>
            <person name="Gartner J.J."/>
            <person name="Prickett T.D."/>
            <person name="Cafri G."/>
            <person name="Robbins P.F."/>
            <person name="Rosenberg S.A."/>
        </authorList>
    </citation>
    <scope>FUNCTION (ALLELE DRB1*07:01)</scope>
</reference>
<reference key="55">
    <citation type="journal article" date="2019" name="Eur. J. Immunol.">
        <title>Naturally processed HLA-DR3-restricted HHV-6B peptides are recognized broadly with polyfunctional and cytotoxic CD4 T-cell responses.</title>
        <authorList>
            <person name="Becerra-Artiles A."/>
            <person name="Cruz J."/>
            <person name="Leszyk J.D."/>
            <person name="Sidney J."/>
            <person name="Sette A."/>
            <person name="Shaffer S.A."/>
            <person name="Stern L.J."/>
        </authorList>
    </citation>
    <scope>FUNCTION (ALLELES DRB1*03:01 AND DRB1*13:01)</scope>
</reference>
<reference key="56">
    <citation type="journal article" date="2019" name="Immunity">
        <title>Defining HLA-II Ligand Processing and Binding Rules with Mass Spectrometry Enhances Cancer Epitope Prediction.</title>
        <authorList>
            <person name="Abelin J.G."/>
            <person name="Harjanto D."/>
            <person name="Malloy M."/>
            <person name="Suri P."/>
            <person name="Colson T."/>
            <person name="Goulding S.P."/>
            <person name="Creech A.L."/>
            <person name="Serrano L.R."/>
            <person name="Nasir G."/>
            <person name="Nasrullah Y."/>
            <person name="McGann C.D."/>
            <person name="Velez D."/>
            <person name="Ting Y.S."/>
            <person name="Poran A."/>
            <person name="Rothenberg D.A."/>
            <person name="Chhangawala S."/>
            <person name="Rubinsteyn A."/>
            <person name="Hammerbacher J."/>
            <person name="Gaynor R.B."/>
            <person name="Fritsch E.F."/>
            <person name="Greshock J."/>
            <person name="Oslund R.C."/>
            <person name="Barthelme D."/>
            <person name="Addona T.A."/>
            <person name="Arieta C.M."/>
            <person name="Rooney M.S."/>
        </authorList>
    </citation>
    <scope>FUNCTION (ALLELE DRB1*11:01)</scope>
    <scope>TISSUE SPECIFICITY</scope>
</reference>
<reference key="57">
    <citation type="journal article" date="2019" name="J. Immunol.">
        <title>Primary EBV Infection Induces an Acute Wave of Activated Antigen-Specific Cytotoxic CD4+ T Cells.</title>
        <authorList>
            <person name="Meckiff B.J."/>
            <person name="Ladell K."/>
            <person name="McLaren J.E."/>
            <person name="Ryan G.B."/>
            <person name="Leese A.M."/>
            <person name="James E.A."/>
            <person name="Price D.A."/>
            <person name="Long H.M."/>
        </authorList>
    </citation>
    <scope>FUNCTION (ALLELE DRB1*07:01)</scope>
</reference>
<reference key="58">
    <citation type="journal article" date="1994" name="Nature">
        <title>Crystal structure of the human class II MHC protein HLA-DR1 complexed with an influenza virus peptide.</title>
        <authorList>
            <person name="Stern L.J."/>
            <person name="Brown J.H."/>
            <person name="Jardetzky T.J."/>
            <person name="Gorga J.C."/>
            <person name="Urban R.G."/>
            <person name="Strominger J.L."/>
            <person name="Wiley D.C."/>
        </authorList>
    </citation>
    <scope>X-RAY CRYSTALLOGRAPHY (2.8 ANGSTROMS) OF 32-219 (ALLELE DRB1*01:01) IN COMPLEX WITH HLA-DRA AND HA PEPTIDE</scope>
    <scope>FUNCTION (ALLELE DRB1*01:01)</scope>
    <scope>DOMAIN</scope>
</reference>
<reference key="59">
    <citation type="journal article" date="1994" name="Nature">
        <title>Three-dimensional structure of a human class II histocompatibility molecule complexed with superantigen.</title>
        <authorList>
            <person name="Jardetzky T.S."/>
            <person name="Brown J.H."/>
            <person name="Gorga J.C."/>
            <person name="Stern L.J."/>
            <person name="Urban R.G."/>
            <person name="Chi Y.I."/>
            <person name="Stauffacher C."/>
            <person name="Strominger J.L."/>
            <person name="Wiley D.C."/>
        </authorList>
    </citation>
    <scope>X-RAY CRYSTALLOGRAPHY (2.7 ANGSTROMS) OF 30-221 (ALLELE DRB1*01:01) IN COMPLEX WITH STAPHYLOCOCCUS ENTEROTOXIN B/ENTB (MICROBIAL INFECTION)</scope>
</reference>
<reference key="60">
    <citation type="journal article" date="1995" name="Nature">
        <title>The structure of an intermediate in class II MHC maturation: CLIP bound to HLA-DR3.</title>
        <authorList>
            <person name="Ghosh P."/>
            <person name="Amaya M."/>
            <person name="Mellins E."/>
            <person name="Wiley D.C."/>
        </authorList>
    </citation>
    <scope>X-RAY CRYSTALLOGRAPHY (2.75 ANGSTROMS) OF 34-220 (ALLELE DRB1*03:01) IN COMPLEX WITH HLA-DRA AND CD74 PEPTIDE (CLIP)</scope>
    <scope>SUBUNIT</scope>
    <scope>DISULFIDE BONDS</scope>
</reference>
<reference key="61">
    <citation type="journal article" date="1997" name="Immunity">
        <title>X-ray crystal structure of HLA-DR4 (DRA*0101, DRB1*0401) complexed with a peptide from human collagen II.</title>
        <authorList>
            <person name="Dessen A."/>
            <person name="Lawrence C.M."/>
            <person name="Cupo S."/>
            <person name="Zaller D.M."/>
            <person name="Wiley D.C."/>
        </authorList>
    </citation>
    <scope>X-RAY CRYSTALLOGRAPHY (2.5 ANGSTROMS) OF (ALLELE DRB1*04:01) IN COMPLEX WITH HLA-DRA*01:01 AND A COL2A1 PEPTIDE</scope>
    <scope>DOMAIN</scope>
    <scope>FUNCTION (ALLELE DRB1*04:01)</scope>
</reference>
<reference key="62">
    <citation type="journal article" date="1998" name="J. Exp. Med.">
        <title>Crystal structure of HLA-DR2 (DRA*0101, DRB1*1501) complexed with a peptide from human myelin basic protein.</title>
        <authorList>
            <person name="Smith K.J."/>
            <person name="Pyrdol J."/>
            <person name="Gauthier L."/>
            <person name="Wiley D.C."/>
            <person name="Wucherpfennig K.W."/>
        </authorList>
    </citation>
    <scope>X-RAY CRYSTALLOGRAPHY (2.60 ANGSTROMS) OF 32-222 (ALLELE DRB1*15:01) IN COMPLEX WITH HLA-DRA AND MBP PEPTIDE</scope>
    <scope>DISULFIDE BOND</scope>
    <scope>DOMAIN</scope>
    <scope>FUNCTION (ALLELE DRB1*15:01)</scope>
</reference>
<reference key="63">
    <citation type="journal article" date="2001" name="EMBO J.">
        <title>Crystal structure of a superantigen bound to MHC class II displays zinc and peptide dependence.</title>
        <authorList>
            <person name="Petersson K."/>
            <person name="Haakansson M."/>
            <person name="Nilsson H."/>
            <person name="Forsberg G."/>
            <person name="Svensson L.A."/>
            <person name="Liljas A."/>
            <person name="Walse B."/>
        </authorList>
    </citation>
    <scope>X-RAY CRYSTALLOGRAPHY (2.60 ANGSTROMS) OF 30-219 (ALLELE DRB1*01:01)</scope>
    <scope>INTERACTION WITH STAPHYLOCOCCUS AUREUS ENTEROTOXIN H/ENTH (MICROBIAL INFECTION)</scope>
</reference>
<reference key="64">
    <citation type="journal article" date="2002" name="Mol. Cell">
        <title>Structure of the Epstein-Barr virus gp42 protein bound to the MHC class II receptor HLA-DR1.</title>
        <authorList>
            <person name="Mullen M.M."/>
            <person name="Haan K.M."/>
            <person name="Longnecker R."/>
            <person name="Jardetzky T.S."/>
        </authorList>
    </citation>
    <scope>X-RAY CRYSTALLOGRAPHY (2.65 ANGSTROMS) OF 28-207 (ALLELE DRB1*01:01) IN COMPLEX WITH EPSTEIN-BARR VIRUS BZLF2/GP42</scope>
    <scope>FUNCTION (MICROBIAL INFECTION)</scope>
</reference>
<reference key="65">
    <citation type="journal article" date="2009" name="Immunity">
        <title>T cell-mediated autoimmune disease due to low-affinity crossreactivity to common microbial peptides.</title>
        <authorList>
            <person name="Harkiolaki M."/>
            <person name="Holmes S.L."/>
            <person name="Svendsen P."/>
            <person name="Gregersen J.W."/>
            <person name="Jensen L.T."/>
            <person name="McMahon R."/>
            <person name="Friese M.A."/>
            <person name="van Boxel G."/>
            <person name="Etzensperger R."/>
            <person name="Tzartos J.S."/>
            <person name="Kranc K."/>
            <person name="Sainsbury S."/>
            <person name="Harlos K."/>
            <person name="Mellins E.D."/>
            <person name="Palace J."/>
            <person name="Esiri M.M."/>
            <person name="van der Merwe P.A."/>
            <person name="Jones E.Y."/>
            <person name="Fugger L."/>
        </authorList>
    </citation>
    <scope>X-RAY CRYSTALLOGRAPHY (3.00 ANGSTROMS) OF 30-228 (ALLELE DRB1*15:01) IN COMPLEX WITH HLA-DRA AND MBP PEPTIDE</scope>
    <scope>INTERACTION WITH TCR</scope>
    <scope>DOMAIN</scope>
    <scope>GLYCOSYLATION AT ASN-48</scope>
    <scope>MOLECULAR MECHANISM RELEVANT FOR MULTIPLE SCLEROSIS</scope>
</reference>
<reference key="66">
    <citation type="journal article" date="2011" name="Proc. Natl. Acad. Sci. U.S.A.">
        <title>Affinity maturation of human CD4 by yeast surface display and crystal structure of a CD4-HLA-DR1 complex.</title>
        <authorList>
            <person name="Wang X.X."/>
            <person name="Li Y."/>
            <person name="Yin Y."/>
            <person name="Mo M."/>
            <person name="Wang Q."/>
            <person name="Gao W."/>
            <person name="Wang L."/>
            <person name="Mariuzza R.A."/>
        </authorList>
    </citation>
    <scope>X-RAY CRYSTALLOGRAPHY (2.10 ANGSTROMS) OF 30-221 (ALLELE DRB1*01:01)</scope>
    <scope>INTERACTION WITH CD4</scope>
    <scope>DOMAIN</scope>
</reference>
<reference key="67">
    <citation type="journal article" date="2012" name="Cell">
        <title>Crystal structure of the HLA-DM-HLA-DR1 complex defines mechanisms for rapid peptide selection.</title>
        <authorList>
            <person name="Pos W."/>
            <person name="Sethi D.K."/>
            <person name="Call M.J."/>
            <person name="Schulze M.S."/>
            <person name="Anders A.K."/>
            <person name="Pyrdol J."/>
            <person name="Wucherpfennig K.W."/>
        </authorList>
    </citation>
    <scope>X-RAY CRYSTALLOGRAPHY (2.60 ANGSTROMS) OF 30-221 (ALLELE DRB1*01:01) IN COMPLEX WITH HLA-DRA AND PEPTIDE</scope>
    <scope>INTERACTION WITH HLA-DMB-HLA-DMA</scope>
    <scope>MUTAGENESIS OF ASP-181; LEU-213 AND GLU-216</scope>
</reference>
<reference key="68">
    <citation type="journal article" date="2013" name="J. Exp. Med.">
        <title>A molecular basis for the association of the HLA-DRB1 locus, citrullination, and rheumatoid arthritis.</title>
        <authorList>
            <person name="Scally S.W."/>
            <person name="Petersen J."/>
            <person name="Law S.C."/>
            <person name="Dudek N.L."/>
            <person name="Nel H.J."/>
            <person name="Loh K.L."/>
            <person name="Wijeyewickrema L.C."/>
            <person name="Eckle S.B."/>
            <person name="van Heemst J."/>
            <person name="Pike R.N."/>
            <person name="McCluskey J."/>
            <person name="Toes R.E."/>
            <person name="La Gruta N.L."/>
            <person name="Purcell A.W."/>
            <person name="Reid H.H."/>
            <person name="Thomas R."/>
            <person name="Rossjohn J."/>
        </authorList>
    </citation>
    <scope>X-RAY CRYSTALLOGRAPHY (1.65 ANGSTROMS) OF 30-219 (ALLELES DRB1*04:01; DRB1*04:02 AND DRB1*04:04) IN COMPLEX WITH PEPTIDE</scope>
    <scope>DISULFIDE BOND</scope>
    <scope>GLYCOSYLATION AT ASN-48</scope>
    <scope>FUNCTION (ALLELES DRB1*04:01; DRB1*04:02 AND DRB1*04:04)</scope>
</reference>
<reference key="69">
    <citation type="journal article" date="2017" name="Nature">
        <title>Dominant protection from HLA-linked autoimmunity by antigen-specific regulatory T cells.</title>
        <authorList>
            <person name="Ooi J.D."/>
            <person name="Petersen J."/>
            <person name="Tan Y.H."/>
            <person name="Huynh M."/>
            <person name="Willett Z.J."/>
            <person name="Ramarathinam S.H."/>
            <person name="Eggenhuizen P.J."/>
            <person name="Loh K.L."/>
            <person name="Watson K.A."/>
            <person name="Gan P.Y."/>
            <person name="Alikhan M.A."/>
            <person name="Dudek N.L."/>
            <person name="Handel A."/>
            <person name="Hudson B.G."/>
            <person name="Fugger L."/>
            <person name="Power D.A."/>
            <person name="Holt S.G."/>
            <person name="Coates P.T."/>
            <person name="Gregersen J.W."/>
            <person name="Purcell A.W."/>
            <person name="Holdsworth S.R."/>
            <person name="La Gruta N.L."/>
            <person name="Reid H.H."/>
            <person name="Rossjohn J."/>
            <person name="Kitching A.R."/>
        </authorList>
    </citation>
    <scope>X-RAY CRYSTALLOGRAPHY (2.10 ANGSTROMS) OF 8-11 AND 29-219 (ALLELE DRB1*15:01) IN COMPLEX WITH COL4A3 PEPTIDE</scope>
    <scope>X-RAY CRYSTALLOGRAPHY (3.40 ANGSTROMS) OF 8-11 AND 30-219 (ALLELE DRB1*01:01)</scope>
    <scope>FUNCTION (ALLELES DRB1*01:01 AND DRB1*15:01)</scope>
    <scope>DOMAIN</scope>
    <scope>ASSOCIATION OF ALLELE DRB1*15:01 WITH GOODPASTURE SYNDROME</scope>
</reference>
<reference evidence="80 81" key="70">
    <citation type="journal article" date="2018" name="J. Biol. Chem.">
        <title>The interplay between citrullination and HLA-DRB1 polymorphism in shaping peptide binding hierarchies in rheumatoid arthritis.</title>
        <authorList>
            <person name="Ting Y.T."/>
            <person name="Petersen J."/>
            <person name="Ramarathinam S.H."/>
            <person name="Scally S.W."/>
            <person name="Loh K.L."/>
            <person name="Thomas R."/>
            <person name="Suri A."/>
            <person name="Baker D.G."/>
            <person name="Purcell A.W."/>
            <person name="Reid H.H."/>
            <person name="Rossjohn J."/>
        </authorList>
    </citation>
    <scope>X-RAY CRYSTALLOGRAPHY (2.20 ANGSTROMS) OF 30-219 IN COMPLEX WITH HLA-DRA AND CITRULLINATED CAMP</scope>
</reference>
<reference key="71">
    <citation type="journal article" date="2018" name="Sci. Immunol.">
        <title>CD4+ T cell-mediated HLA class II cross-restriction in HIV controllers.</title>
        <authorList>
            <person name="Galperin M."/>
            <person name="Farenc C."/>
            <person name="Mukhopadhyay M."/>
            <person name="Jayasinghe D."/>
            <person name="Decroos A."/>
            <person name="Benati D."/>
            <person name="Tan L.L."/>
            <person name="Ciacchi L."/>
            <person name="Reid H.H."/>
            <person name="Rossjohn J."/>
            <person name="Chakrabarti L.A."/>
            <person name="Gras S."/>
        </authorList>
    </citation>
    <scope>X-RAY CRYSTALLOGRAPHY (2.40 ANGSTROMS) OF 30-219 IN COMPLEX WITH HIV-1 PEPTIDE</scope>
    <scope>FUNCTION (ALLELES DRB1*01:01; DRB5*01:01; DRB1*11:01 AND DRB1*15:02)</scope>
    <scope>INTERACTION WITH TCR</scope>
    <scope>SUBCELLULAR LOCATION</scope>
</reference>
<reference key="72">
    <citation type="journal article" date="2019" name="J. Biol. Chem.">
        <title>Human leukocyte antigen (HLA) class II peptide flanking residues tune the immunogenicity of a human tumor-derived epitope.</title>
        <authorList>
            <person name="MacLachlan B.J."/>
            <person name="Dolton G."/>
            <person name="Papakyriakou A."/>
            <person name="Greenshields-Watson A."/>
            <person name="Mason G.H."/>
            <person name="Schauenburg A."/>
            <person name="Besneux M."/>
            <person name="Szomolay B."/>
            <person name="Elliott T."/>
            <person name="Sewell A.K."/>
            <person name="Gallimore A."/>
            <person name="Rizkallah P."/>
            <person name="Cole D.K."/>
            <person name="Godkin A."/>
        </authorList>
    </citation>
    <scope>X-RAY CRYSTALLOGRAPHY (1.95 ANGSTROMS) OF 30-219 (ALLELE DRB1*01:01) IN COMPLEX WITH HLA-DRA AND TPBG 5T4 PEPTIDE</scope>
    <scope>FUNCTION (ALLELE DRB1*01:01)</scope>
    <scope>SUBUNIT</scope>
    <scope>DISULFIDE BOND</scope>
</reference>
<reference key="73">
    <citation type="journal article" date="2020" name="Cell Rep.">
        <title>CD4+ T Cells Recognize Conserved Influenza A Epitopes through Shared Patterns of V-Gene Usage and Complementary Biochemical Features.</title>
        <authorList>
            <person name="Greenshields-Watson A."/>
            <person name="Attaf M."/>
            <person name="MacLachlan B.J."/>
            <person name="Whalley T."/>
            <person name="Rius C."/>
            <person name="Wall A."/>
            <person name="Lloyd A."/>
            <person name="Hughes H."/>
            <person name="Strange K.E."/>
            <person name="Mason G.H."/>
            <person name="Schauenburg A.J."/>
            <person name="Hulin-Curtis S.L."/>
            <person name="Geary J."/>
            <person name="Chen Y."/>
            <person name="Lauder S.N."/>
            <person name="Smart K."/>
            <person name="Vijaykrishna D."/>
            <person name="Grau M.L."/>
            <person name="Shugay M."/>
            <person name="Andrews R."/>
            <person name="Dolton G."/>
            <person name="Rizkallah P.J."/>
            <person name="Gallimore A.M."/>
            <person name="Sewell A.K."/>
            <person name="Godkin A.J."/>
            <person name="Cole D.K."/>
        </authorList>
    </citation>
    <scope>X-RAY CRYSTALLOGRAPHY (1.64 ANGSTROMS) OF 30-219 (ALLELE DRB1*01:01) IN COMPLEX WITH HLA-DRA AND IAV PEPTIDE</scope>
    <scope>FUNCTION (ALLELE DRB1*01:01)</scope>
    <scope>SUBUNIT</scope>
</reference>
<reference key="74">
    <citation type="journal article" date="2003" name="Am. J. Hum. Genet.">
        <title>HLA-DRB1*1101: a significant risk factor for sarcoidosis in blacks and whites.</title>
        <authorList>
            <person name="Rossman M.D."/>
            <person name="Thompson B."/>
            <person name="Frederick M."/>
            <person name="Maliarik M."/>
            <person name="Iannuzzi M.C."/>
            <person name="Rybicki B.A."/>
            <person name="Pandey J.P."/>
            <person name="Newman L.S."/>
            <person name="Magira E."/>
            <person name="Beznik-Cizman B."/>
            <person name="Monos D."/>
        </authorList>
    </citation>
    <scope>ASSOCIATION OF ALLELE DRB1*11:01 WITH SARCOIDOSIS</scope>
</reference>
<reference key="75">
    <citation type="journal article" date="2011" name="Nature">
        <title>Genetic risk and a primary role for cell-mediated immune mechanisms in multiple sclerosis.</title>
        <authorList>
            <consortium name="International Multiple Sclerosis Genetics Consortium"/>
            <consortium name="Wellcome Trust Case Control Consortium 2"/>
            <person name="Sawcer S."/>
            <person name="Hellenthal G."/>
            <person name="Pirinen M."/>
            <person name="Spencer C.C."/>
            <person name="Patsopoulos N.A."/>
            <person name="Moutsianas L."/>
            <person name="Dilthey A."/>
            <person name="Su Z."/>
            <person name="Freeman C."/>
            <person name="Hunt S.E."/>
            <person name="Edkins S."/>
            <person name="Gray E."/>
            <person name="Booth D.R."/>
            <person name="Potter S.C."/>
            <person name="Goris A."/>
            <person name="Band G."/>
            <person name="Oturai A.B."/>
            <person name="Strange A."/>
            <person name="Saarela J."/>
            <person name="Bellenguez C."/>
            <person name="Fontaine B."/>
            <person name="Gillman M."/>
            <person name="Hemmer B."/>
            <person name="Gwilliam R."/>
            <person name="Zipp F."/>
            <person name="Jayakumar A."/>
            <person name="Martin R."/>
            <person name="Leslie S."/>
            <person name="Hawkins S."/>
            <person name="Giannoulatou E."/>
            <person name="D'alfonso S."/>
            <person name="Blackburn H."/>
            <person name="Martinelli Boneschi F."/>
            <person name="Liddle J."/>
            <person name="Harbo H.F."/>
            <person name="Perez M.L."/>
            <person name="Spurkland A."/>
            <person name="Waller M.J."/>
            <person name="Mycko M.P."/>
            <person name="Ricketts M."/>
            <person name="Comabella M."/>
            <person name="Hammond N."/>
            <person name="Kockum I."/>
            <person name="McCann O.T."/>
            <person name="Ban M."/>
            <person name="Whittaker P."/>
            <person name="Kemppinen A."/>
            <person name="Weston P."/>
            <person name="Hawkins C."/>
            <person name="Widaa S."/>
            <person name="Zajicek J."/>
            <person name="Dronov S."/>
            <person name="Robertson N."/>
            <person name="Bumpstead S.J."/>
            <person name="Barcellos L.F."/>
            <person name="Ravindrarajah R."/>
            <person name="Abraham R."/>
            <person name="Alfredsson L."/>
            <person name="Ardlie K."/>
            <person name="Aubin C."/>
            <person name="Baker A."/>
            <person name="Baker K."/>
            <person name="Baranzini S.E."/>
            <person name="Bergamaschi L."/>
            <person name="Bergamaschi R."/>
            <person name="Bernstein A."/>
            <person name="Berthele A."/>
            <person name="Boggild M."/>
            <person name="Bradfield J.P."/>
            <person name="Brassat D."/>
            <person name="Broadley S.A."/>
            <person name="Buck D."/>
            <person name="Butzkueven H."/>
            <person name="Capra R."/>
            <person name="Carroll W.M."/>
            <person name="Cavalla P."/>
            <person name="Celius E.G."/>
            <person name="Cepok S."/>
            <person name="Chiavacci R."/>
            <person name="Clerget-Darpoux F."/>
            <person name="Clysters K."/>
            <person name="Comi G."/>
            <person name="Cossburn M."/>
            <person name="Cournu-Rebeix I."/>
            <person name="Cox M.B."/>
            <person name="Cozen W."/>
            <person name="Cree B.A."/>
            <person name="Cross A.H."/>
            <person name="Cusi D."/>
            <person name="Daly M.J."/>
            <person name="Davis E."/>
            <person name="de Bakker P.I."/>
            <person name="Debouverie M."/>
            <person name="D'hooghe M.B."/>
            <person name="Dixon K."/>
            <person name="Dobosi R."/>
            <person name="Dubois B."/>
            <person name="Ellinghaus D."/>
            <person name="Elovaara I."/>
            <person name="Esposito F."/>
            <person name="Fontenille C."/>
            <person name="Foote S."/>
            <person name="Franke A."/>
            <person name="Galimberti D."/>
            <person name="Ghezzi A."/>
            <person name="Glessner J."/>
            <person name="Gomez R."/>
            <person name="Gout O."/>
            <person name="Graham C."/>
            <person name="Grant S.F."/>
            <person name="Guerini F.R."/>
            <person name="Hakonarson H."/>
            <person name="Hall P."/>
            <person name="Hamsten A."/>
            <person name="Hartung H.P."/>
            <person name="Heard R.N."/>
            <person name="Heath S."/>
            <person name="Hobart J."/>
            <person name="Hoshi M."/>
            <person name="Infante-Duarte C."/>
            <person name="Ingram G."/>
            <person name="Ingram W."/>
            <person name="Islam T."/>
            <person name="Jagodic M."/>
            <person name="Kabesch M."/>
            <person name="Kermode A.G."/>
            <person name="Kilpatrick T.J."/>
            <person name="Kim C."/>
            <person name="Klopp N."/>
            <person name="Koivisto K."/>
            <person name="Larsson M."/>
            <person name="Lathrop M."/>
            <person name="Lechner-Scott J.S."/>
            <person name="Leone M.A."/>
            <person name="Leppae V."/>
            <person name="Liljedahl U."/>
            <person name="Bomfim I.L."/>
            <person name="Lincoln R.R."/>
            <person name="Link J."/>
            <person name="Liu J."/>
            <person name="Lorentzen A.R."/>
            <person name="Lupoli S."/>
            <person name="Macciardi F."/>
            <person name="Mack T."/>
            <person name="Marriott M."/>
            <person name="Martinelli V."/>
            <person name="Mason D."/>
            <person name="McCauley J.L."/>
            <person name="Mentch F."/>
            <person name="Mero I.L."/>
            <person name="Mihalova T."/>
            <person name="Montalban X."/>
            <person name="Mottershead J."/>
            <person name="Myhr K.M."/>
            <person name="Naldi P."/>
            <person name="Ollier W."/>
            <person name="Page A."/>
            <person name="Palotie A."/>
            <person name="Pelletier J."/>
            <person name="Piccio L."/>
            <person name="Pickersgill T."/>
            <person name="Piehl F."/>
            <person name="Pobywajlo S."/>
            <person name="Quach H.L."/>
            <person name="Ramsay P.P."/>
            <person name="Reunanen M."/>
            <person name="Reynolds R."/>
            <person name="Rioux J.D."/>
            <person name="Rodegher M."/>
            <person name="Roesner S."/>
            <person name="Rubio J.P."/>
            <person name="Rueckert I.M."/>
            <person name="Salvetti M."/>
            <person name="Salvi E."/>
            <person name="Santaniello A."/>
            <person name="Schaefer C.A."/>
            <person name="Schreiber S."/>
            <person name="Schulze C."/>
            <person name="Scott R.J."/>
            <person name="Sellebjerg F."/>
            <person name="Selmaj K.W."/>
            <person name="Sexton D."/>
            <person name="Shen L."/>
            <person name="Simms-Acuna B."/>
            <person name="Skidmore S."/>
            <person name="Sleiman P.M."/>
            <person name="Smestad C."/>
            <person name="Soerensen P.S."/>
            <person name="Soendergaard H.B."/>
            <person name="Stankovich J."/>
            <person name="Strange R.C."/>
            <person name="Sulonen A.M."/>
            <person name="Sundqvist E."/>
            <person name="Syvaenen A.C."/>
            <person name="Taddeo F."/>
            <person name="Taylor B."/>
            <person name="Blackwell J.M."/>
            <person name="Tienari P."/>
            <person name="Bramon E."/>
            <person name="Tourbah A."/>
            <person name="Brown M.A."/>
            <person name="Tronczynska E."/>
            <person name="Casas J.P."/>
            <person name="Tubridy N."/>
            <person name="Corvin A."/>
            <person name="Vickery J."/>
            <person name="Jankowski J."/>
            <person name="Villoslada P."/>
            <person name="Markus H.S."/>
            <person name="Wang K."/>
            <person name="Mathew C.G."/>
            <person name="Wason J."/>
            <person name="Palmer C.N."/>
            <person name="Wichmann H.E."/>
            <person name="Plomin R."/>
            <person name="Willoughby E."/>
            <person name="Rautanen A."/>
            <person name="Winkelmann J."/>
            <person name="Wittig M."/>
            <person name="Trembath R.C."/>
            <person name="Yaouanq J."/>
            <person name="Viswanathan A.C."/>
            <person name="Zhang H."/>
            <person name="Wood N.W."/>
            <person name="Zuvich R."/>
            <person name="Deloukas P."/>
            <person name="Langford C."/>
            <person name="Duncanson A."/>
            <person name="Oksenberg J.R."/>
            <person name="Pericak-Vance M.A."/>
            <person name="Haines J.L."/>
            <person name="Olsson T."/>
            <person name="Hillert J."/>
            <person name="Ivinson A.J."/>
            <person name="De Jager P.L."/>
            <person name="Peltonen L."/>
            <person name="Stewart G.J."/>
            <person name="Hafler D.A."/>
            <person name="Hauser S.L."/>
            <person name="McVean G."/>
            <person name="Donnelly P."/>
            <person name="Compston A."/>
        </authorList>
    </citation>
    <scope>ASSOCIATION OF ALLELE DRB1*15:01 WITH MULTIPLE SCLEROSIS</scope>
</reference>
<reference key="76">
    <citation type="journal article" date="2012" name="Nat. Genet.">
        <title>Five amino acids in three HLA proteins explain most of the association between MHC and seropositive rheumatoid arthritis.</title>
        <authorList>
            <person name="Raychaudhuri S."/>
            <person name="Sandor C."/>
            <person name="Stahl E.A."/>
            <person name="Freudenberg J."/>
            <person name="Lee H.S."/>
            <person name="Jia X."/>
            <person name="Alfredsson L."/>
            <person name="Padyukov L."/>
            <person name="Klareskog L."/>
            <person name="Worthington J."/>
            <person name="Siminovitch K.A."/>
            <person name="Bae S.C."/>
            <person name="Plenge R.M."/>
            <person name="Gregersen P.K."/>
            <person name="de Bakker P.I."/>
        </authorList>
    </citation>
    <scope>ASSOCIATION OF ALLELES DRB1*01:01; DRB1*01:02; DRB1*04:01; DRB1*04:04; DRB1*04:05; DRB1*04:08 AND DRB1*10:01 WITH RHEUMATOID ARTHRITIS</scope>
    <scope>VARIANTS VAL-40; LEU-40; HIS-42 AND PHE-42</scope>
</reference>
<reference key="77">
    <citation type="journal article" date="2015" name="Nat. Genet.">
        <title>High-density mapping of the MHC identifies a shared role for HLA-DRB1*01:03 in inflammatory bowel diseases and heterozygous advantage in ulcerative colitis.</title>
        <authorList>
            <consortium name="International Inflammatory Bowel Disease Genetics Consortium"/>
            <consortium name="Australia and New Zealand IBDGC"/>
            <consortium name="Belgium IBD Genetics Consortium"/>
            <consortium name="Italian Group for IBD Genetic Consortium"/>
            <consortium name="NIDDK Inflammatory Bowel Disease Genetics Consortium"/>
            <consortium name="United Kingdom IBDGC"/>
            <consortium name="Wellcome Trust Case Control Consortium"/>
            <consortium name="Quebec IBD Genetics Consortium"/>
            <person name="Goyette P."/>
            <person name="Boucher G."/>
            <person name="Mallon D."/>
            <person name="Ellinghaus E."/>
            <person name="Jostins L."/>
            <person name="Huang H."/>
            <person name="Ripke S."/>
            <person name="Gusareva E.S."/>
            <person name="Annese V."/>
            <person name="Hauser S.L."/>
            <person name="Oksenberg J.R."/>
            <person name="Thomsen I."/>
            <person name="Leslie S."/>
            <person name="Daly M.J."/>
            <person name="Van Steen K."/>
            <person name="Duerr R.H."/>
            <person name="Barrett J.C."/>
            <person name="McGovern D.P."/>
            <person name="Schumm L.P."/>
            <person name="Traherne J.A."/>
            <person name="Carrington M.N."/>
            <person name="Kosmoliaptsis V."/>
            <person name="Karlsen T.H."/>
            <person name="Franke A."/>
            <person name="Rioux J.D."/>
        </authorList>
    </citation>
    <scope>ASSOCIATION OF ALLELE DRB1*01:03 WITH CROHN DISEASE AND ULCERATIVE COLITIS</scope>
</reference>
<reference key="78">
    <citation type="journal article" date="2013" name="Tissue Antigens">
        <title>Common and well-documented HLA alleles: 2012 update to the CWD catalogue.</title>
        <authorList>
            <person name="Mack S.J."/>
            <person name="Cano P."/>
            <person name="Hollenbach J.A."/>
            <person name="He J."/>
            <person name="Hurley C.K."/>
            <person name="Middleton D."/>
            <person name="Moraes M.E."/>
            <person name="Pereira S.E."/>
            <person name="Kempenich J.H."/>
            <person name="Reed E.F."/>
            <person name="Setterholm M."/>
            <person name="Smith A.G."/>
            <person name="Tilanus M.G."/>
            <person name="Torres M."/>
            <person name="Varney M.D."/>
            <person name="Voorter C.E."/>
            <person name="Fischer G.F."/>
            <person name="Fleischhauer K."/>
            <person name="Goodridge D."/>
            <person name="Klitz W."/>
            <person name="Little A.M."/>
            <person name="Maiers M."/>
            <person name="Marsh S.G."/>
            <person name="Mueller C.R."/>
            <person name="Noreen H."/>
            <person name="Rozemuller E.H."/>
            <person name="Sanchez-Mazas A."/>
            <person name="Senitzer D."/>
            <person name="Trachtenberg E."/>
            <person name="Fernandez-Vina M."/>
        </authorList>
    </citation>
    <scope>POLYMORPHISM</scope>
</reference>